<proteinExistence type="evidence at protein level"/>
<dbReference type="EMBL" id="AF000571">
    <property type="protein sequence ID" value="AAC51776.1"/>
    <property type="molecule type" value="mRNA"/>
</dbReference>
<dbReference type="EMBL" id="AF051426">
    <property type="protein sequence ID" value="AAC05705.1"/>
    <property type="molecule type" value="mRNA"/>
</dbReference>
<dbReference type="EMBL" id="AB015163">
    <property type="protein sequence ID" value="BAA34738.1"/>
    <property type="molecule type" value="Genomic_DNA"/>
</dbReference>
<dbReference type="EMBL" id="AB015163">
    <property type="protein sequence ID" value="BAA34739.1"/>
    <property type="status" value="ALT_FRAME"/>
    <property type="molecule type" value="Genomic_DNA"/>
</dbReference>
<dbReference type="EMBL" id="AJ006345">
    <property type="protein sequence ID" value="CAB44649.1"/>
    <property type="molecule type" value="Genomic_DNA"/>
</dbReference>
<dbReference type="EMBL" id="AJ006345">
    <property type="protein sequence ID" value="CAB44650.1"/>
    <property type="molecule type" value="Genomic_DNA"/>
</dbReference>
<dbReference type="EMBL" id="AY114213">
    <property type="protein sequence ID" value="AAM94040.1"/>
    <property type="molecule type" value="mRNA"/>
</dbReference>
<dbReference type="EMBL" id="AK290618">
    <property type="protein sequence ID" value="BAF83307.1"/>
    <property type="molecule type" value="mRNA"/>
</dbReference>
<dbReference type="EMBL" id="AC013791">
    <property type="status" value="NOT_ANNOTATED_CDS"/>
    <property type="molecule type" value="Genomic_DNA"/>
</dbReference>
<dbReference type="EMBL" id="AC021424">
    <property type="status" value="NOT_ANNOTATED_CDS"/>
    <property type="molecule type" value="Genomic_DNA"/>
</dbReference>
<dbReference type="EMBL" id="AC124055">
    <property type="status" value="NOT_ANNOTATED_CDS"/>
    <property type="molecule type" value="Genomic_DNA"/>
</dbReference>
<dbReference type="EMBL" id="AC124057">
    <property type="status" value="NOT_ANNOTATED_CDS"/>
    <property type="molecule type" value="Genomic_DNA"/>
</dbReference>
<dbReference type="EMBL" id="AP006463">
    <property type="status" value="NOT_ANNOTATED_CDS"/>
    <property type="molecule type" value="Genomic_DNA"/>
</dbReference>
<dbReference type="EMBL" id="KF455303">
    <property type="status" value="NOT_ANNOTATED_CDS"/>
    <property type="molecule type" value="Genomic_DNA"/>
</dbReference>
<dbReference type="EMBL" id="KF455304">
    <property type="status" value="NOT_ANNOTATED_CDS"/>
    <property type="molecule type" value="Genomic_DNA"/>
</dbReference>
<dbReference type="EMBL" id="KF455305">
    <property type="status" value="NOT_ANNOTATED_CDS"/>
    <property type="molecule type" value="Genomic_DNA"/>
</dbReference>
<dbReference type="EMBL" id="KF455306">
    <property type="status" value="NOT_ANNOTATED_CDS"/>
    <property type="molecule type" value="Genomic_DNA"/>
</dbReference>
<dbReference type="EMBL" id="KF459741">
    <property type="status" value="NOT_ANNOTATED_CDS"/>
    <property type="molecule type" value="Genomic_DNA"/>
</dbReference>
<dbReference type="EMBL" id="CH471158">
    <property type="protein sequence ID" value="EAX02517.1"/>
    <property type="molecule type" value="Genomic_DNA"/>
</dbReference>
<dbReference type="EMBL" id="BC113545">
    <property type="protein sequence ID" value="AAI13546.1"/>
    <property type="molecule type" value="mRNA"/>
</dbReference>
<dbReference type="EMBL" id="U86146">
    <property type="protein sequence ID" value="AAB53974.1"/>
    <property type="molecule type" value="mRNA"/>
</dbReference>
<dbReference type="EMBL" id="U89364">
    <property type="protein sequence ID" value="AAC51781.1"/>
    <property type="status" value="ALT_SEQ"/>
    <property type="molecule type" value="mRNA"/>
</dbReference>
<dbReference type="CCDS" id="CCDS7736.1">
    <molecule id="P51787-1"/>
</dbReference>
<dbReference type="RefSeq" id="NP_000209.2">
    <molecule id="P51787-1"/>
    <property type="nucleotide sequence ID" value="NM_000218.2"/>
</dbReference>
<dbReference type="RefSeq" id="NP_861463.1">
    <molecule id="P51787-2"/>
    <property type="nucleotide sequence ID" value="NM_181798.2"/>
</dbReference>
<dbReference type="PDB" id="3BJ4">
    <property type="method" value="X-ray"/>
    <property type="resolution" value="2.00 A"/>
    <property type="chains" value="A/B=574-622"/>
</dbReference>
<dbReference type="PDB" id="3HFC">
    <property type="method" value="X-ray"/>
    <property type="resolution" value="2.45 A"/>
    <property type="chains" value="A/B/C=583-611"/>
</dbReference>
<dbReference type="PDB" id="3HFE">
    <property type="method" value="X-ray"/>
    <property type="resolution" value="1.70 A"/>
    <property type="chains" value="A/B/C=583-611"/>
</dbReference>
<dbReference type="PDB" id="4UMO">
    <property type="method" value="X-ray"/>
    <property type="resolution" value="3.00 A"/>
    <property type="chains" value="A/B=352-539"/>
</dbReference>
<dbReference type="PDB" id="4V0C">
    <property type="method" value="X-ray"/>
    <property type="resolution" value="2.86 A"/>
    <property type="chains" value="A/B=352-539"/>
</dbReference>
<dbReference type="PDB" id="6MIE">
    <property type="method" value="NMR"/>
    <property type="chains" value="A=100-249"/>
</dbReference>
<dbReference type="PDB" id="6UZZ">
    <property type="method" value="EM"/>
    <property type="resolution" value="3.10 A"/>
    <property type="chains" value="A/C/E/G=76-620"/>
</dbReference>
<dbReference type="PDB" id="6V00">
    <property type="method" value="EM"/>
    <property type="resolution" value="3.10 A"/>
    <property type="chains" value="A/D/G/J=76-620"/>
</dbReference>
<dbReference type="PDB" id="6V01">
    <property type="method" value="EM"/>
    <property type="resolution" value="3.90 A"/>
    <property type="chains" value="A/D/G/J=75-620"/>
</dbReference>
<dbReference type="PDB" id="7VUO">
    <property type="method" value="X-ray"/>
    <property type="resolution" value="2.68 A"/>
    <property type="chains" value="A=364-424"/>
</dbReference>
<dbReference type="PDB" id="7VVD">
    <property type="method" value="X-ray"/>
    <property type="resolution" value="3.13 A"/>
    <property type="chains" value="A/D=364-424"/>
</dbReference>
<dbReference type="PDB" id="7VVH">
    <property type="method" value="X-ray"/>
    <property type="resolution" value="2.30 A"/>
    <property type="chains" value="A=364-424"/>
</dbReference>
<dbReference type="PDB" id="7XNI">
    <property type="method" value="EM"/>
    <property type="resolution" value="3.50 A"/>
    <property type="chains" value="A/B/D/G=1-676"/>
</dbReference>
<dbReference type="PDB" id="7XNK">
    <property type="method" value="EM"/>
    <property type="resolution" value="2.60 A"/>
    <property type="chains" value="A/C/E/G=1-676"/>
</dbReference>
<dbReference type="PDB" id="7XNL">
    <property type="method" value="EM"/>
    <property type="resolution" value="3.10 A"/>
    <property type="chains" value="A/C/E/G=1-676"/>
</dbReference>
<dbReference type="PDB" id="7XNN">
    <property type="method" value="EM"/>
    <property type="resolution" value="2.50 A"/>
    <property type="chains" value="B/C/E/G=1-676"/>
</dbReference>
<dbReference type="PDB" id="8SIK">
    <property type="method" value="EM"/>
    <property type="resolution" value="2.90 A"/>
    <property type="chains" value="A/C/E/G=75-620"/>
</dbReference>
<dbReference type="PDB" id="8SIM">
    <property type="method" value="EM"/>
    <property type="resolution" value="6.20 A"/>
    <property type="chains" value="A/C/E/G=75-620"/>
</dbReference>
<dbReference type="PDB" id="8SIN">
    <property type="method" value="EM"/>
    <property type="resolution" value="6.80 A"/>
    <property type="chains" value="A/C/E/G=75-620"/>
</dbReference>
<dbReference type="PDBsum" id="3BJ4"/>
<dbReference type="PDBsum" id="3HFC"/>
<dbReference type="PDBsum" id="3HFE"/>
<dbReference type="PDBsum" id="4UMO"/>
<dbReference type="PDBsum" id="4V0C"/>
<dbReference type="PDBsum" id="6MIE"/>
<dbReference type="PDBsum" id="6UZZ"/>
<dbReference type="PDBsum" id="6V00"/>
<dbReference type="PDBsum" id="6V01"/>
<dbReference type="PDBsum" id="7VUO"/>
<dbReference type="PDBsum" id="7VVD"/>
<dbReference type="PDBsum" id="7VVH"/>
<dbReference type="PDBsum" id="7XNI"/>
<dbReference type="PDBsum" id="7XNK"/>
<dbReference type="PDBsum" id="7XNL"/>
<dbReference type="PDBsum" id="7XNN"/>
<dbReference type="PDBsum" id="8SIK"/>
<dbReference type="PDBsum" id="8SIM"/>
<dbReference type="PDBsum" id="8SIN"/>
<dbReference type="BMRB" id="P51787"/>
<dbReference type="EMDB" id="EMD-20965"/>
<dbReference type="EMDB" id="EMD-20966"/>
<dbReference type="EMDB" id="EMD-20967"/>
<dbReference type="EMDB" id="EMD-33316"/>
<dbReference type="EMDB" id="EMD-33317"/>
<dbReference type="EMDB" id="EMD-33318"/>
<dbReference type="EMDB" id="EMD-33319"/>
<dbReference type="EMDB" id="EMD-40508"/>
<dbReference type="EMDB" id="EMD-40509"/>
<dbReference type="EMDB" id="EMD-40510"/>
<dbReference type="SMR" id="P51787"/>
<dbReference type="BioGRID" id="109985">
    <property type="interactions" value="20"/>
</dbReference>
<dbReference type="ComplexPortal" id="CPX-3271">
    <property type="entry name" value="KCNQ1-KCNE1 I(Ks) channel complex"/>
</dbReference>
<dbReference type="ComplexPortal" id="CPX-902">
    <property type="entry name" value="Kv7.1 channel complex"/>
</dbReference>
<dbReference type="CORUM" id="P51787"/>
<dbReference type="DIP" id="DIP-27591N"/>
<dbReference type="DIP" id="DIP-29941N"/>
<dbReference type="FunCoup" id="P51787">
    <property type="interactions" value="404"/>
</dbReference>
<dbReference type="IntAct" id="P51787">
    <property type="interactions" value="6"/>
</dbReference>
<dbReference type="MINT" id="P51787"/>
<dbReference type="STRING" id="9606.ENSP00000155840"/>
<dbReference type="BindingDB" id="P51787"/>
<dbReference type="ChEMBL" id="CHEMBL1866"/>
<dbReference type="DrugBank" id="DB04957">
    <property type="generic name" value="Azimilide"/>
</dbReference>
<dbReference type="DrugBank" id="DB01244">
    <property type="generic name" value="Bepridil"/>
</dbReference>
<dbReference type="DrugBank" id="DB04855">
    <property type="generic name" value="Dronedarone"/>
</dbReference>
<dbReference type="DrugBank" id="DB00228">
    <property type="generic name" value="Enflurane"/>
</dbReference>
<dbReference type="DrugBank" id="DB06089">
    <property type="generic name" value="ICA-105665"/>
</dbReference>
<dbReference type="DrugBank" id="DB00808">
    <property type="generic name" value="Indapamide"/>
</dbReference>
<dbReference type="DrugBank" id="DB11633">
    <property type="generic name" value="Isavuconazole"/>
</dbReference>
<dbReference type="DrugBank" id="DB01110">
    <property type="generic name" value="Miconazole"/>
</dbReference>
<dbReference type="DrugBank" id="DB01069">
    <property type="generic name" value="Promethazine"/>
</dbReference>
<dbReference type="DrugBank" id="DB06815">
    <property type="generic name" value="Pyrithione"/>
</dbReference>
<dbReference type="DrugCentral" id="P51787"/>
<dbReference type="GuidetoPHARMACOLOGY" id="560"/>
<dbReference type="TCDB" id="1.A.1.15.6">
    <property type="family name" value="the voltage-gated ion channel (vic) superfamily"/>
</dbReference>
<dbReference type="GlyCosmos" id="P51787">
    <property type="glycosylation" value="1 site, No reported glycans"/>
</dbReference>
<dbReference type="GlyGen" id="P51787">
    <property type="glycosylation" value="1 site"/>
</dbReference>
<dbReference type="iPTMnet" id="P51787"/>
<dbReference type="PhosphoSitePlus" id="P51787"/>
<dbReference type="BioMuta" id="KCNQ1"/>
<dbReference type="DMDM" id="6166005"/>
<dbReference type="jPOST" id="P51787"/>
<dbReference type="MassIVE" id="P51787"/>
<dbReference type="PaxDb" id="9606-ENSP00000155840"/>
<dbReference type="PeptideAtlas" id="P51787"/>
<dbReference type="ProteomicsDB" id="56383">
    <molecule id="P51787-1"/>
</dbReference>
<dbReference type="ProteomicsDB" id="56384">
    <molecule id="P51787-2"/>
</dbReference>
<dbReference type="Antibodypedia" id="4357">
    <property type="antibodies" value="488 antibodies from 39 providers"/>
</dbReference>
<dbReference type="DNASU" id="3784"/>
<dbReference type="Ensembl" id="ENST00000155840.12">
    <molecule id="P51787-1"/>
    <property type="protein sequence ID" value="ENSP00000155840.2"/>
    <property type="gene ID" value="ENSG00000053918.20"/>
</dbReference>
<dbReference type="Ensembl" id="ENST00000335475.6">
    <molecule id="P51787-2"/>
    <property type="protein sequence ID" value="ENSP00000334497.5"/>
    <property type="gene ID" value="ENSG00000053918.20"/>
</dbReference>
<dbReference type="GeneID" id="3784"/>
<dbReference type="KEGG" id="hsa:3784"/>
<dbReference type="MANE-Select" id="ENST00000155840.12">
    <property type="protein sequence ID" value="ENSP00000155840.2"/>
    <property type="RefSeq nucleotide sequence ID" value="NM_000218.3"/>
    <property type="RefSeq protein sequence ID" value="NP_000209.2"/>
</dbReference>
<dbReference type="UCSC" id="uc001lwn.4">
    <molecule id="P51787-1"/>
    <property type="organism name" value="human"/>
</dbReference>
<dbReference type="AGR" id="HGNC:6294"/>
<dbReference type="CTD" id="3784"/>
<dbReference type="DisGeNET" id="3784"/>
<dbReference type="GeneCards" id="KCNQ1"/>
<dbReference type="GeneReviews" id="KCNQ1"/>
<dbReference type="HGNC" id="HGNC:6294">
    <property type="gene designation" value="KCNQ1"/>
</dbReference>
<dbReference type="HPA" id="ENSG00000053918">
    <property type="expression patterns" value="Tissue enhanced (adrenal gland, stomach)"/>
</dbReference>
<dbReference type="MalaCards" id="KCNQ1"/>
<dbReference type="MIM" id="125853">
    <property type="type" value="phenotype"/>
</dbReference>
<dbReference type="MIM" id="192500">
    <property type="type" value="phenotype"/>
</dbReference>
<dbReference type="MIM" id="220400">
    <property type="type" value="phenotype"/>
</dbReference>
<dbReference type="MIM" id="607542">
    <property type="type" value="gene"/>
</dbReference>
<dbReference type="MIM" id="607554">
    <property type="type" value="phenotype"/>
</dbReference>
<dbReference type="MIM" id="609621">
    <property type="type" value="phenotype"/>
</dbReference>
<dbReference type="neXtProt" id="NX_P51787"/>
<dbReference type="OpenTargets" id="ENSG00000053918"/>
<dbReference type="Orphanet" id="334">
    <property type="disease" value="Familial atrial fibrillation"/>
</dbReference>
<dbReference type="Orphanet" id="51083">
    <property type="disease" value="Familial short QT syndrome"/>
</dbReference>
<dbReference type="Orphanet" id="90647">
    <property type="disease" value="Jervell and Lange-Nielsen syndrome"/>
</dbReference>
<dbReference type="Orphanet" id="101016">
    <property type="disease" value="Romano-Ward syndrome"/>
</dbReference>
<dbReference type="PharmGKB" id="PA223"/>
<dbReference type="VEuPathDB" id="HostDB:ENSG00000053918"/>
<dbReference type="eggNOG" id="KOG1419">
    <property type="taxonomic scope" value="Eukaryota"/>
</dbReference>
<dbReference type="GeneTree" id="ENSGT00940000161001"/>
<dbReference type="HOGENOM" id="CLU_011722_8_3_1"/>
<dbReference type="InParanoid" id="P51787"/>
<dbReference type="OMA" id="ETKETHH"/>
<dbReference type="OrthoDB" id="8879391at2759"/>
<dbReference type="PAN-GO" id="P51787">
    <property type="GO annotations" value="9 GO annotations based on evolutionary models"/>
</dbReference>
<dbReference type="PhylomeDB" id="P51787"/>
<dbReference type="TreeFam" id="TF315186"/>
<dbReference type="PathwayCommons" id="P51787"/>
<dbReference type="Reactome" id="R-HSA-1296072">
    <property type="pathway name" value="Voltage gated Potassium channels"/>
</dbReference>
<dbReference type="Reactome" id="R-HSA-5576890">
    <property type="pathway name" value="Phase 3 - rapid repolarisation"/>
</dbReference>
<dbReference type="Reactome" id="R-HSA-5576893">
    <property type="pathway name" value="Phase 2 - plateau phase"/>
</dbReference>
<dbReference type="SignaLink" id="P51787"/>
<dbReference type="SIGNOR" id="P51787"/>
<dbReference type="BioGRID-ORCS" id="3784">
    <property type="hits" value="13 hits in 1156 CRISPR screens"/>
</dbReference>
<dbReference type="ChiTaRS" id="KCNQ1">
    <property type="organism name" value="human"/>
</dbReference>
<dbReference type="EvolutionaryTrace" id="P51787"/>
<dbReference type="GeneWiki" id="KvLQT1"/>
<dbReference type="GenomeRNAi" id="3784"/>
<dbReference type="Pharos" id="P51787">
    <property type="development level" value="Tclin"/>
</dbReference>
<dbReference type="PRO" id="PR:P51787"/>
<dbReference type="Proteomes" id="UP000005640">
    <property type="component" value="Chromosome 11"/>
</dbReference>
<dbReference type="RNAct" id="P51787">
    <property type="molecule type" value="protein"/>
</dbReference>
<dbReference type="Bgee" id="ENSG00000053918">
    <property type="expression patterns" value="Expressed in left adrenal gland cortex and 98 other cell types or tissues"/>
</dbReference>
<dbReference type="ExpressionAtlas" id="P51787">
    <property type="expression patterns" value="baseline and differential"/>
</dbReference>
<dbReference type="GO" id="GO:0016324">
    <property type="term" value="C:apical plasma membrane"/>
    <property type="evidence" value="ECO:0007669"/>
    <property type="project" value="UniProtKB-SubCell"/>
</dbReference>
<dbReference type="GO" id="GO:1990794">
    <property type="term" value="C:basolateral part of cell"/>
    <property type="evidence" value="ECO:0007669"/>
    <property type="project" value="Ensembl"/>
</dbReference>
<dbReference type="GO" id="GO:0016323">
    <property type="term" value="C:basolateral plasma membrane"/>
    <property type="evidence" value="ECO:0000314"/>
    <property type="project" value="UniProtKB"/>
</dbReference>
<dbReference type="GO" id="GO:0097546">
    <property type="term" value="C:ciliary base"/>
    <property type="evidence" value="ECO:0007669"/>
    <property type="project" value="Ensembl"/>
</dbReference>
<dbReference type="GO" id="GO:0005737">
    <property type="term" value="C:cytoplasm"/>
    <property type="evidence" value="ECO:0000314"/>
    <property type="project" value="UniProtKB"/>
</dbReference>
<dbReference type="GO" id="GO:0030659">
    <property type="term" value="C:cytoplasmic vesicle membrane"/>
    <property type="evidence" value="ECO:0007669"/>
    <property type="project" value="UniProtKB-SubCell"/>
</dbReference>
<dbReference type="GO" id="GO:0005829">
    <property type="term" value="C:cytosol"/>
    <property type="evidence" value="ECO:0000314"/>
    <property type="project" value="HPA"/>
</dbReference>
<dbReference type="GO" id="GO:0005769">
    <property type="term" value="C:early endosome"/>
    <property type="evidence" value="ECO:0000314"/>
    <property type="project" value="BHF-UCL"/>
</dbReference>
<dbReference type="GO" id="GO:0005783">
    <property type="term" value="C:endoplasmic reticulum"/>
    <property type="evidence" value="ECO:0000314"/>
    <property type="project" value="HPA"/>
</dbReference>
<dbReference type="GO" id="GO:0005770">
    <property type="term" value="C:late endosome"/>
    <property type="evidence" value="ECO:0000314"/>
    <property type="project" value="BHF-UCL"/>
</dbReference>
<dbReference type="GO" id="GO:0098576">
    <property type="term" value="C:lumenal side of membrane"/>
    <property type="evidence" value="ECO:0007669"/>
    <property type="project" value="Ensembl"/>
</dbReference>
<dbReference type="GO" id="GO:0005764">
    <property type="term" value="C:lysosome"/>
    <property type="evidence" value="ECO:0000314"/>
    <property type="project" value="BHF-UCL"/>
</dbReference>
<dbReference type="GO" id="GO:0016020">
    <property type="term" value="C:membrane"/>
    <property type="evidence" value="ECO:0000318"/>
    <property type="project" value="GO_Central"/>
</dbReference>
<dbReference type="GO" id="GO:0045121">
    <property type="term" value="C:membrane raft"/>
    <property type="evidence" value="ECO:0000314"/>
    <property type="project" value="UniProtKB"/>
</dbReference>
<dbReference type="GO" id="GO:0034702">
    <property type="term" value="C:monoatomic ion channel complex"/>
    <property type="evidence" value="ECO:0000353"/>
    <property type="project" value="UniProtKB"/>
</dbReference>
<dbReference type="GO" id="GO:0043005">
    <property type="term" value="C:neuron projection"/>
    <property type="evidence" value="ECO:0007669"/>
    <property type="project" value="Ensembl"/>
</dbReference>
<dbReference type="GO" id="GO:0043025">
    <property type="term" value="C:neuronal cell body"/>
    <property type="evidence" value="ECO:0007669"/>
    <property type="project" value="Ensembl"/>
</dbReference>
<dbReference type="GO" id="GO:0005886">
    <property type="term" value="C:plasma membrane"/>
    <property type="evidence" value="ECO:0000314"/>
    <property type="project" value="HPA"/>
</dbReference>
<dbReference type="GO" id="GO:0030133">
    <property type="term" value="C:transport vesicle"/>
    <property type="evidence" value="ECO:0007669"/>
    <property type="project" value="Ensembl"/>
</dbReference>
<dbReference type="GO" id="GO:0008076">
    <property type="term" value="C:voltage-gated potassium channel complex"/>
    <property type="evidence" value="ECO:0000314"/>
    <property type="project" value="BHF-UCL"/>
</dbReference>
<dbReference type="GO" id="GO:0005516">
    <property type="term" value="F:calmodulin binding"/>
    <property type="evidence" value="ECO:0000314"/>
    <property type="project" value="BHF-UCL"/>
</dbReference>
<dbReference type="GO" id="GO:0005251">
    <property type="term" value="F:delayed rectifier potassium channel activity"/>
    <property type="evidence" value="ECO:0000314"/>
    <property type="project" value="UniProtKB"/>
</dbReference>
<dbReference type="GO" id="GO:0015271">
    <property type="term" value="F:outward rectifier potassium channel activity"/>
    <property type="evidence" value="ECO:0000314"/>
    <property type="project" value="UniProtKB"/>
</dbReference>
<dbReference type="GO" id="GO:0005546">
    <property type="term" value="F:phosphatidylinositol-4,5-bisphosphate binding"/>
    <property type="evidence" value="ECO:0000314"/>
    <property type="project" value="UniProtKB"/>
</dbReference>
<dbReference type="GO" id="GO:0034236">
    <property type="term" value="F:protein kinase A catalytic subunit binding"/>
    <property type="evidence" value="ECO:0000314"/>
    <property type="project" value="BHF-UCL"/>
</dbReference>
<dbReference type="GO" id="GO:0034237">
    <property type="term" value="F:protein kinase A regulatory subunit binding"/>
    <property type="evidence" value="ECO:0000314"/>
    <property type="project" value="BHF-UCL"/>
</dbReference>
<dbReference type="GO" id="GO:0008157">
    <property type="term" value="F:protein phosphatase 1 binding"/>
    <property type="evidence" value="ECO:0000314"/>
    <property type="project" value="BHF-UCL"/>
</dbReference>
<dbReference type="GO" id="GO:0097110">
    <property type="term" value="F:scaffold protein binding"/>
    <property type="evidence" value="ECO:0000353"/>
    <property type="project" value="BHF-UCL"/>
</dbReference>
<dbReference type="GO" id="GO:0044325">
    <property type="term" value="F:transmembrane transporter binding"/>
    <property type="evidence" value="ECO:0000353"/>
    <property type="project" value="UniProtKB"/>
</dbReference>
<dbReference type="GO" id="GO:0031625">
    <property type="term" value="F:ubiquitin protein ligase binding"/>
    <property type="evidence" value="ECO:0000353"/>
    <property type="project" value="BHF-UCL"/>
</dbReference>
<dbReference type="GO" id="GO:0005249">
    <property type="term" value="F:voltage-gated potassium channel activity"/>
    <property type="evidence" value="ECO:0000314"/>
    <property type="project" value="UniProtKB"/>
</dbReference>
<dbReference type="GO" id="GO:0086089">
    <property type="term" value="F:voltage-gated potassium channel activity involved in atrial cardiac muscle cell action potential repolarization"/>
    <property type="evidence" value="ECO:0000315"/>
    <property type="project" value="BHF-UCL"/>
</dbReference>
<dbReference type="GO" id="GO:0086008">
    <property type="term" value="F:voltage-gated potassium channel activity involved in cardiac muscle cell action potential repolarization"/>
    <property type="evidence" value="ECO:0000315"/>
    <property type="project" value="BHF-UCL"/>
</dbReference>
<dbReference type="GO" id="GO:1902282">
    <property type="term" value="F:voltage-gated potassium channel activity involved in ventricular cardiac muscle cell action potential repolarization"/>
    <property type="evidence" value="ECO:0000315"/>
    <property type="project" value="BHF-UCL"/>
</dbReference>
<dbReference type="GO" id="GO:0001508">
    <property type="term" value="P:action potential"/>
    <property type="evidence" value="ECO:0000318"/>
    <property type="project" value="GO_Central"/>
</dbReference>
<dbReference type="GO" id="GO:0071875">
    <property type="term" value="P:adrenergic receptor signaling pathway"/>
    <property type="evidence" value="ECO:0007669"/>
    <property type="project" value="Ensembl"/>
</dbReference>
<dbReference type="GO" id="GO:0086014">
    <property type="term" value="P:atrial cardiac muscle cell action potential"/>
    <property type="evidence" value="ECO:0000315"/>
    <property type="project" value="BHF-UCL"/>
</dbReference>
<dbReference type="GO" id="GO:0060117">
    <property type="term" value="P:auditory receptor cell development"/>
    <property type="evidence" value="ECO:0007669"/>
    <property type="project" value="Ensembl"/>
</dbReference>
<dbReference type="GO" id="GO:0086003">
    <property type="term" value="P:cardiac muscle cell contraction"/>
    <property type="evidence" value="ECO:0000303"/>
    <property type="project" value="ComplexPortal"/>
</dbReference>
<dbReference type="GO" id="GO:0060048">
    <property type="term" value="P:cardiac muscle contraction"/>
    <property type="evidence" value="ECO:0000315"/>
    <property type="project" value="BHF-UCL"/>
</dbReference>
<dbReference type="GO" id="GO:0071320">
    <property type="term" value="P:cellular response to cAMP"/>
    <property type="evidence" value="ECO:0000314"/>
    <property type="project" value="BHF-UCL"/>
</dbReference>
<dbReference type="GO" id="GO:0071872">
    <property type="term" value="P:cellular response to epinephrine stimulus"/>
    <property type="evidence" value="ECO:0000304"/>
    <property type="project" value="BHF-UCL"/>
</dbReference>
<dbReference type="GO" id="GO:0071466">
    <property type="term" value="P:cellular response to xenobiotic stimulus"/>
    <property type="evidence" value="ECO:0000314"/>
    <property type="project" value="BHF-UCL"/>
</dbReference>
<dbReference type="GO" id="GO:0090102">
    <property type="term" value="P:cochlea development"/>
    <property type="evidence" value="ECO:0007669"/>
    <property type="project" value="Ensembl"/>
</dbReference>
<dbReference type="GO" id="GO:0035934">
    <property type="term" value="P:corticosterone secretion"/>
    <property type="evidence" value="ECO:0007669"/>
    <property type="project" value="Ensembl"/>
</dbReference>
<dbReference type="GO" id="GO:0050910">
    <property type="term" value="P:detection of mechanical stimulus involved in sensory perception of sound"/>
    <property type="evidence" value="ECO:0007669"/>
    <property type="project" value="Ensembl"/>
</dbReference>
<dbReference type="GO" id="GO:0030218">
    <property type="term" value="P:erythrocyte differentiation"/>
    <property type="evidence" value="ECO:0007669"/>
    <property type="project" value="Ensembl"/>
</dbReference>
<dbReference type="GO" id="GO:0001698">
    <property type="term" value="P:gastrin-induced gastric acid secretion"/>
    <property type="evidence" value="ECO:0007669"/>
    <property type="project" value="Ensembl"/>
</dbReference>
<dbReference type="GO" id="GO:0006006">
    <property type="term" value="P:glucose metabolic process"/>
    <property type="evidence" value="ECO:0007669"/>
    <property type="project" value="Ensembl"/>
</dbReference>
<dbReference type="GO" id="GO:0007507">
    <property type="term" value="P:heart development"/>
    <property type="evidence" value="ECO:0007669"/>
    <property type="project" value="Ensembl"/>
</dbReference>
<dbReference type="GO" id="GO:0048839">
    <property type="term" value="P:inner ear development"/>
    <property type="evidence" value="ECO:0000250"/>
    <property type="project" value="UniProtKB"/>
</dbReference>
<dbReference type="GO" id="GO:0042472">
    <property type="term" value="P:inner ear morphogenesis"/>
    <property type="evidence" value="ECO:0007669"/>
    <property type="project" value="Ensembl"/>
</dbReference>
<dbReference type="GO" id="GO:0050892">
    <property type="term" value="P:intestinal absorption"/>
    <property type="evidence" value="ECO:0000250"/>
    <property type="project" value="UniProtKB"/>
</dbReference>
<dbReference type="GO" id="GO:0030644">
    <property type="term" value="P:intracellular chloride ion homeostasis"/>
    <property type="evidence" value="ECO:0007669"/>
    <property type="project" value="Ensembl"/>
</dbReference>
<dbReference type="GO" id="GO:0015705">
    <property type="term" value="P:iodide transport"/>
    <property type="evidence" value="ECO:0007669"/>
    <property type="project" value="Ensembl"/>
</dbReference>
<dbReference type="GO" id="GO:0086011">
    <property type="term" value="P:membrane repolarization during action potential"/>
    <property type="evidence" value="ECO:0000314"/>
    <property type="project" value="BHF-UCL"/>
</dbReference>
<dbReference type="GO" id="GO:0098914">
    <property type="term" value="P:membrane repolarization during atrial cardiac muscle cell action potential"/>
    <property type="evidence" value="ECO:0000315"/>
    <property type="project" value="BHF-UCL"/>
</dbReference>
<dbReference type="GO" id="GO:0086013">
    <property type="term" value="P:membrane repolarization during cardiac muscle cell action potential"/>
    <property type="evidence" value="ECO:0000315"/>
    <property type="project" value="BHF-UCL"/>
</dbReference>
<dbReference type="GO" id="GO:0098915">
    <property type="term" value="P:membrane repolarization during ventricular cardiac muscle cell action potential"/>
    <property type="evidence" value="ECO:0000315"/>
    <property type="project" value="BHF-UCL"/>
</dbReference>
<dbReference type="GO" id="GO:1902260">
    <property type="term" value="P:negative regulation of delayed rectifier potassium channel activity"/>
    <property type="evidence" value="ECO:0000314"/>
    <property type="project" value="UniProtKB"/>
</dbReference>
<dbReference type="GO" id="GO:1903817">
    <property type="term" value="P:negative regulation of voltage-gated potassium channel activity"/>
    <property type="evidence" value="ECO:0000314"/>
    <property type="project" value="UniProtKB"/>
</dbReference>
<dbReference type="GO" id="GO:1905515">
    <property type="term" value="P:non-motile cilium assembly"/>
    <property type="evidence" value="ECO:0007669"/>
    <property type="project" value="Ensembl"/>
</dbReference>
<dbReference type="GO" id="GO:0060452">
    <property type="term" value="P:positive regulation of cardiac muscle contraction"/>
    <property type="evidence" value="ECO:0000315"/>
    <property type="project" value="BHF-UCL"/>
</dbReference>
<dbReference type="GO" id="GO:0010460">
    <property type="term" value="P:positive regulation of heart rate"/>
    <property type="evidence" value="ECO:0000315"/>
    <property type="project" value="BHF-UCL"/>
</dbReference>
<dbReference type="GO" id="GO:1901381">
    <property type="term" value="P:positive regulation of potassium ion transmembrane transport"/>
    <property type="evidence" value="ECO:0000314"/>
    <property type="project" value="BHF-UCL"/>
</dbReference>
<dbReference type="GO" id="GO:0097623">
    <property type="term" value="P:potassium ion export across plasma membrane"/>
    <property type="evidence" value="ECO:0000314"/>
    <property type="project" value="BHF-UCL"/>
</dbReference>
<dbReference type="GO" id="GO:0055075">
    <property type="term" value="P:potassium ion homeostasis"/>
    <property type="evidence" value="ECO:0007669"/>
    <property type="project" value="Ensembl"/>
</dbReference>
<dbReference type="GO" id="GO:1990573">
    <property type="term" value="P:potassium ion import across plasma membrane"/>
    <property type="evidence" value="ECO:0007669"/>
    <property type="project" value="Ensembl"/>
</dbReference>
<dbReference type="GO" id="GO:0071805">
    <property type="term" value="P:potassium ion transmembrane transport"/>
    <property type="evidence" value="ECO:0000314"/>
    <property type="project" value="BHF-UCL"/>
</dbReference>
<dbReference type="GO" id="GO:0060372">
    <property type="term" value="P:regulation of atrial cardiac muscle cell membrane repolarization"/>
    <property type="evidence" value="ECO:0000315"/>
    <property type="project" value="BHF-UCL"/>
</dbReference>
<dbReference type="GO" id="GO:0008217">
    <property type="term" value="P:regulation of blood pressure"/>
    <property type="evidence" value="ECO:0007669"/>
    <property type="project" value="Ensembl"/>
</dbReference>
<dbReference type="GO" id="GO:0060453">
    <property type="term" value="P:regulation of gastric acid secretion"/>
    <property type="evidence" value="ECO:0000250"/>
    <property type="project" value="UniProtKB"/>
</dbReference>
<dbReference type="GO" id="GO:0008016">
    <property type="term" value="P:regulation of heart contraction"/>
    <property type="evidence" value="ECO:0000305"/>
    <property type="project" value="BHF-UCL"/>
</dbReference>
<dbReference type="GO" id="GO:0086091">
    <property type="term" value="P:regulation of heart rate by cardiac conduction"/>
    <property type="evidence" value="ECO:0000315"/>
    <property type="project" value="BHF-UCL"/>
</dbReference>
<dbReference type="GO" id="GO:0042391">
    <property type="term" value="P:regulation of membrane potential"/>
    <property type="evidence" value="ECO:0000314"/>
    <property type="project" value="BHF-UCL"/>
</dbReference>
<dbReference type="GO" id="GO:0060306">
    <property type="term" value="P:regulation of membrane repolarization"/>
    <property type="evidence" value="ECO:0000314"/>
    <property type="project" value="BHF-UCL"/>
</dbReference>
<dbReference type="GO" id="GO:0060307">
    <property type="term" value="P:regulation of ventricular cardiac muscle cell membrane repolarization"/>
    <property type="evidence" value="ECO:0000315"/>
    <property type="project" value="BHF-UCL"/>
</dbReference>
<dbReference type="GO" id="GO:0070293">
    <property type="term" value="P:renal absorption"/>
    <property type="evidence" value="ECO:0000250"/>
    <property type="project" value="UniProtKB"/>
</dbReference>
<dbReference type="GO" id="GO:0070294">
    <property type="term" value="P:renal sodium ion absorption"/>
    <property type="evidence" value="ECO:0007669"/>
    <property type="project" value="Ensembl"/>
</dbReference>
<dbReference type="GO" id="GO:0032868">
    <property type="term" value="P:response to insulin"/>
    <property type="evidence" value="ECO:0007669"/>
    <property type="project" value="Ensembl"/>
</dbReference>
<dbReference type="GO" id="GO:0007622">
    <property type="term" value="P:rhythmic behavior"/>
    <property type="evidence" value="ECO:0007669"/>
    <property type="project" value="Ensembl"/>
</dbReference>
<dbReference type="GO" id="GO:0007605">
    <property type="term" value="P:sensory perception of sound"/>
    <property type="evidence" value="ECO:0000304"/>
    <property type="project" value="ProtInc"/>
</dbReference>
<dbReference type="GO" id="GO:0035176">
    <property type="term" value="P:social behavior"/>
    <property type="evidence" value="ECO:0007669"/>
    <property type="project" value="Ensembl"/>
</dbReference>
<dbReference type="GO" id="GO:0062094">
    <property type="term" value="P:stomach development"/>
    <property type="evidence" value="ECO:0007669"/>
    <property type="project" value="Ensembl"/>
</dbReference>
<dbReference type="GO" id="GO:0086005">
    <property type="term" value="P:ventricular cardiac muscle cell action potential"/>
    <property type="evidence" value="ECO:0000315"/>
    <property type="project" value="BHF-UCL"/>
</dbReference>
<dbReference type="FunFam" id="1.10.287.70:FF:000113">
    <property type="entry name" value="Potassium voltage-gated channel subfamily KQT member 1"/>
    <property type="match status" value="1"/>
</dbReference>
<dbReference type="FunFam" id="1.20.120.350:FF:000017">
    <property type="entry name" value="potassium voltage-gated channel subfamily KQT member 1"/>
    <property type="match status" value="1"/>
</dbReference>
<dbReference type="Gene3D" id="1.10.287.70">
    <property type="match status" value="1"/>
</dbReference>
<dbReference type="Gene3D" id="6.10.140.1910">
    <property type="match status" value="2"/>
</dbReference>
<dbReference type="Gene3D" id="1.20.120.350">
    <property type="entry name" value="Voltage-gated potassium channels. Chain C"/>
    <property type="match status" value="1"/>
</dbReference>
<dbReference type="InterPro" id="IPR005821">
    <property type="entry name" value="Ion_trans_dom"/>
</dbReference>
<dbReference type="InterPro" id="IPR003937">
    <property type="entry name" value="K_chnl_volt-dep_KCNQ"/>
</dbReference>
<dbReference type="InterPro" id="IPR013821">
    <property type="entry name" value="K_chnl_volt-dep_KCNQ_C"/>
</dbReference>
<dbReference type="InterPro" id="IPR005827">
    <property type="entry name" value="K_chnl_volt-dep_KCQN1"/>
</dbReference>
<dbReference type="InterPro" id="IPR027359">
    <property type="entry name" value="Volt_channel_dom_sf"/>
</dbReference>
<dbReference type="PANTHER" id="PTHR47735:SF14">
    <property type="entry name" value="POTASSIUM VOLTAGE-GATED CHANNEL SUBFAMILY KQT MEMBER 1"/>
    <property type="match status" value="1"/>
</dbReference>
<dbReference type="PANTHER" id="PTHR47735">
    <property type="entry name" value="POTASSIUM VOLTAGE-GATED CHANNEL SUBFAMILY KQT MEMBER 4"/>
    <property type="match status" value="1"/>
</dbReference>
<dbReference type="Pfam" id="PF00520">
    <property type="entry name" value="Ion_trans"/>
    <property type="match status" value="1"/>
</dbReference>
<dbReference type="Pfam" id="PF03520">
    <property type="entry name" value="KCNQ_channel"/>
    <property type="match status" value="1"/>
</dbReference>
<dbReference type="PRINTS" id="PR00169">
    <property type="entry name" value="KCHANNEL"/>
</dbReference>
<dbReference type="PRINTS" id="PR01460">
    <property type="entry name" value="KCNQ1CHANNEL"/>
</dbReference>
<dbReference type="PRINTS" id="PR01459">
    <property type="entry name" value="KCNQCHANNEL"/>
</dbReference>
<dbReference type="SUPFAM" id="SSF81324">
    <property type="entry name" value="Voltage-gated potassium channels"/>
    <property type="match status" value="1"/>
</dbReference>
<organism>
    <name type="scientific">Homo sapiens</name>
    <name type="common">Human</name>
    <dbReference type="NCBI Taxonomy" id="9606"/>
    <lineage>
        <taxon>Eukaryota</taxon>
        <taxon>Metazoa</taxon>
        <taxon>Chordata</taxon>
        <taxon>Craniata</taxon>
        <taxon>Vertebrata</taxon>
        <taxon>Euteleostomi</taxon>
        <taxon>Mammalia</taxon>
        <taxon>Eutheria</taxon>
        <taxon>Euarchontoglires</taxon>
        <taxon>Primates</taxon>
        <taxon>Haplorrhini</taxon>
        <taxon>Catarrhini</taxon>
        <taxon>Hominidae</taxon>
        <taxon>Homo</taxon>
    </lineage>
</organism>
<gene>
    <name evidence="83" type="primary">KCNQ1</name>
    <name evidence="83" type="synonym">KCNA8</name>
    <name evidence="83" type="synonym">KCNA9</name>
    <name evidence="79" type="synonym">KVLQT1</name>
</gene>
<evidence type="ECO:0000250" key="1">
    <source>
        <dbReference type="UniProtKB" id="P97414"/>
    </source>
</evidence>
<evidence type="ECO:0000250" key="2">
    <source>
        <dbReference type="UniProtKB" id="Q9Z0N7"/>
    </source>
</evidence>
<evidence type="ECO:0000255" key="3"/>
<evidence type="ECO:0000256" key="4">
    <source>
        <dbReference type="SAM" id="MobiDB-lite"/>
    </source>
</evidence>
<evidence type="ECO:0000269" key="5">
    <source>
    </source>
</evidence>
<evidence type="ECO:0000269" key="6">
    <source>
    </source>
</evidence>
<evidence type="ECO:0000269" key="7">
    <source>
    </source>
</evidence>
<evidence type="ECO:0000269" key="8">
    <source>
    </source>
</evidence>
<evidence type="ECO:0000269" key="9">
    <source>
    </source>
</evidence>
<evidence type="ECO:0000269" key="10">
    <source>
    </source>
</evidence>
<evidence type="ECO:0000269" key="11">
    <source>
    </source>
</evidence>
<evidence type="ECO:0000269" key="12">
    <source>
    </source>
</evidence>
<evidence type="ECO:0000269" key="13">
    <source>
    </source>
</evidence>
<evidence type="ECO:0000269" key="14">
    <source>
    </source>
</evidence>
<evidence type="ECO:0000269" key="15">
    <source>
    </source>
</evidence>
<evidence type="ECO:0000269" key="16">
    <source>
    </source>
</evidence>
<evidence type="ECO:0000269" key="17">
    <source>
    </source>
</evidence>
<evidence type="ECO:0000269" key="18">
    <source>
    </source>
</evidence>
<evidence type="ECO:0000269" key="19">
    <source>
    </source>
</evidence>
<evidence type="ECO:0000269" key="20">
    <source>
    </source>
</evidence>
<evidence type="ECO:0000269" key="21">
    <source>
    </source>
</evidence>
<evidence type="ECO:0000269" key="22">
    <source>
    </source>
</evidence>
<evidence type="ECO:0000269" key="23">
    <source>
    </source>
</evidence>
<evidence type="ECO:0000269" key="24">
    <source>
    </source>
</evidence>
<evidence type="ECO:0000269" key="25">
    <source>
    </source>
</evidence>
<evidence type="ECO:0000269" key="26">
    <source>
    </source>
</evidence>
<evidence type="ECO:0000269" key="27">
    <source>
    </source>
</evidence>
<evidence type="ECO:0000269" key="28">
    <source>
    </source>
</evidence>
<evidence type="ECO:0000269" key="29">
    <source>
    </source>
</evidence>
<evidence type="ECO:0000269" key="30">
    <source>
    </source>
</evidence>
<evidence type="ECO:0000269" key="31">
    <source>
    </source>
</evidence>
<evidence type="ECO:0000269" key="32">
    <source>
    </source>
</evidence>
<evidence type="ECO:0000269" key="33">
    <source>
    </source>
</evidence>
<evidence type="ECO:0000269" key="34">
    <source>
    </source>
</evidence>
<evidence type="ECO:0000269" key="35">
    <source>
    </source>
</evidence>
<evidence type="ECO:0000269" key="36">
    <source>
    </source>
</evidence>
<evidence type="ECO:0000269" key="37">
    <source>
    </source>
</evidence>
<evidence type="ECO:0000269" key="38">
    <source>
    </source>
</evidence>
<evidence type="ECO:0000269" key="39">
    <source>
    </source>
</evidence>
<evidence type="ECO:0000269" key="40">
    <source>
    </source>
</evidence>
<evidence type="ECO:0000269" key="41">
    <source>
    </source>
</evidence>
<evidence type="ECO:0000269" key="42">
    <source>
    </source>
</evidence>
<evidence type="ECO:0000269" key="43">
    <source>
    </source>
</evidence>
<evidence type="ECO:0000269" key="44">
    <source>
    </source>
</evidence>
<evidence type="ECO:0000269" key="45">
    <source>
    </source>
</evidence>
<evidence type="ECO:0000269" key="46">
    <source>
    </source>
</evidence>
<evidence type="ECO:0000269" key="47">
    <source>
    </source>
</evidence>
<evidence type="ECO:0000269" key="48">
    <source>
    </source>
</evidence>
<evidence type="ECO:0000269" key="49">
    <source>
    </source>
</evidence>
<evidence type="ECO:0000269" key="50">
    <source>
    </source>
</evidence>
<evidence type="ECO:0000269" key="51">
    <source>
    </source>
</evidence>
<evidence type="ECO:0000269" key="52">
    <source>
    </source>
</evidence>
<evidence type="ECO:0000269" key="53">
    <source>
    </source>
</evidence>
<evidence type="ECO:0000269" key="54">
    <source>
    </source>
</evidence>
<evidence type="ECO:0000269" key="55">
    <source>
    </source>
</evidence>
<evidence type="ECO:0000269" key="56">
    <source>
    </source>
</evidence>
<evidence type="ECO:0000269" key="57">
    <source>
    </source>
</evidence>
<evidence type="ECO:0000269" key="58">
    <source>
    </source>
</evidence>
<evidence type="ECO:0000269" key="59">
    <source>
    </source>
</evidence>
<evidence type="ECO:0000269" key="60">
    <source>
    </source>
</evidence>
<evidence type="ECO:0000269" key="61">
    <source>
    </source>
</evidence>
<evidence type="ECO:0000269" key="62">
    <source>
    </source>
</evidence>
<evidence type="ECO:0000269" key="63">
    <source>
    </source>
</evidence>
<evidence type="ECO:0000269" key="64">
    <source>
    </source>
</evidence>
<evidence type="ECO:0000269" key="65">
    <source>
    </source>
</evidence>
<evidence type="ECO:0000269" key="66">
    <source>
    </source>
</evidence>
<evidence type="ECO:0000269" key="67">
    <source>
    </source>
</evidence>
<evidence type="ECO:0000269" key="68">
    <source>
    </source>
</evidence>
<evidence type="ECO:0000269" key="69">
    <source>
    </source>
</evidence>
<evidence type="ECO:0000269" key="70">
    <source>
    </source>
</evidence>
<evidence type="ECO:0000269" key="71">
    <source>
    </source>
</evidence>
<evidence type="ECO:0000269" key="72">
    <source>
    </source>
</evidence>
<evidence type="ECO:0000269" key="73">
    <source>
    </source>
</evidence>
<evidence type="ECO:0000269" key="74">
    <source>
    </source>
</evidence>
<evidence type="ECO:0000269" key="75">
    <source ref="36"/>
</evidence>
<evidence type="ECO:0000303" key="76">
    <source>
    </source>
</evidence>
<evidence type="ECO:0000303" key="77">
    <source>
    </source>
</evidence>
<evidence type="ECO:0000303" key="78">
    <source>
    </source>
</evidence>
<evidence type="ECO:0000303" key="79">
    <source>
    </source>
</evidence>
<evidence type="ECO:0000305" key="80"/>
<evidence type="ECO:0000305" key="81">
    <source>
    </source>
</evidence>
<evidence type="ECO:0000305" key="82">
    <source>
    </source>
</evidence>
<evidence type="ECO:0000312" key="83">
    <source>
        <dbReference type="HGNC" id="HGNC:6294"/>
    </source>
</evidence>
<evidence type="ECO:0007744" key="84">
    <source>
        <dbReference type="PDB" id="4UMO"/>
    </source>
</evidence>
<evidence type="ECO:0007744" key="85">
    <source>
        <dbReference type="PDB" id="4V0C"/>
    </source>
</evidence>
<evidence type="ECO:0007744" key="86">
    <source>
        <dbReference type="PDB" id="6UZZ"/>
    </source>
</evidence>
<evidence type="ECO:0007744" key="87">
    <source>
        <dbReference type="PDB" id="6V00"/>
    </source>
</evidence>
<evidence type="ECO:0007744" key="88">
    <source>
        <dbReference type="PDB" id="6V01"/>
    </source>
</evidence>
<evidence type="ECO:0007829" key="89">
    <source>
        <dbReference type="PDB" id="3HFE"/>
    </source>
</evidence>
<evidence type="ECO:0007829" key="90">
    <source>
        <dbReference type="PDB" id="4UMO"/>
    </source>
</evidence>
<evidence type="ECO:0007829" key="91">
    <source>
        <dbReference type="PDB" id="6V00"/>
    </source>
</evidence>
<evidence type="ECO:0007829" key="92">
    <source>
        <dbReference type="PDB" id="7VVH"/>
    </source>
</evidence>
<evidence type="ECO:0007829" key="93">
    <source>
        <dbReference type="PDB" id="7XNK"/>
    </source>
</evidence>
<evidence type="ECO:0007829" key="94">
    <source>
        <dbReference type="PDB" id="7XNN"/>
    </source>
</evidence>
<evidence type="ECO:0007829" key="95">
    <source>
        <dbReference type="PDB" id="8SIK"/>
    </source>
</evidence>
<sequence>MAAASSPPRAERKRWGWGRLPGARRGSAGLAKKCPFSLELAEGGPAGGALYAPIAPGAPGPAPPASPAAPAAPPVASDLGPRPPVSLDPRVSIYSTRRPVLARTHVQGRVYNFLERPTGWKCFVYHFAVFLIVLVCLIFSVLSTIEQYAALATGTLFWMEIVLVVFFGTEYVVRLWSAGCRSKYVGLWGRLRFARKPISIIDLIVVVASMVVLCVGSKGQVFATSAIRGIRFLQILRMLHVDRQGGTWRLLGSVVFIHRQELITTLYIGFLGLIFSSYFVYLAEKDAVNESGRVEFGSYADALWWGVVTVTTIGYGDKVPQTWVGKTIASCFSVFAISFFALPAGILGSGFALKVQQKQRQKHFNRQIPAAASLIQTAWRCYAAENPDSSTWKIYIRKAPRSHTLLSPSPKPKKSVVVKKKKFKLDKDNGVTPGEKMLTVPHITCDPPEERRLDHFSVDGYDSSVRKSPTLLEVSMPHFMRTNSFAEDLDLEGETLLTPITHISQLREHHRATIKVIRRMQYFVAKKKFQQARKPYDVRDVIEQYSQGHLNLMVRIKELQRRLDQSIGKPSLFISVSEKSKDRGSNTIGARLNRVEDKVTQLDQRLALITDMLHQLLSLHGGSTPGSGGPPREGGAHITQPCGSGGSVDPELFLPSNTLPTYEQLTVPRRGPDEGS</sequence>
<keyword id="KW-0002">3D-structure</keyword>
<keyword id="KW-0025">Alternative splicing</keyword>
<keyword id="KW-1020">Atrial fibrillation</keyword>
<keyword id="KW-0112">Calmodulin-binding</keyword>
<keyword id="KW-1003">Cell membrane</keyword>
<keyword id="KW-0175">Coiled coil</keyword>
<keyword id="KW-0968">Cytoplasmic vesicle</keyword>
<keyword id="KW-0209">Deafness</keyword>
<keyword id="KW-0219">Diabetes mellitus</keyword>
<keyword id="KW-0225">Disease variant</keyword>
<keyword id="KW-0256">Endoplasmic reticulum</keyword>
<keyword id="KW-0967">Endosome</keyword>
<keyword id="KW-0325">Glycoprotein</keyword>
<keyword id="KW-0407">Ion channel</keyword>
<keyword id="KW-0406">Ion transport</keyword>
<keyword id="KW-0454">Long QT syndrome</keyword>
<keyword id="KW-0472">Membrane</keyword>
<keyword id="KW-0597">Phosphoprotein</keyword>
<keyword id="KW-0630">Potassium</keyword>
<keyword id="KW-0631">Potassium channel</keyword>
<keyword id="KW-0633">Potassium transport</keyword>
<keyword id="KW-1267">Proteomics identification</keyword>
<keyword id="KW-1185">Reference proteome</keyword>
<keyword id="KW-0940">Short QT syndrome</keyword>
<keyword id="KW-0812">Transmembrane</keyword>
<keyword id="KW-1133">Transmembrane helix</keyword>
<keyword id="KW-0813">Transport</keyword>
<keyword id="KW-0832">Ubl conjugation</keyword>
<keyword id="KW-0851">Voltage-gated channel</keyword>
<feature type="chain" id="PRO_0000054022" description="Potassium voltage-gated channel subfamily KQT member 1">
    <location>
        <begin position="1"/>
        <end position="676"/>
    </location>
</feature>
<feature type="topological domain" description="Cytoplasmic" evidence="80">
    <location>
        <begin position="1"/>
        <end position="120"/>
    </location>
</feature>
<feature type="transmembrane region" description="Helical; Name=Segment S1" evidence="53 88">
    <location>
        <begin position="121"/>
        <end position="142"/>
    </location>
</feature>
<feature type="topological domain" description="Extracellular" evidence="80">
    <location>
        <begin position="143"/>
        <end position="153"/>
    </location>
</feature>
<feature type="transmembrane region" description="Helical; Name=Segment S2" evidence="53 88">
    <location>
        <begin position="154"/>
        <end position="176"/>
    </location>
</feature>
<feature type="topological domain" description="Cytoplasmic" evidence="80">
    <location>
        <begin position="177"/>
        <end position="192"/>
    </location>
</feature>
<feature type="transmembrane region" description="Helical; Name=Segment S3" evidence="53 88">
    <location>
        <begin position="193"/>
        <end position="218"/>
    </location>
</feature>
<feature type="topological domain" description="Extracellular" evidence="80">
    <location>
        <begin position="219"/>
        <end position="226"/>
    </location>
</feature>
<feature type="transmembrane region" description="Helical; Voltage-sensor; Name=Segment S4" evidence="53 88">
    <location>
        <begin position="227"/>
        <end position="242"/>
    </location>
</feature>
<feature type="topological domain" description="Cytoplasmic" evidence="80">
    <location>
        <begin position="243"/>
        <end position="260"/>
    </location>
</feature>
<feature type="transmembrane region" description="Helical; Name=Segment S5" evidence="53 88">
    <location>
        <begin position="261"/>
        <end position="283"/>
    </location>
</feature>
<feature type="topological domain" description="Extracellular" evidence="80">
    <location>
        <begin position="284"/>
        <end position="299"/>
    </location>
</feature>
<feature type="intramembrane region" description="Pore-forming; Name=Segment H5" evidence="53 88">
    <location>
        <begin position="300"/>
        <end position="320"/>
    </location>
</feature>
<feature type="topological domain" description="Extracellular" evidence="80">
    <location>
        <begin position="321"/>
        <end position="322"/>
    </location>
</feature>
<feature type="transmembrane region" description="Helical; Name=Segment S6" evidence="53 88">
    <location>
        <begin position="323"/>
        <end position="348"/>
    </location>
</feature>
<feature type="topological domain" description="Cytoplasmic" evidence="80">
    <location>
        <begin position="349"/>
        <end position="676"/>
    </location>
</feature>
<feature type="region of interest" description="Disordered" evidence="4">
    <location>
        <begin position="1"/>
        <end position="28"/>
    </location>
</feature>
<feature type="region of interest" description="Disordered" evidence="4">
    <location>
        <begin position="62"/>
        <end position="84"/>
    </location>
</feature>
<feature type="region of interest" description="Interaction with KCNE3" evidence="53">
    <location>
        <begin position="238"/>
        <end position="246"/>
    </location>
</feature>
<feature type="region of interest" description="Interaction with CALM" evidence="50">
    <location>
        <begin position="370"/>
        <end position="382"/>
    </location>
</feature>
<feature type="region of interest" description="Interaction with CALM; calcium-dependent" evidence="50">
    <location>
        <begin position="515"/>
        <end position="529"/>
    </location>
</feature>
<feature type="region of interest" description="Interaction with KCNE1 C-terminus" evidence="48">
    <location>
        <begin position="535"/>
        <end position="572"/>
    </location>
</feature>
<feature type="region of interest" description="Interaction with AKAP9" evidence="18">
    <location>
        <begin position="588"/>
        <end position="616"/>
    </location>
</feature>
<feature type="region of interest" description="C-terminal assembly domain (tetramerization)" evidence="13">
    <location>
        <begin position="589"/>
        <end position="620"/>
    </location>
</feature>
<feature type="region of interest" description="Disordered" evidence="4">
    <location>
        <begin position="620"/>
        <end position="676"/>
    </location>
</feature>
<feature type="coiled-coil region" evidence="34">
    <location>
        <begin position="585"/>
        <end position="621"/>
    </location>
</feature>
<feature type="compositionally biased region" description="Pro residues" evidence="4">
    <location>
        <begin position="62"/>
        <end position="73"/>
    </location>
</feature>
<feature type="compositionally biased region" description="Gly residues" evidence="4">
    <location>
        <begin position="623"/>
        <end position="632"/>
    </location>
</feature>
<feature type="compositionally biased region" description="Polar residues" evidence="4">
    <location>
        <begin position="655"/>
        <end position="664"/>
    </location>
</feature>
<feature type="binding site" evidence="53 88">
    <location>
        <position position="244"/>
    </location>
    <ligand>
        <name>a 1,2-diacyl-sn-glycero-3-phospho-(1D-myo-inositol-4,5-bisphosphate)</name>
        <dbReference type="ChEBI" id="CHEBI:58456"/>
    </ligand>
</feature>
<feature type="modified residue" description="Phosphoserine; by PKA" evidence="18">
    <location>
        <position position="27"/>
    </location>
</feature>
<feature type="modified residue" description="Phosphoserine" evidence="1">
    <location>
        <position position="407"/>
    </location>
</feature>
<feature type="modified residue" description="Phosphoserine" evidence="1">
    <location>
        <position position="409"/>
    </location>
</feature>
<feature type="glycosylation site" description="N-linked (GlcNAc...) asparagine" evidence="3">
    <location>
        <position position="289"/>
    </location>
</feature>
<feature type="splice variant" id="VSP_000981" description="In isoform 2." evidence="76 77 78">
    <location>
        <begin position="1"/>
        <end position="127"/>
    </location>
</feature>
<feature type="splice variant" id="VSP_000982" description="In isoform 2." evidence="76 77 78">
    <original>AV</original>
    <variation>MD</variation>
    <location>
        <begin position="128"/>
        <end position="129"/>
    </location>
</feature>
<feature type="sequence variant" id="VAR_074927" description="In LQT1; uncertain significance; dbSNP:rs199473442." evidence="35">
    <original>A</original>
    <variation>V</variation>
    <location>
        <position position="2"/>
    </location>
</feature>
<feature type="sequence variant" id="VAR_074928" description="In LQT1; uncertain significance; dbSNP:rs199473443." evidence="35">
    <original>P</original>
    <variation>S</variation>
    <location>
        <position position="7"/>
    </location>
</feature>
<feature type="sequence variant" id="VAR_074929" description="In LQT1; uncertain significance; hardly any effect on channel activity, shows fast activation; dbSNP:rs199473671." evidence="24 35 36">
    <original>A</original>
    <variation>T</variation>
    <location>
        <position position="46"/>
    </location>
</feature>
<feature type="sequence variant" id="VAR_074930" description="In LQT1; uncertain significance." evidence="35">
    <location>
        <begin position="64"/>
        <end position="70"/>
    </location>
</feature>
<feature type="sequence variant" id="VAR_074931" description="In LQT1; uncertain significance; dbSNP:rs199473446." evidence="35">
    <original>S</original>
    <variation>F</variation>
    <location>
        <position position="66"/>
    </location>
</feature>
<feature type="sequence variant" id="VAR_009917" description="In LQT1." evidence="23">
    <location>
        <begin position="71"/>
        <end position="73"/>
    </location>
</feature>
<feature type="sequence variant" id="VAR_068287" description="In LQT1; uncertain significance; dbSNP:rs199472676." evidence="23 35">
    <original>P</original>
    <variation>T</variation>
    <location>
        <position position="73"/>
    </location>
</feature>
<feature type="sequence variant" id="VAR_009918" description="In LQT1; uncertain significance; dbSNP:rs199472678." evidence="16 35">
    <original>Y</original>
    <variation>C</variation>
    <location>
        <position position="111"/>
    </location>
</feature>
<feature type="sequence variant" id="VAR_068288" description="In LQT1; dbSNP:rs199472679." evidence="23">
    <original>E</original>
    <variation>G</variation>
    <location>
        <position position="115"/>
    </location>
</feature>
<feature type="sequence variant" id="VAR_074932" description="In LQT1; uncertain significance; dbSNP:rs120074191." evidence="35">
    <original>P</original>
    <variation>L</variation>
    <location>
        <position position="117"/>
    </location>
</feature>
<feature type="sequence variant" id="VAR_068289" description="In LQT1; dbSNP:rs199472681." evidence="23">
    <original>C</original>
    <variation>Y</variation>
    <location>
        <position position="122"/>
    </location>
</feature>
<feature type="sequence variant" id="VAR_074933" description="In LQT1; uncertain significance; dbSNP:rs199472682." evidence="35">
    <original>F</original>
    <variation>L</variation>
    <location>
        <position position="127"/>
    </location>
</feature>
<feature type="sequence variant" id="VAR_068290" description="In LQT1; dbSNP:rs199473449." evidence="23 35">
    <original>V</original>
    <variation>I</variation>
    <location>
        <position position="133"/>
    </location>
</feature>
<feature type="sequence variant" id="VAR_074934" description="In LQT1; uncertain significance; dbSNP:rs199472685." evidence="35">
    <original>L</original>
    <variation>P</variation>
    <location>
        <position position="134"/>
    </location>
</feature>
<feature type="sequence variant" id="VAR_068291" description="In LQT1; dbSNP:rs199472686." evidence="23">
    <original>C</original>
    <variation>F</variation>
    <location>
        <position position="136"/>
    </location>
</feature>
<feature type="sequence variant" id="VAR_074935" description="In LQT1; uncertain significance; dbSNP:rs199473450." evidence="24">
    <original>L</original>
    <variation>F</variation>
    <location>
        <position position="137"/>
    </location>
</feature>
<feature type="sequence variant" id="VAR_015742" description="In ATFB3; gain of function; dbSNP:rs120074192." evidence="21">
    <original>S</original>
    <variation>G</variation>
    <location>
        <position position="140"/>
    </location>
</feature>
<feature type="sequence variant" id="VAR_074936" description="In LQT1; uncertain significance; dbSNP:rs199473451." evidence="35">
    <original>T</original>
    <variation>A</variation>
    <location>
        <position position="144"/>
    </location>
</feature>
<feature type="sequence variant" id="VAR_074937" description="In LQT1; uncertain significance; dbSNP:rs199472688." evidence="24">
    <original>E</original>
    <variation>K</variation>
    <location>
        <position position="146"/>
    </location>
</feature>
<feature type="sequence variant" id="VAR_074938" description="In LQT1; uncertain significance; dbSNP:rs143709408." evidence="35">
    <original>T</original>
    <variation>M</variation>
    <location>
        <position position="153"/>
    </location>
</feature>
<feature type="sequence variant" id="VAR_008124" description="In LQT1; dbSNP:rs199472690." evidence="8">
    <original>F</original>
    <variation>C</variation>
    <location>
        <position position="157"/>
    </location>
</feature>
<feature type="sequence variant" id="VAR_009919" description="In LQT1; dbSNP:rs199473453." evidence="16 23">
    <original>E</original>
    <variation>K</variation>
    <location>
        <position position="160"/>
    </location>
</feature>
<feature type="sequence variant" id="VAR_074939" description="In LQT1; uncertain significance; dbSNP:rs199472692." evidence="35">
    <original>V</original>
    <variation>M</variation>
    <location>
        <position position="162"/>
    </location>
</feature>
<feature type="sequence variant" id="VAR_001515" description="In LQT1.">
    <original>FG</original>
    <variation>W</variation>
    <location>
        <begin position="167"/>
        <end position="168"/>
    </location>
</feature>
<feature type="sequence variant" id="VAR_001516" description="In LQT1; dbSNP:rs179489." evidence="16 23 35 66 70">
    <original>G</original>
    <variation>R</variation>
    <location>
        <position position="168"/>
    </location>
</feature>
<feature type="sequence variant" id="VAR_074940" description="In LQT1; uncertain significance; dbSNP:rs199472694." evidence="35">
    <original>V</original>
    <variation>M</variation>
    <location>
        <position position="172"/>
    </location>
</feature>
<feature type="sequence variant" id="VAR_074941" description="In LQT1; affects channel activity; when expressed in heterologous system the mutant significantly reduces total IKs steady-state and tail currents with a positive shift of the voltage dependence of activation; dbSNP:rs199472695." evidence="24 54">
    <original>V</original>
    <variation>D</variation>
    <location>
        <position position="173"/>
    </location>
</feature>
<feature type="sequence variant" id="VAR_001517" description="In LQT1; dbSNP:rs199472696." evidence="23 35 66">
    <original>R</original>
    <variation>C</variation>
    <location>
        <position position="174"/>
    </location>
</feature>
<feature type="sequence variant" id="VAR_008939" description="In LQT1; dbSNP:rs199472697." evidence="9 16 35">
    <original>R</original>
    <variation>H</variation>
    <location>
        <position position="174"/>
    </location>
</feature>
<feature type="sequence variant" id="VAR_074942" description="In LQT1; uncertain significance; dbSNP:rs199472697." evidence="24">
    <original>R</original>
    <variation>P</variation>
    <location>
        <position position="174"/>
    </location>
</feature>
<feature type="sequence variant" id="VAR_001518" description="In LQT1; loss of channel activity; dbSNP:rs120074177." evidence="65">
    <original>A</original>
    <variation>P</variation>
    <location>
        <position position="178"/>
    </location>
</feature>
<feature type="sequence variant" id="VAR_009920" description="In LQT1; dbSNP:rs120074177." evidence="35 59">
    <original>A</original>
    <variation>T</variation>
    <location>
        <position position="178"/>
    </location>
</feature>
<feature type="sequence variant" id="VAR_009921" description="In LQT1; uncertain significance; dbSNP:rs199473394." evidence="16 35">
    <original>G</original>
    <variation>S</variation>
    <location>
        <position position="179"/>
    </location>
</feature>
<feature type="sequence variant" id="VAR_074943" description="In LQT1; uncertain significance; dbSNP:rs199473661." evidence="35">
    <original>Y</original>
    <variation>H</variation>
    <location>
        <position position="184"/>
    </location>
</feature>
<feature type="sequence variant" id="VAR_008125" description="In LQT1; dbSNP:rs199473397." evidence="7 16">
    <original>Y</original>
    <variation>S</variation>
    <location>
        <position position="184"/>
    </location>
</feature>
<feature type="sequence variant" id="VAR_074944" description="In LQT1; uncertain significance; dbSNP:rs199473398." evidence="35">
    <original>G</original>
    <variation>R</variation>
    <location>
        <position position="186"/>
    </location>
</feature>
<feature type="sequence variant" id="VAR_001519" description="In LQT1; familial sudden death; dbSNP:rs104894252." evidence="7">
    <original>G</original>
    <variation>R</variation>
    <location>
        <position position="189"/>
    </location>
</feature>
<feature type="sequence variant" id="VAR_074945" description="In LQT1; uncertain significance; dbSNP:rs120074178." evidence="35">
    <original>R</original>
    <variation>L</variation>
    <location>
        <position position="190"/>
    </location>
</feature>
<feature type="sequence variant" id="VAR_001520" description="In LQT1; loss of channel activity; dbSNP:rs120074178." evidence="15 23 35 66">
    <original>R</original>
    <variation>Q</variation>
    <location>
        <position position="190"/>
    </location>
</feature>
<feature type="sequence variant" id="VAR_074946" description="In LQT1; uncertain significance; dbSNP:rs199473662." evidence="24">
    <original>R</original>
    <variation>W</variation>
    <location>
        <position position="190"/>
    </location>
</feature>
<feature type="sequence variant" id="VAR_074687" description="In LQT1; dbSNP:rs199473401." evidence="20">
    <original>L</original>
    <variation>P</variation>
    <location>
        <position position="191"/>
    </location>
</feature>
<feature type="sequence variant" id="VAR_074947" description="In LQT1; uncertain significance; dbSNP:rs199472698." evidence="24">
    <original>R</original>
    <variation>P</variation>
    <location>
        <position position="192"/>
    </location>
</feature>
<feature type="sequence variant" id="VAR_009922" description="In LQT1; uncertain significance; dbSNP:rs199472699." evidence="16">
    <original>A</original>
    <variation>P</variation>
    <location>
        <position position="194"/>
    </location>
</feature>
<feature type="sequence variant" id="VAR_074948" description="In LQT1; uncertain significance; dbSNP:rs150172393." evidence="35">
    <original>R</original>
    <variation>W</variation>
    <location>
        <position position="195"/>
    </location>
</feature>
<feature type="sequence variant" id="VAR_074949" description="In LQT1; uncertain significance; dbSNP:rs199472700." evidence="35">
    <original>I</original>
    <variation>V</variation>
    <location>
        <position position="198"/>
    </location>
</feature>
<feature type="sequence variant" id="VAR_074950" description="In LQT1; uncertain significance; dbSNP:rs199472701." evidence="35">
    <original>S</original>
    <variation>A</variation>
    <location>
        <position position="199"/>
    </location>
</feature>
<feature type="sequence variant" id="VAR_074951" description="In LQT1; uncertain significance; dbSNP:rs199472702." evidence="24">
    <original>D</original>
    <variation>H</variation>
    <location>
        <position position="202"/>
    </location>
</feature>
<feature type="sequence variant" id="VAR_068292" description="In LQT1; dbSNP:rs199472703." evidence="23">
    <original>I</original>
    <variation>F</variation>
    <location>
        <position position="204"/>
    </location>
</feature>
<feature type="sequence variant" id="VAR_074952" description="In LQT1; dbSNP:rs199473455." evidence="24 35">
    <original>I</original>
    <variation>M</variation>
    <location>
        <position position="204"/>
    </location>
</feature>
<feature type="sequence variant" id="VAR_074953" description="In LQT1; uncertain significance; dbSNP:rs199472704." evidence="24">
    <original>S</original>
    <variation>F</variation>
    <location>
        <position position="209"/>
    </location>
</feature>
<feature type="sequence variant" id="VAR_074954" description="In LQT1; dbSNP:rs17215479." evidence="24 35">
    <original>V</original>
    <variation>M</variation>
    <location>
        <position position="215"/>
    </location>
</feature>
<feature type="sequence variant" id="VAR_001521" description="In LQT1." evidence="61">
    <original>G</original>
    <variation>R</variation>
    <location>
        <position position="216"/>
    </location>
</feature>
<feature type="sequence variant" id="VAR_074955" description="In LQT1; uncertain significance; dbSNP:rs199472706." evidence="35">
    <original>T</original>
    <variation>M</variation>
    <location>
        <position position="224"/>
    </location>
</feature>
<feature type="sequence variant" id="VAR_009923" description="In LQT1; dbSNP:rs199473456." evidence="16 23 35 74">
    <original>S</original>
    <variation>L</variation>
    <location>
        <position position="225"/>
    </location>
</feature>
<feature type="sequence variant" id="VAR_074956" description="In LQT1; dbSNP:rs199473457." evidence="26 35">
    <original>R</original>
    <variation>C</variation>
    <location>
        <position position="231"/>
    </location>
</feature>
<feature type="sequence variant" id="VAR_074957" description="In LQT1; dbSNP:rs199472709." evidence="24 35">
    <original>R</original>
    <variation>H</variation>
    <location>
        <position position="231"/>
    </location>
</feature>
<feature type="sequence variant" id="VAR_068293" description="In LQT1; decreases delayed rectifier potassium current Iks; prevents the up-regulation of Iks through PKA activation; dbSNP:rs199472710." evidence="23 35 43">
    <original>I</original>
    <variation>N</variation>
    <location>
        <position position="235"/>
    </location>
</feature>
<feature type="sequence variant" id="VAR_074958" description="In LQT1; uncertain significance; dbSNP:rs199473458." evidence="24">
    <original>L</original>
    <variation>P</variation>
    <location>
        <position position="239"/>
    </location>
</feature>
<feature type="sequence variant" id="VAR_074959" description="In LQT1; uncertain significance; dbSNP:rs199472711." evidence="35">
    <original>V</original>
    <variation>G</variation>
    <location>
        <position position="241"/>
    </location>
</feature>
<feature type="sequence variant" id="VAR_008940" description="In LQT1; decreases outward potassium current; decreases plasma membrane localization; dbSNP:rs199472712." evidence="23 35 51 73">
    <original>D</original>
    <variation>N</variation>
    <location>
        <position position="242"/>
    </location>
</feature>
<feature type="sequence variant" id="VAR_010933" description="In LQT1; slower rate of activation and voltage dependence of activation-inactivation shifted to more positive potentials (homomultimers); channels non-functional (heteromultimers); dbSNP:rs199472713." evidence="10 16 23 35">
    <original>R</original>
    <variation>C</variation>
    <location>
        <position position="243"/>
    </location>
</feature>
<feature type="sequence variant" id="VAR_008941" description="In JLNS1; minor changes of wt current (homomultimers); positive voltage shift of the channel activation (heteromultimers); dbSNP:rs120074196." evidence="6 15">
    <original>R</original>
    <variation>H</variation>
    <location>
        <position position="243"/>
    </location>
</feature>
<feature type="sequence variant" id="VAR_074688" description="In LQT1; complete loss of outward potassium current; enhances outward potassium current when co-transfected with wild type; decreases plasma membrane localization; dbSNP:rs120074196." evidence="26 51">
    <original>R</original>
    <variation>P</variation>
    <location>
        <position position="243"/>
    </location>
</feature>
<feature type="sequence variant" id="VAR_074689" description="In JLNS1; does not affect plasma membrane localization; complete loss of outward currents; enhances outward currents when coexpressed with wild type at equimolar ratio; requires 2 nucleotide substitutions; dbSNP:rs397508123." evidence="29 51">
    <original>W</original>
    <variation>F</variation>
    <location>
        <position position="248"/>
    </location>
</feature>
<feature type="sequence variant" id="VAR_008942" description="In LQT1; slower rate of activation and voltage dependence of activation-inactivation shifted to more positive potentials (homomultimers); channels non-functional (heteromultimers); dbSNP:rs199473459." evidence="10 16">
    <original>W</original>
    <variation>R</variation>
    <location>
        <position position="248"/>
    </location>
</feature>
<feature type="sequence variant" id="VAR_008943" description="In LQT1; complete loss of outward potassium current; enhances outward potassium current when co-transfected with wild type; decreases plasma membrane localization; dbSNP:rs199472715." evidence="51 73">
    <original>L</original>
    <variation>H</variation>
    <location>
        <position position="250"/>
    </location>
</feature>
<feature type="sequence variant" id="VAR_074960" description="In LQT1; uncertain significance; dbSNP:rs199472715." evidence="35">
    <original>L</original>
    <variation>P</variation>
    <location>
        <position position="250"/>
    </location>
</feature>
<feature type="sequence variant" id="VAR_068294" description="In LQT1." evidence="23">
    <location>
        <begin position="254"/>
        <end position="256"/>
    </location>
</feature>
<feature type="sequence variant" id="VAR_074961" description="In LQT1; uncertain significance; dbSNP:rs120074179." evidence="24">
    <original>V</original>
    <variation>L</variation>
    <location>
        <position position="254"/>
    </location>
</feature>
<feature type="sequence variant" id="VAR_001522" description="In LQT1; associated in cis with M-417 in a patient; dbSNP:rs120074179." evidence="16 23 35 66 75">
    <original>V</original>
    <variation>M</variation>
    <location>
        <position position="254"/>
    </location>
</feature>
<feature type="sequence variant" id="VAR_074962" description="In LQT1; uncertain significance; dbSNP:rs199472717." evidence="24">
    <original>H</original>
    <variation>N</variation>
    <location>
        <position position="258"/>
    </location>
</feature>
<feature type="sequence variant" id="VAR_074963" description="In LQT1; uncertain significance; dbSNP:rs199472718." evidence="24">
    <original>H</original>
    <variation>R</variation>
    <location>
        <position position="258"/>
    </location>
</feature>
<feature type="sequence variant" id="VAR_068295" description="In LQT1; dbSNP:rs199472719." evidence="23 26 35">
    <original>R</original>
    <variation>C</variation>
    <location>
        <position position="259"/>
    </location>
</feature>
<feature type="sequence variant" id="VAR_074964" description="In LQT1; uncertain significance; dbSNP:rs199472720." evidence="26">
    <original>R</original>
    <variation>H</variation>
    <location>
        <position position="259"/>
    </location>
</feature>
<feature type="sequence variant" id="VAR_068296" description="In LQT1; dbSNP:rs199472720." evidence="23 35">
    <original>R</original>
    <variation>L</variation>
    <location>
        <position position="259"/>
    </location>
</feature>
<feature type="sequence variant" id="VAR_008944" description="In JLNS1; dbSNP:rs199472721." evidence="23">
    <original>E</original>
    <variation>D</variation>
    <location>
        <position position="261"/>
    </location>
</feature>
<feature type="sequence variant" id="VAR_001523" description="In LQT1; loss of channel activity and no interaction with wt KVLQT1 or MINK subunits; dbSNP:rs199472722." evidence="10 66">
    <original>E</original>
    <variation>K</variation>
    <location>
        <position position="261"/>
    </location>
</feature>
<feature type="sequence variant" id="VAR_074965" description="In LQT1; dbSNP:rs199472723." evidence="24 35">
    <original>L</original>
    <variation>V</variation>
    <location>
        <position position="262"/>
    </location>
</feature>
<feature type="sequence variant" id="VAR_080331" description="In LQT1; uncertain significance; no effect on channel activity; dbSNP:rs199472724." evidence="36">
    <original>T</original>
    <variation>I</variation>
    <location>
        <position position="265"/>
    </location>
</feature>
<feature type="sequence variant" id="VAR_009924" description="In LQT1; dbSNP:rs199473460." evidence="16 23 35">
    <original>L</original>
    <variation>P</variation>
    <location>
        <position position="266"/>
    </location>
</feature>
<feature type="sequence variant" id="VAR_074966" description="In LQT1; uncertain significance; dbSNP:rs199472725." evidence="35">
    <original>I</original>
    <variation>S</variation>
    <location>
        <position position="268"/>
    </location>
</feature>
<feature type="sequence variant" id="VAR_001524" description="In LQT1; dbSNP:rs120074194." evidence="16 23 35 66">
    <original>G</original>
    <variation>D</variation>
    <location>
        <position position="269"/>
    </location>
</feature>
<feature type="sequence variant" id="VAR_009925" description="In LQT1; decreases IKs amplitude; accelerates the IKs deactivation; effect on plasma membrane localization; reduces up-regulation of Iks through PKA activation; dbSNP:rs120074193." evidence="23 35 42">
    <original>G</original>
    <variation>S</variation>
    <location>
        <position position="269"/>
    </location>
</feature>
<feature type="sequence variant" id="VAR_074967" description="In LQT1; dbSNP:rs199472726." evidence="24 35">
    <original>G</original>
    <variation>D</variation>
    <location>
        <position position="272"/>
    </location>
</feature>
<feature type="sequence variant" id="VAR_001525" description="In LQT1; functional channel with reduced macroscopic conductance (homomultimers); alteration of normal KVLQT1 function (mut/wt homomultimers); dbSNP:rs120074180." evidence="16 23 26 35 65">
    <original>L</original>
    <variation>F</variation>
    <location>
        <position position="273"/>
    </location>
</feature>
<feature type="sequence variant" id="VAR_068297" description="In LQT1; dbSNP:rs199472727." evidence="23">
    <original>L</original>
    <variation>R</variation>
    <location>
        <position position="273"/>
    </location>
</feature>
<feature type="sequence variant" id="VAR_074968" description="In LQT1; uncertain significance; dbSNP:rs199472728." evidence="35">
    <original>I</original>
    <variation>V</variation>
    <location>
        <position position="274"/>
    </location>
</feature>
<feature type="sequence variant" id="VAR_074690" description="In LQT1; dbSNP:rs199472729." evidence="20">
    <original>F</original>
    <variation>S</variation>
    <location>
        <position position="275"/>
    </location>
</feature>
<feature type="sequence variant" id="VAR_068298" description="In LQT1." evidence="23">
    <location>
        <position position="276"/>
    </location>
</feature>
<feature type="sequence variant" id="VAR_065777" description="In LQT1; loss of function mutation acting in a dominant-negative manner; dbSNP:rs199472730." evidence="20 23 35 39">
    <original>S</original>
    <variation>L</variation>
    <location>
        <position position="277"/>
    </location>
</feature>
<feature type="sequence variant" id="VAR_074969" description="In LQT1; uncertain significance; dbSNP:rs199473461." evidence="35">
    <original>S</original>
    <variation>P</variation>
    <location>
        <position position="277"/>
    </location>
</feature>
<feature type="sequence variant" id="VAR_074970" description="In LQT1; uncertain significance; dbSNP:rs199472730." evidence="24">
    <original>S</original>
    <variation>W</variation>
    <location>
        <position position="277"/>
    </location>
</feature>
<feature type="sequence variant" id="VAR_068299" description="In LQT1; dbSNP:rs199472731." evidence="23">
    <original>Y</original>
    <variation>H</variation>
    <location>
        <position position="278"/>
    </location>
</feature>
<feature type="sequence variant" id="VAR_074971" description="In LQT1; dbSNP:rs199473462." evidence="24 35">
    <original>V</original>
    <variation>E</variation>
    <location>
        <position position="280"/>
    </location>
</feature>
<feature type="sequence variant" id="VAR_008945" description="In LQT1; dbSNP:rs199472732." evidence="35 74">
    <original>Y</original>
    <variation>C</variation>
    <location>
        <position position="281"/>
    </location>
</feature>
<feature type="sequence variant" id="VAR_074972" description="In LQT1; uncertain significance; dbSNP:rs199472733." evidence="35">
    <original>L</original>
    <variation>P</variation>
    <location>
        <position position="282"/>
    </location>
</feature>
<feature type="sequence variant" id="VAR_074973" description="In LQT1; uncertain significance; dbSNP:rs199473463." evidence="35">
    <original>A</original>
    <variation>G</variation>
    <location>
        <position position="283"/>
    </location>
</feature>
<feature type="sequence variant" id="VAR_074974" description="In LQT1; uncertain significance; dbSNP:rs199472735." evidence="24">
    <original>A</original>
    <variation>E</variation>
    <location>
        <position position="287"/>
    </location>
</feature>
<feature type="sequence variant" id="VAR_068300" description="In LQT1; dbSNP:rs199473464." evidence="23">
    <original>E</original>
    <variation>K</variation>
    <location>
        <position position="290"/>
    </location>
</feature>
<feature type="sequence variant" id="VAR_068301" description="In LQT1; dbSNP:rs199472736." evidence="23 35">
    <original>G</original>
    <variation>D</variation>
    <location>
        <position position="292"/>
    </location>
</feature>
<feature type="sequence variant" id="VAR_068302" description="In LQT1; dbSNP:rs199472737." evidence="23 35">
    <original>R</original>
    <variation>C</variation>
    <location>
        <position position="293"/>
    </location>
</feature>
<feature type="sequence variant" id="VAR_080332" description="In LQT1; loss of channel activity; dbSNP:rs199472738." evidence="36">
    <original>F</original>
    <variation>S</variation>
    <location>
        <position position="296"/>
    </location>
</feature>
<feature type="sequence variant" id="VAR_001526" description="In LQT1; dbSNP:rs120074187." evidence="69">
    <original>A</original>
    <variation>T</variation>
    <location>
        <position position="300"/>
    </location>
</feature>
<feature type="sequence variant" id="VAR_074975" description="In LQT1; uncertain significance; dbSNP:rs193922365." evidence="35">
    <original>A</original>
    <variation>E</variation>
    <location>
        <position position="302"/>
    </location>
</feature>
<feature type="sequence variant" id="VAR_074976" description="In LQT1; uncertain significance; dbSNP:rs199472739." evidence="24">
    <original>A</original>
    <variation>T</variation>
    <location>
        <position position="302"/>
    </location>
</feature>
<feature type="sequence variant" id="VAR_068303" description="In LQT1; loss of channel activity; dbSNP:rs193922365." evidence="23 35 36">
    <original>A</original>
    <variation>V</variation>
    <location>
        <position position="302"/>
    </location>
</feature>
<feature type="sequence variant" id="VAR_074977" description="In LQT1; uncertain significance; dbSNP:rs199472740." evidence="35">
    <original>L</original>
    <variation>P</variation>
    <location>
        <position position="303"/>
    </location>
</feature>
<feature type="sequence variant" id="VAR_068304" description="In LQT1; dbSNP:rs199473466." evidence="23">
    <original>W</original>
    <variation>R</variation>
    <location>
        <position position="304"/>
    </location>
</feature>
<feature type="sequence variant" id="VAR_074978" description="In LQT1; uncertain significance; dbSNP:rs199472741." evidence="35">
    <original>W</original>
    <variation>R</variation>
    <location>
        <position position="305"/>
    </location>
</feature>
<feature type="sequence variant" id="VAR_001527" description="In JLNS1; dbSNP:rs120074186." evidence="23 35 72">
    <original>W</original>
    <variation>S</variation>
    <location>
        <position position="305"/>
    </location>
</feature>
<feature type="sequence variant" id="VAR_001528" description="In LQT1; uncertain significance; dbSNP:rs120074181." evidence="35">
    <original>G</original>
    <variation>R</variation>
    <location>
        <position position="306"/>
    </location>
</feature>
<feature type="sequence variant" id="VAR_074691" description="In LQT1; complete loss of outward potassium current; enhances outward potassium current when co-transfected with wild type; decreases plasma membrane localization; dbSNP:rs199472742." evidence="20 51">
    <original>G</original>
    <variation>V</variation>
    <location>
        <position position="306"/>
    </location>
</feature>
<feature type="sequence variant" id="VAR_023841" description="In SQT2; gain of function; dbSNP:rs120074195." evidence="22">
    <original>V</original>
    <variation>L</variation>
    <location>
        <position position="307"/>
    </location>
</feature>
<feature type="sequence variant" id="VAR_074979" description="In LQT1; uncertain significance; dbSNP:rs199473467." evidence="24">
    <original>V</original>
    <variation>D</variation>
    <location>
        <position position="308"/>
    </location>
</feature>
<feature type="sequence variant" id="VAR_001529" description="In LQT1; dbSNP:rs199472743." evidence="66">
    <original>T</original>
    <variation>R</variation>
    <location>
        <position position="309"/>
    </location>
</feature>
<feature type="sequence variant" id="VAR_009926" description="In LQT1; dbSNP:rs199472745." evidence="16">
    <original>V</original>
    <variation>I</variation>
    <location>
        <position position="310"/>
    </location>
</feature>
<feature type="sequence variant" id="VAR_009927" description="In LQT1 and JLNS1; impairs outward potassium current; affects plasma membrane localization; dbSNP:rs199472746." evidence="51 67">
    <original>T</original>
    <variation>I</variation>
    <location>
        <position position="311"/>
    </location>
</feature>
<feature type="sequence variant" id="VAR_001530" description="In LQT1; loss of channel activity; dbSNP:rs120074182." evidence="16 23 35 65">
    <original>T</original>
    <variation>I</variation>
    <location>
        <position position="312"/>
    </location>
</feature>
<feature type="sequence variant" id="VAR_001531" description="In LQT1; dbSNP:rs199472747." evidence="59">
    <original>I</original>
    <variation>M</variation>
    <location>
        <position position="313"/>
    </location>
</feature>
<feature type="sequence variant" id="VAR_074980" description="In LQT1; uncertain significance; dbSNP:rs120074184." evidence="35">
    <original>G</original>
    <variation>C</variation>
    <location>
        <position position="314"/>
    </location>
</feature>
<feature type="sequence variant" id="VAR_068305" description="In LQT1; dbSNP:rs199472748." evidence="23">
    <original>G</original>
    <variation>D</variation>
    <location>
        <position position="314"/>
    </location>
</feature>
<feature type="sequence variant" id="VAR_068306" description="In LQT1; dbSNP:rs120074184." evidence="23">
    <original>G</original>
    <variation>R</variation>
    <location>
        <position position="314"/>
    </location>
</feature>
<feature type="sequence variant" id="VAR_001532" description="In LQT1; dbSNP:rs120074184." evidence="7 23 26 35 57 66 70 73">
    <original>G</original>
    <variation>S</variation>
    <location>
        <position position="314"/>
    </location>
</feature>
<feature type="sequence variant" id="VAR_008946" description="In LQT1; dbSNP:rs74462309." evidence="23 35 43 70 74">
    <original>Y</original>
    <variation>C</variation>
    <location>
        <position position="315"/>
    </location>
</feature>
<feature type="sequence variant" id="VAR_001533" description="In LQT1; dbSNP:rs74462309." evidence="7 66">
    <original>Y</original>
    <variation>S</variation>
    <location>
        <position position="315"/>
    </location>
</feature>
<feature type="sequence variant" id="VAR_074981" description="In LQT1; loss of channel activity; dbSNP:rs199472749." evidence="24 26 36">
    <original>G</original>
    <variation>E</variation>
    <location>
        <position position="316"/>
    </location>
</feature>
<feature type="sequence variant" id="VAR_068307" description="In LQT1; dbSNP:rs104894255." evidence="23">
    <original>G</original>
    <variation>R</variation>
    <location>
        <position position="316"/>
    </location>
</feature>
<feature type="sequence variant" id="VAR_074982" description="In LQT1; uncertain significance; dbSNP:rs199472749." evidence="35">
    <original>G</original>
    <variation>V</variation>
    <location>
        <position position="316"/>
    </location>
</feature>
<feature type="sequence variant" id="VAR_001534" description="In LQT1; complete loss of outward potassium current when expressed alone and even in the presence of the wild type at variable ratios; decreases plasma membrane localization; dbSNP:rs199472751." evidence="51 62 67">
    <original>D</original>
    <variation>N</variation>
    <location>
        <position position="317"/>
    </location>
</feature>
<feature type="sequence variant" id="VAR_008947" description="In LQT1; dbSNP:rs199472752." evidence="70">
    <original>K</original>
    <variation>N</variation>
    <location>
        <position position="318"/>
    </location>
</feature>
<feature type="sequence variant" id="VAR_001535" description="In LQT1; loss of function mutation acting in a dominant-negative manner; dbSNP:rs199472753." evidence="32 66">
    <original>P</original>
    <variation>A</variation>
    <location>
        <position position="320"/>
    </location>
</feature>
<feature type="sequence variant" id="VAR_065778" description="In LQT1; loss of function mutation acting in a dominant-negative manner; dbSNP:rs199473470." evidence="32">
    <original>P</original>
    <variation>H</variation>
    <location>
        <position position="320"/>
    </location>
</feature>
<feature type="sequence variant" id="VAR_074983" description="In LQT1; uncertain significance; dbSNP:rs199472753." evidence="35">
    <original>P</original>
    <variation>S</variation>
    <location>
        <position position="320"/>
    </location>
</feature>
<feature type="sequence variant" id="VAR_068308" description="In LQT1; dbSNP:rs199472754." evidence="23 35 43">
    <original>T</original>
    <variation>A</variation>
    <location>
        <position position="322"/>
    </location>
</feature>
<feature type="sequence variant" id="VAR_074692" description="In JLNS1 and LQT1; impairs outward potassium current; affects plasma membrane localization; dbSNP:rs199472755." evidence="24 28 35 51">
    <original>T</original>
    <variation>M</variation>
    <location>
        <position position="322"/>
    </location>
</feature>
<feature type="sequence variant" id="VAR_001536" description="In LQT1; dbSNP:rs199472756." evidence="16 35 59 66">
    <original>G</original>
    <variation>R</variation>
    <location>
        <position position="325"/>
    </location>
</feature>
<feature type="sequence variant" id="VAR_080333" description="In LQT1; loss of channel activity; dbSNP:rs199472759." evidence="36">
    <original>F</original>
    <variation>S</variation>
    <location>
        <position position="339"/>
    </location>
</feature>
<feature type="sequence variant" id="VAR_074984" description="In LQT1; uncertain significance; dbSNP:rs199472759." evidence="35">
    <original>F</original>
    <variation>Y</variation>
    <location>
        <position position="339"/>
    </location>
</feature>
<feature type="sequence variant" id="VAR_001537" description="In LQT1." evidence="23 71">
    <location>
        <position position="339"/>
    </location>
</feature>
<feature type="sequence variant" id="VAR_001538" description="In LQT1; dbSNP:rs12720459." evidence="16 35">
    <original>A</original>
    <variation>E</variation>
    <location>
        <position position="341"/>
    </location>
</feature>
<feature type="sequence variant" id="VAR_074985" description="In LQT1; uncertain significance; dbSNP:rs12720459." evidence="35">
    <original>A</original>
    <variation>G</variation>
    <location>
        <position position="341"/>
    </location>
</feature>
<feature type="sequence variant" id="VAR_001539" description="In LQT1; dbSNP:rs12720459." evidence="16 23 26 35 56 57 66 68">
    <original>A</original>
    <variation>V</variation>
    <location>
        <position position="341"/>
    </location>
</feature>
<feature type="sequence variant" id="VAR_001540" description="In LQT1; dbSNP:rs199472760." evidence="35 66">
    <original>L</original>
    <variation>F</variation>
    <location>
        <position position="342"/>
    </location>
</feature>
<feature type="sequence variant" id="VAR_074986" description="In LQT1; dbSNP:rs199472761." evidence="24 35">
    <original>P</original>
    <variation>L</variation>
    <location>
        <position position="343"/>
    </location>
</feature>
<feature type="sequence variant" id="VAR_074987" description="In LQT1; uncertain significance; dbSNP:rs199472761." evidence="24">
    <original>P</original>
    <variation>R</variation>
    <location>
        <position position="343"/>
    </location>
</feature>
<feature type="sequence variant" id="VAR_068309" description="In LQT1; dbSNP:rs199472762." evidence="23">
    <original>P</original>
    <variation>S</variation>
    <location>
        <position position="343"/>
    </location>
</feature>
<feature type="sequence variant" id="VAR_068310" description="In LQT1; dbSNP:rs199472763." evidence="23">
    <original>A</original>
    <variation>E</variation>
    <location>
        <position position="344"/>
    </location>
</feature>
<feature type="sequence variant" id="VAR_001541" description="In LQT1; dbSNP:rs199472763." evidence="23 26 66">
    <original>A</original>
    <variation>V</variation>
    <location>
        <position position="344"/>
    </location>
</feature>
<feature type="sequence variant" id="VAR_001542" description="In LQT1; dbSNP:rs120074183." evidence="23">
    <original>G</original>
    <variation>E</variation>
    <location>
        <position position="345"/>
    </location>
</feature>
<feature type="sequence variant" id="VAR_008126" description="In LQT1; familial sudden death; dbSNP:rs199473471." evidence="7">
    <original>G</original>
    <variation>R</variation>
    <location>
        <position position="345"/>
    </location>
</feature>
<feature type="sequence variant" id="VAR_074988" description="In LQT1; uncertain significance; dbSNP:rs199472764." evidence="24">
    <original>S</original>
    <variation>P</variation>
    <location>
        <position position="349"/>
    </location>
</feature>
<feature type="sequence variant" id="VAR_009928" description="In LQT1; dbSNP:rs199472765." evidence="16 23">
    <original>S</original>
    <variation>W</variation>
    <location>
        <position position="349"/>
    </location>
</feature>
<feature type="sequence variant" id="VAR_074989" description="In LQT1; dbSNP:rs199472824." evidence="24 35">
    <original>G</original>
    <variation>R</variation>
    <location>
        <position position="350"/>
    </location>
</feature>
<feature type="sequence variant" id="VAR_074990" description="In LQT1; dbSNP:rs199473402." evidence="24 35">
    <original>F</original>
    <variation>S</variation>
    <location>
        <position position="351"/>
    </location>
</feature>
<feature type="sequence variant" id="VAR_009180" description="In LQT1; dbSNP:rs199473403." evidence="23 70">
    <original>L</original>
    <variation>P</variation>
    <location>
        <position position="353"/>
    </location>
</feature>
<feature type="sequence variant" id="VAR_074991" description="In LQT1; uncertain significance; dbSNP:rs199473404." evidence="35">
    <original>K</original>
    <variation>R</variation>
    <location>
        <position position="354"/>
    </location>
</feature>
<feature type="sequence variant" id="VAR_080334" description="In LQT1; loss of channel activity; dbSNP:rs199473406." evidence="36">
    <original>R</original>
    <variation>G</variation>
    <location>
        <position position="360"/>
    </location>
</feature>
<feature type="sequence variant" id="VAR_074992" description="In LQT1; uncertain significance; dbSNP:rs199473407." evidence="35">
    <original>R</original>
    <variation>M</variation>
    <location>
        <position position="360"/>
    </location>
</feature>
<feature type="sequence variant" id="VAR_074993" description="In LQT1; uncertain significance; dbSNP:rs199473407." evidence="24">
    <original>R</original>
    <variation>T</variation>
    <location>
        <position position="360"/>
    </location>
</feature>
<feature type="sequence variant" id="VAR_048025" description="In LQT1; dbSNP:rs12720458." evidence="23 35">
    <original>K</original>
    <variation>R</variation>
    <location>
        <position position="362"/>
    </location>
</feature>
<feature type="sequence variant" id="VAR_074994" description="In LQT1; uncertain significance; dbSNP:rs199473409." evidence="35">
    <original>N</original>
    <variation>H</variation>
    <location>
        <position position="365"/>
    </location>
</feature>
<feature type="sequence variant" id="VAR_001543" description="In LQT1; decreased potassium channel activity; no change in CALM binding in the presence or not of calcium compared to WT; dbSNP:rs199473410." evidence="25 59">
    <original>R</original>
    <variation>P</variation>
    <location>
        <position position="366"/>
    </location>
</feature>
<feature type="sequence variant" id="VAR_009929" description="In LQT1; dbSNP:rs199473410." evidence="16 35">
    <original>R</original>
    <variation>Q</variation>
    <location>
        <position position="366"/>
    </location>
</feature>
<feature type="sequence variant" id="VAR_008948" description="In LQT1; decreased potassium channel activity; no effect on CALM binding in the presence of calcium; decreased CALM binding in the absence of calcium; dbSNP:rs199473411." evidence="23 25 35 70">
    <original>R</original>
    <variation>W</variation>
    <location>
        <position position="366"/>
    </location>
</feature>
<feature type="sequence variant" id="VAR_001544" description="In LQT1; decreased potassium channel activity; dbSNP:rs199473412." evidence="25 66">
    <original>A</original>
    <variation>T</variation>
    <location>
        <position position="371"/>
    </location>
</feature>
<feature type="sequence variant" id="VAR_074995" description="In LQT1; uncertain significance; dbSNP:rs199473472." evidence="24">
    <original>A</original>
    <variation>D</variation>
    <location>
        <position position="372"/>
    </location>
</feature>
<feature type="sequence variant" id="VAR_008127" description="In LQT1; decreased potassium channel activity; decreased CALM binding in the presence or not of calcium; dbSNP:rs199472766." evidence="7 25">
    <original>S</original>
    <variation>P</variation>
    <location>
        <position position="373"/>
    </location>
</feature>
<feature type="sequence variant" id="VAR_068311" description="In LQT1; uncertain significance; dbSNP:rs199472767." evidence="23 35">
    <original>L</original>
    <variation>H</variation>
    <location>
        <position position="374"/>
    </location>
</feature>
<feature type="sequence variant" id="VAR_074996" description="In LQT1; uncertain significance; dbSNP:rs199472768." evidence="35">
    <original>W</original>
    <variation>G</variation>
    <location>
        <position position="379"/>
    </location>
</feature>
<feature type="sequence variant" id="VAR_068312" description="In LQT1; dbSNP:rs199472771." evidence="23">
    <original>R</original>
    <variation>S</variation>
    <location>
        <position position="380"/>
    </location>
</feature>
<feature type="sequence variant" id="VAR_074997" description="In LQT1; uncertain significance; dbSNP:rs199473473." evidence="35">
    <original>E</original>
    <variation>K</variation>
    <location>
        <position position="385"/>
    </location>
</feature>
<feature type="sequence variant" id="VAR_074998" description="In LQT1; uncertain significance; dbSNP:rs199472772." evidence="35">
    <original>S</original>
    <variation>P</variation>
    <location>
        <position position="389"/>
    </location>
</feature>
<feature type="sequence variant" id="VAR_068313" description="In LQT1; dbSNP:rs199472773." evidence="23">
    <original>S</original>
    <variation>Y</variation>
    <location>
        <position position="389"/>
    </location>
</feature>
<feature type="sequence variant" id="VAR_009930" description="In LQT1; dbSNP:rs199473474." evidence="16">
    <original>T</original>
    <variation>I</variation>
    <location>
        <position position="391"/>
    </location>
</feature>
<feature type="sequence variant" id="VAR_074999" description="In LQT1; uncertain significance." evidence="35">
    <original>T</original>
    <variation>TT</variation>
    <location>
        <position position="391"/>
    </location>
</feature>
<feature type="sequence variant" id="VAR_008128" description="In LQT1; decreased potassium channel activity; decreased CALM binding in the presence or not of calcium.; dbSNP:rs199472774." evidence="7 25">
    <original>W</original>
    <variation>R</variation>
    <location>
        <position position="392"/>
    </location>
</feature>
<feature type="sequence variant" id="VAR_075000" description="In LQT1; uncertain significance; dbSNP:rs199472775." evidence="24">
    <original>K</original>
    <variation>M</variation>
    <location>
        <position position="393"/>
    </location>
</feature>
<feature type="sequence variant" id="VAR_048026" description="In LQT1; no change in potassium channel activity compared to WT; dbSNP:rs12720457." evidence="25">
    <original>K</original>
    <variation>N</variation>
    <location>
        <position position="393"/>
    </location>
</feature>
<feature type="sequence variant" id="VAR_075001" description="In LQT1; uncertain significance; dbSNP:rs199472776." evidence="35">
    <original>R</original>
    <variation>W</variation>
    <location>
        <position position="397"/>
    </location>
</feature>
<feature type="sequence variant" id="VAR_075002" description="In LQT1; uncertain significance; dbSNP:rs199472777." evidence="35">
    <original>K</original>
    <variation>R</variation>
    <location>
        <position position="398"/>
    </location>
</feature>
<feature type="sequence variant" id="VAR_010934" description="In LQT1; associated in cis with M-254 in a patient; dbSNP:rs267607197." evidence="75">
    <original>V</original>
    <variation>M</variation>
    <location>
        <position position="417"/>
    </location>
</feature>
<feature type="sequence variant" id="VAR_075003" description="In LQT1; uncertain significance; dbSNP:rs199472780." evidence="35">
    <original>D</original>
    <variation>E</variation>
    <location>
        <position position="446"/>
    </location>
</feature>
<feature type="sequence variant" id="VAR_075004" description="In LQT1; uncertain significance; dbSNP:rs12720449." evidence="35">
    <original>P</original>
    <variation>L</variation>
    <location>
        <position position="448"/>
    </location>
</feature>
<feature type="sequence variant" id="VAR_009931" description="In LQT1; benign; dbSNP:rs12720449." evidence="16">
    <original>P</original>
    <variation>R</variation>
    <location>
        <position position="448"/>
    </location>
</feature>
<feature type="sequence variant" id="VAR_075005" description="In LQT1; uncertain significance; dbSNP:rs199472782." evidence="35">
    <original>R</original>
    <variation>W</variation>
    <location>
        <position position="451"/>
    </location>
</feature>
<feature type="sequence variant" id="VAR_068314" description="In LQT1; uncertain significance; dbSNP:rs140452381." evidence="23">
    <original>R</original>
    <variation>W</variation>
    <location>
        <position position="452"/>
    </location>
</feature>
<feature type="sequence variant" id="VAR_080335" description="In LQT1; loss of channel activity; dbSNP:rs199473476." evidence="36">
    <original>H</original>
    <variation>Y</variation>
    <location>
        <position position="455"/>
    </location>
</feature>
<feature type="sequence variant" id="VAR_075006" description="In LQT1; uncertain significance; dbSNP:rs199472783." evidence="35">
    <original>G</original>
    <variation>S</variation>
    <location>
        <position position="460"/>
    </location>
</feature>
<feature type="sequence variant" id="VAR_075007" description="In LQT1; uncertain significance; dbSNP:rs199472784." evidence="35">
    <original>P</original>
    <variation>L</variation>
    <location>
        <position position="477"/>
    </location>
</feature>
<feature type="sequence variant" id="VAR_075008" description="In LQT1; uncertain significance; dbSNP:rs199472785." evidence="35">
    <original>R</original>
    <variation>W</variation>
    <location>
        <position position="511"/>
    </location>
</feature>
<feature type="sequence variant" id="VAR_075009" description="In LQT1; uncertain significance; dbSNP:rs17215500." evidence="24">
    <original>R</original>
    <variation>G</variation>
    <location>
        <position position="518"/>
    </location>
</feature>
<feature type="sequence variant" id="VAR_075010" description="In LQT1; uncertain significance; dbSNP:rs145974930." evidence="24">
    <original>R</original>
    <variation>P</variation>
    <location>
        <position position="518"/>
    </location>
</feature>
<feature type="sequence variant" id="VAR_075011" description="In LQT1; uncertain significance; dbSNP:rs145974930." evidence="35">
    <original>R</original>
    <variation>Q</variation>
    <location>
        <position position="518"/>
    </location>
</feature>
<feature type="sequence variant" id="VAR_075012" description="In LQT1; uncertain significance; dbSNP:rs199473479." evidence="35">
    <original>M</original>
    <variation>R</variation>
    <location>
        <position position="520"/>
    </location>
</feature>
<feature type="sequence variant" id="VAR_075013" description="In LQT1; uncertain significance; dbSNP:rs199472789." evidence="35">
    <original>Y</original>
    <variation>S</variation>
    <location>
        <position position="522"/>
    </location>
</feature>
<feature type="sequence variant" id="VAR_068315" description="In LQT1; dbSNP:rs199472790." evidence="23 35">
    <original>V</original>
    <variation>G</variation>
    <location>
        <position position="524"/>
    </location>
</feature>
<feature type="sequence variant" id="VAR_009181" description="In LQT1; dbSNP:rs120074188." evidence="11 35">
    <original>A</original>
    <variation>T</variation>
    <location>
        <position position="525"/>
    </location>
</feature>
<feature type="sequence variant" id="VAR_075014" description="In LQT1; uncertain significance; dbSNP:rs199472791." evidence="35">
    <original>A</original>
    <variation>V</variation>
    <location>
        <position position="525"/>
    </location>
</feature>
<feature type="sequence variant" id="VAR_068316" description="In LQT1; insensitive to gating modulation by calcified CALM; impaired IKS current; dbSNP:rs199472792." evidence="23">
    <original>K</original>
    <variation>E</variation>
    <location>
        <position position="526"/>
    </location>
</feature>
<feature type="sequence variant" id="VAR_008949" description="In LQT1; minor changes of wt current (homomultimers); positive voltage shift of the channel activation (heteromultimers); dbSNP:rs199472793." evidence="15 35">
    <original>R</original>
    <variation>W</variation>
    <location>
        <position position="533"/>
    </location>
</feature>
<feature type="sequence variant" id="VAR_075015" description="In LQT1; uncertain significance; dbSNP:rs199472794." evidence="35">
    <original>R</original>
    <variation>Q</variation>
    <location>
        <position position="539"/>
    </location>
</feature>
<feature type="sequence variant" id="VAR_008950" description="In LQT1; minor changes of wt current (homomultimers); positive voltage shift of the channel activation (heteromultimers); dbSNP:rs199472795." evidence="15 23 35">
    <original>R</original>
    <variation>W</variation>
    <location>
        <position position="539"/>
    </location>
</feature>
<feature type="sequence variant" id="VAR_075016" description="In LQT1; uncertain significance; dbSNP:rs199472796." evidence="35">
    <original>V</original>
    <variation>I</variation>
    <location>
        <position position="541"/>
    </location>
</feature>
<feature type="sequence variant" id="VAR_075017" description="In LQT1; uncertain significance; dbSNP:rs199472797." evidence="35">
    <original>E</original>
    <variation>K</variation>
    <location>
        <position position="543"/>
    </location>
</feature>
<feature type="sequence variant" id="VAR_068317" description="In LQT1; decreases interaction with KCNE1 C-terminus; does not affect plasma membrane localization; reduces IKS current density; impairs binding with phosphatidylinositol 4,5-bisphosphate; loss of channel activity; dbSNP:rs199473480." evidence="23 35 36 48">
    <original>S</original>
    <variation>L</variation>
    <location>
        <position position="546"/>
    </location>
</feature>
<feature type="sequence variant" id="VAR_075018" description="In LQT1; uncertain significance; dbSNP:rs199472798." evidence="35">
    <original>Q</original>
    <variation>R</variation>
    <location>
        <position position="547"/>
    </location>
</feature>
<feature type="sequence variant" id="VAR_075019" description="In LQT1; uncertain significance; dbSNP:rs199472799." evidence="24">
    <original>G</original>
    <variation>D</variation>
    <location>
        <position position="548"/>
    </location>
</feature>
<feature type="sequence variant" id="VAR_075020" description="In LQT1; uncertain significance; dbSNP:rs199473481." evidence="24">
    <original>V</original>
    <variation>A</variation>
    <location>
        <position position="554"/>
    </location>
</feature>
<feature type="sequence variant" id="VAR_001545" description="In LQT1; decreases interaction with KCNE1 C-terminus; does not affect plasma membrane localization; reduces IKS current density; shifts activation of the voltage dependence; deactivates more rapidly; impairs binding with phosphatidylinositol 4,5-bisphosphate; dbSNP:rs120074185." evidence="23 35 48 64 66">
    <original>R</original>
    <variation>C</variation>
    <location>
        <position position="555"/>
    </location>
</feature>
<feature type="sequence variant" id="VAR_068318" description="In LQT1; decreases interaction with KCNE1 C-terminus; does not affect plasma membrane localization; reduces IKS current density; impairs binding with Phosphatidylinositol 4,5-bisphosphate; dbSNP:rs199472800." evidence="23 35 48">
    <original>R</original>
    <variation>H</variation>
    <location>
        <position position="555"/>
    </location>
</feature>
<feature type="sequence variant" id="VAR_075021" description="In LQT1; uncertain significance; dbSNP:rs120074185." evidence="35">
    <original>R</original>
    <variation>S</variation>
    <location>
        <position position="555"/>
    </location>
</feature>
<feature type="sequence variant" id="VAR_074693" description="In LQT1; no effect on cell membrane localization; slows activation kinetics; accelerates deactivation kinetics; rightshifts the voltage-dependent activation; does not affect cAMP-dependent up-regulation; decreases interaction with KCNE1 C-terminus; does not affect plasma membrane localization; does not affect phosphorylation at S-27 during cAMP-dependent stimulation; reduces IKS current density; impairs binding with Phosphatidylinositol 4,5-bisphosphate; dbSNP:rs199472801." evidence="35 48 49">
    <original>K</original>
    <variation>E</variation>
    <location>
        <position position="557"/>
    </location>
</feature>
<feature type="sequence variant" id="VAR_009932" description="In LQT1; dbSNP:rs199472804." evidence="16 35">
    <original>S</original>
    <variation>F</variation>
    <location>
        <position position="566"/>
    </location>
</feature>
<feature type="sequence variant" id="VAR_075022" description="In LQT1; uncertain significance; dbSNP:rs199472803." evidence="35">
    <original>S</original>
    <variation>P</variation>
    <location>
        <position position="566"/>
    </location>
</feature>
<feature type="sequence variant" id="VAR_068319" description="In LQT1; dbSNP:rs199472804." evidence="23 35">
    <original>S</original>
    <variation>Y</variation>
    <location>
        <position position="566"/>
    </location>
</feature>
<feature type="sequence variant" id="VAR_068320" description="In LQT1; dbSNP:rs199472805." evidence="23">
    <original>I</original>
    <variation>S</variation>
    <location>
        <position position="567"/>
    </location>
</feature>
<feature type="sequence variant" id="VAR_075023" description="In LQT1; dbSNP:rs199472805." evidence="24 35">
    <original>I</original>
    <variation>T</variation>
    <location>
        <position position="567"/>
    </location>
</feature>
<feature type="sequence variant" id="VAR_068321" description="In LQT1; dbSNP:rs199472807." evidence="23 35">
    <original>G</original>
    <variation>R</variation>
    <location>
        <position position="568"/>
    </location>
</feature>
<feature type="sequence variant" id="VAR_075024" description="In LQT1; uncertain significance; dbSNP:rs199472808." evidence="35">
    <original>K</original>
    <variation>E</variation>
    <location>
        <position position="569"/>
    </location>
</feature>
<feature type="sequence variant" id="VAR_075025" description="In LQT1; uncertain significance; dbSNP:rs199472809." evidence="35">
    <original>S</original>
    <variation>L</variation>
    <location>
        <position position="571"/>
    </location>
</feature>
<feature type="sequence variant" id="VAR_075026" description="In LQT1; uncertain significance; dbSNP:rs199472810." evidence="24">
    <original>F</original>
    <variation>L</variation>
    <location>
        <position position="573"/>
    </location>
</feature>
<feature type="sequence variant" id="VAR_009933" description="In LQT1; dbSNP:rs17221854." evidence="16">
    <original>R</original>
    <variation>C</variation>
    <location>
        <position position="583"/>
    </location>
</feature>
<feature type="sequence variant" id="VAR_075027" description="In LQT1; uncertain significance; dbSNP:rs199473482." evidence="24">
    <original>R</original>
    <variation>H</variation>
    <location>
        <position position="583"/>
    </location>
</feature>
<feature type="sequence variant" id="VAR_074694" description="In LQT1; decreases outward potassium current; decreases plasma membrane localization; dbSNP:rs199472812." evidence="24 51">
    <original>N</original>
    <variation>D</variation>
    <location>
        <position position="586"/>
    </location>
</feature>
<feature type="sequence variant" id="VAR_008951" description="In LQT1; dbSNP:rs120074189." evidence="5 23 35 73">
    <original>T</original>
    <variation>M</variation>
    <location>
        <position position="587"/>
    </location>
</feature>
<feature type="sequence variant" id="VAR_008952" description="In LQT1 and JLNS1; affects plasma membrane localization; strongly reduces potassium current; impairs binding to AKAP9 and the targeting protein kinase A (PKA) catalytic subunit and protein phosphatase 1 (PP1); dbSNP:rs120074190." evidence="18 27 48 51">
    <original>G</original>
    <variation>D</variation>
    <location>
        <position position="589"/>
    </location>
</feature>
<feature type="sequence variant" id="VAR_068322" description="In LQT1; reduces IKs density and causes a right-shift of the current?voltage relation of channel activation; reduces cell surface expression; no effect on interaction with AKAP9; does not affect the cAMP-dependent IKs up-regulation; dbSNP:rs199472813." evidence="23 46">
    <original>A</original>
    <variation>T</variation>
    <location>
        <position position="590"/>
    </location>
</feature>
<feature type="sequence variant" id="VAR_075028" description="In LQT1; uncertain significance; dbSNP:rs199473483." evidence="35">
    <original>R</original>
    <variation>C</variation>
    <location>
        <position position="591"/>
    </location>
</feature>
<feature type="sequence variant" id="VAR_008953" description="In LQT1; dbSNP:rs199472814." evidence="5 23 35">
    <original>R</original>
    <variation>H</variation>
    <location>
        <position position="591"/>
    </location>
</feature>
<feature type="sequence variant" id="VAR_075029" description="In LQT1; uncertain significance; dbSNP:rs199472815." evidence="35">
    <original>R</original>
    <variation>P</variation>
    <location>
        <position position="594"/>
    </location>
</feature>
<feature type="sequence variant" id="VAR_009934" description="In LQT1; dbSNP:rs199472815." evidence="16 23 35">
    <original>R</original>
    <variation>Q</variation>
    <location>
        <position position="594"/>
    </location>
</feature>
<feature type="sequence variant" id="VAR_075030" description="In LQT1; uncertain significance; dbSNP:rs199472816." evidence="35">
    <original>E</original>
    <variation>K</variation>
    <location>
        <position position="596"/>
    </location>
</feature>
<feature type="sequence variant" id="VAR_075031" description="In LQT1; uncertain significance." evidence="35">
    <location>
        <position position="596"/>
    </location>
</feature>
<feature type="sequence variant" id="VAR_075032" description="In LQT1; uncertain significance; dbSNP:rs34516117." evidence="35">
    <original>T</original>
    <variation>M</variation>
    <location>
        <position position="600"/>
    </location>
</feature>
<feature type="sequence variant" id="VAR_075033" description="In LQT1; uncertain significance; dbSNP:rs147445322." evidence="35">
    <original>D</original>
    <variation>N</variation>
    <location>
        <position position="611"/>
    </location>
</feature>
<feature type="sequence variant" id="VAR_075034" description="In LQT1; uncertain significance; dbSNP:rs397508101." evidence="35">
    <location>
        <position position="614"/>
    </location>
</feature>
<feature type="sequence variant" id="VAR_068323" description="In LQT1; decreases outward potassium current; decreases plasma membrane localization; dbSNP:rs199472819." evidence="23 51">
    <original>L</original>
    <variation>M</variation>
    <location>
        <position position="619"/>
    </location>
</feature>
<feature type="sequence variant" id="VAR_068324" description="In LQT1; dbSNP:rs199472821." evidence="23 26 35">
    <original>G</original>
    <variation>S</variation>
    <location>
        <position position="626"/>
    </location>
</feature>
<feature type="sequence variant" id="VAR_075035" description="In LQT1; uncertain significance; dbSNP:rs199473484." evidence="35">
    <original>G</original>
    <variation>R</variation>
    <location>
        <position position="635"/>
    </location>
</feature>
<feature type="sequence variant" id="VAR_008954" description="In dbSNP:rs1800172." evidence="73">
    <original>G</original>
    <variation>S</variation>
    <location>
        <position position="643"/>
    </location>
</feature>
<feature type="mutagenesis site" description="No phosphorylation by PKA. Decreases delayed rectifier potassium channel activity." evidence="18">
    <original>S</original>
    <variation>A</variation>
    <location>
        <position position="27"/>
    </location>
</feature>
<feature type="mutagenesis site" description="Strongly inhibits SLC5A3 transporter activity." evidence="45">
    <original>R</original>
    <variation>A</variation>
    <location>
        <position position="231"/>
    </location>
</feature>
<feature type="mutagenesis site" description="Has a voltage-gated potassium channel activity. Inhibition of voltage-gated potassium channel activity by KCNE4." evidence="33">
    <original>V</original>
    <variation>L</variation>
    <location>
        <position position="324"/>
    </location>
</feature>
<feature type="mutagenesis site" description="Has a voltage-gated potassium channel activity. Disrupts KCNE4-mediated voltage-gated potassium channel activity inhibition." evidence="33">
    <original>K</original>
    <variation>R</variation>
    <location>
        <position position="326"/>
    </location>
</feature>
<feature type="mutagenesis site" description="Has a voltage-gated potassium channel activity. Disrupts KCNE4-mediated voltage-gated potassium channel activity inhibition." evidence="33">
    <original>T</original>
    <variation>V</variation>
    <location>
        <position position="327"/>
    </location>
</feature>
<feature type="mutagenesis site" description="Has a voltage-gated potassium channel activity. Inhibition of voltage-gated potassium channel activity by KCNE4." evidence="33">
    <original>I</original>
    <variation>L</variation>
    <location>
        <position position="328"/>
    </location>
</feature>
<feature type="mutagenesis site" description="Inhibits voltage-gated potassium channel activity." evidence="33">
    <original>S</original>
    <variation>C</variation>
    <location>
        <position position="338"/>
    </location>
</feature>
<feature type="mutagenesis site" description="Inhibits voltage-gated potassium channel activity." evidence="33">
    <original>F</original>
    <variation>C</variation>
    <location>
        <position position="340"/>
    </location>
</feature>
<feature type="mutagenesis site" description="Reduced protein expression, probably due to misfolding and proteasomal degradation. No detectable electrophysiological activity. Reduced electrophysiological activity in the presence of KCNE1." evidence="50">
    <original>I</original>
    <variation>D</variation>
    <location>
        <position position="375"/>
    </location>
</feature>
<feature type="mutagenesis site" description="Reduced protein expression, probably due to misfolding and proteasomal degradation. Significantly reduced electrophysiological activity. Reduced electrophysiological activity in the presence of KCNE1." evidence="50">
    <original>V</original>
    <variation>D</variation>
    <location>
        <position position="516"/>
    </location>
</feature>
<feature type="mutagenesis site" description="Decreased interaction with PIP2 and calmodulin/CALM in the presence of calcium. Insensitive to gating modulation by calcified CALM. Impaired IKS current. Decreased interaction with PIP2 and CALM in the presence of calcium; when associated with N-527. Increased binding to PIP2 and CALM in the absence of calcium. Increased binding to CALM and no change in PIP2 binding in the absence of calcium; when associated with N-527." evidence="52">
    <original>K</original>
    <variation>N</variation>
    <location>
        <position position="526"/>
    </location>
</feature>
<feature type="mutagenesis site" description="Decreased interaction with PIP2 and calmodulin/CALM in the presence of calcium. Decreased interaction with PIP2 and CALM in the presence of calcium; when associated with N-526. Increased binding to PIP2 and CALM in the absence of calcium. Increased binding to CALM and no change in PIP2 binding in the absence of calcium; when associated with N-526." evidence="52">
    <original>K</original>
    <variation>N</variation>
    <location>
        <position position="527"/>
    </location>
</feature>
<feature type="mutagenesis site" description="No effect." evidence="27">
    <original>G</original>
    <variation>M</variation>
    <location>
        <position position="589"/>
    </location>
</feature>
<feature type="mutagenesis site" description="Reduced cell surface expression and strongly reduced potassium current." evidence="27">
    <original>A</original>
    <variation>W</variation>
    <location>
        <position position="590"/>
    </location>
</feature>
<feature type="mutagenesis site" description="Reduced cell surface expression and moderately reduced potassium current." evidence="27">
    <original>N</original>
    <variation>G</variation>
    <location>
        <position position="593"/>
    </location>
</feature>
<feature type="mutagenesis site" description="Does not interact with AKAP9 and the targeting protein kinase A (PKA) catalytic subunit and protein phosphatase 1 (PP1); when associated with I-609." evidence="18">
    <original>L</original>
    <variation>A</variation>
    <location>
        <position position="602"/>
    </location>
</feature>
<feature type="mutagenesis site" description="Does not interact with AKAP9 and the kinase A (PKA) catalytic subunit and protein phosphatase 1 (PP1); when associated with L-602." evidence="18">
    <original>I</original>
    <variation>A</variation>
    <location>
        <position position="609"/>
    </location>
</feature>
<feature type="sequence conflict" description="In Ref. 4; CAB44649." evidence="80" ref="4">
    <original>PA</original>
    <variation>HV</variation>
    <location>
        <begin position="64"/>
        <end position="65"/>
    </location>
</feature>
<feature type="sequence conflict" description="In Ref. 2; AAC05705." evidence="80" ref="2">
    <location>
        <position position="370"/>
    </location>
</feature>
<feature type="sequence conflict" description="In Ref. 5; AAM94040." evidence="80" ref="5">
    <original>AL</original>
    <variation>VI</variation>
    <location>
        <begin position="607"/>
        <end position="608"/>
    </location>
</feature>
<feature type="sequence conflict" description="In Ref. 5; AAM94040." evidence="80" ref="5">
    <original>LHGGSTPGSGGPPREGGAHITQPCGS</original>
    <variation>MQQGGPTCNSRSQVVASNE</variation>
    <location>
        <begin position="619"/>
        <end position="644"/>
    </location>
</feature>
<feature type="sequence conflict" description="In Ref. 5; AAM94040." evidence="80" ref="5">
    <original>VD</original>
    <variation>IN</variation>
    <location>
        <begin position="648"/>
        <end position="649"/>
    </location>
</feature>
<feature type="sequence conflict" description="In Ref. 5; AAM94040." evidence="80" ref="5">
    <original>T</original>
    <variation>S</variation>
    <location>
        <position position="658"/>
    </location>
</feature>
<feature type="sequence conflict" description="In Ref. 5; AAM94040." evidence="80" ref="5">
    <original>RR</original>
    <variation>QT</variation>
    <location>
        <begin position="669"/>
        <end position="670"/>
    </location>
</feature>
<feature type="helix" evidence="94">
    <location>
        <begin position="106"/>
        <end position="114"/>
    </location>
</feature>
<feature type="helix" evidence="94">
    <location>
        <begin position="121"/>
        <end position="141"/>
    </location>
</feature>
<feature type="helix" evidence="91">
    <location>
        <begin position="142"/>
        <end position="144"/>
    </location>
</feature>
<feature type="helix" evidence="94">
    <location>
        <begin position="146"/>
        <end position="148"/>
    </location>
</feature>
<feature type="helix" evidence="94">
    <location>
        <begin position="151"/>
        <end position="176"/>
    </location>
</feature>
<feature type="helix" evidence="95">
    <location>
        <begin position="178"/>
        <end position="180"/>
    </location>
</feature>
<feature type="helix" evidence="94">
    <location>
        <begin position="182"/>
        <end position="184"/>
    </location>
</feature>
<feature type="helix" evidence="94">
    <location>
        <begin position="186"/>
        <end position="194"/>
    </location>
</feature>
<feature type="helix" evidence="94">
    <location>
        <begin position="197"/>
        <end position="215"/>
    </location>
</feature>
<feature type="helix" evidence="94">
    <location>
        <begin position="224"/>
        <end position="236"/>
    </location>
</feature>
<feature type="helix" evidence="94">
    <location>
        <begin position="237"/>
        <end position="240"/>
    </location>
</feature>
<feature type="strand" evidence="94">
    <location>
        <begin position="241"/>
        <end position="244"/>
    </location>
</feature>
<feature type="helix" evidence="94">
    <location>
        <begin position="246"/>
        <end position="284"/>
    </location>
</feature>
<feature type="strand" evidence="91">
    <location>
        <begin position="290"/>
        <end position="292"/>
    </location>
</feature>
<feature type="helix" evidence="94">
    <location>
        <begin position="299"/>
        <end position="310"/>
    </location>
</feature>
<feature type="strand" evidence="94">
    <location>
        <begin position="316"/>
        <end position="318"/>
    </location>
</feature>
<feature type="helix" evidence="94">
    <location>
        <begin position="323"/>
        <end position="335"/>
    </location>
</feature>
<feature type="helix" evidence="94">
    <location>
        <begin position="337"/>
        <end position="340"/>
    </location>
</feature>
<feature type="helix" evidence="93">
    <location>
        <begin position="342"/>
        <end position="360"/>
    </location>
</feature>
<feature type="helix" evidence="93">
    <location>
        <begin position="361"/>
        <end position="363"/>
    </location>
</feature>
<feature type="helix" evidence="92">
    <location>
        <begin position="367"/>
        <end position="383"/>
    </location>
</feature>
<feature type="strand" evidence="90">
    <location>
        <begin position="386"/>
        <end position="389"/>
    </location>
</feature>
<feature type="helix" evidence="92">
    <location>
        <begin position="390"/>
        <end position="394"/>
    </location>
</feature>
<feature type="helix" evidence="92">
    <location>
        <begin position="402"/>
        <end position="424"/>
    </location>
</feature>
<feature type="helix" evidence="94">
    <location>
        <begin position="507"/>
        <end position="531"/>
    </location>
</feature>
<feature type="helix" evidence="94">
    <location>
        <begin position="538"/>
        <end position="554"/>
    </location>
</feature>
<feature type="turn" evidence="91">
    <location>
        <begin position="564"/>
        <end position="566"/>
    </location>
</feature>
<feature type="helix" evidence="89">
    <location>
        <begin position="588"/>
        <end position="609"/>
    </location>
</feature>
<reference key="1">
    <citation type="journal article" date="1997" name="EMBO J.">
        <title>Properties of KvLQT1 K+ channel mutations in Romano-Ward and Jervell and Lange-Nielsen inherited cardiac arrhythmias.</title>
        <authorList>
            <person name="Chouabe C."/>
            <person name="Neyroud N."/>
            <person name="Guicheney P."/>
            <person name="Lazdunski M."/>
            <person name="Romey G."/>
            <person name="Barhanin J."/>
        </authorList>
    </citation>
    <scope>NUCLEOTIDE SEQUENCE [MRNA] (ISOFORM 1)</scope>
    <scope>FUNCTION</scope>
    <scope>CHARACTERIZATION OF VARIANT LQT1 CYS-555</scope>
    <source>
        <tissue>Kidney</tissue>
    </source>
</reference>
<reference key="2">
    <citation type="journal article" date="1997" name="J. Biol. Chem.">
        <title>Suppression of slow delayed rectifier current by a truncated isoform of KvLQT1 cloned from normal human heart.</title>
        <authorList>
            <person name="Jiang M."/>
            <person name="Tseng-Crank J."/>
            <person name="Tseng G.-N."/>
        </authorList>
    </citation>
    <scope>NUCLEOTIDE SEQUENCE [MRNA] (ISOFORM 2)</scope>
    <scope>FUNCTION (ISOFORM 2)</scope>
    <source>
        <tissue>Heart</tissue>
    </source>
</reference>
<reference key="3">
    <citation type="journal article" date="1998" name="Hum. Genet.">
        <title>Genomic organization and mutational analysis of KVLQT1, a gene responsible for familial long QT syndrome.</title>
        <authorList>
            <person name="Itoh T."/>
            <person name="Tanaka T."/>
            <person name="Nagai R."/>
            <person name="Kikuchi K."/>
            <person name="Ogawa S."/>
            <person name="Okada S."/>
            <person name="Yamagata S."/>
            <person name="Yano K."/>
            <person name="Yazaki Y."/>
            <person name="Nakamura Y."/>
        </authorList>
    </citation>
    <scope>NUCLEOTIDE SEQUENCE [GENOMIC DNA] (ISOFORMS 1 AND 2)</scope>
    <scope>VARIANTS LQT1 ASN-242; HIS-250; SER-314 AND MET-587</scope>
    <scope>VARIANT SER-643</scope>
</reference>
<reference key="4">
    <citation type="journal article" date="1999" name="Circ. Res.">
        <title>Genomic organization of the KCNQ1 K+ channel gene and identification of C-terminal mutations in the long-QT syndrome.</title>
        <authorList>
            <person name="Neyroud N."/>
            <person name="Richard P."/>
            <person name="Vignier N."/>
            <person name="Donger C."/>
            <person name="Denjoy I."/>
            <person name="Demay L."/>
            <person name="Shkolnikova M."/>
            <person name="Pesce R."/>
            <person name="Chevalier P."/>
            <person name="Hainque B."/>
            <person name="Coumel P."/>
            <person name="Schwartz K."/>
            <person name="Guicheney P."/>
        </authorList>
    </citation>
    <scope>NUCLEOTIDE SEQUENCE [GENOMIC DNA] (ISOFORMS 1 AND 2)</scope>
    <scope>VARIANTS LQT1 MET-587 AND HIS-591</scope>
</reference>
<reference key="5">
    <citation type="submission" date="2002-05" db="EMBL/GenBank/DDBJ databases">
        <authorList>
            <person name="Seebohm G."/>
        </authorList>
    </citation>
    <scope>NUCLEOTIDE SEQUENCE [MRNA]</scope>
    <source>
        <tissue>Heart</tissue>
    </source>
</reference>
<reference key="6">
    <citation type="journal article" date="2004" name="Nat. Genet.">
        <title>Complete sequencing and characterization of 21,243 full-length human cDNAs.</title>
        <authorList>
            <person name="Ota T."/>
            <person name="Suzuki Y."/>
            <person name="Nishikawa T."/>
            <person name="Otsuki T."/>
            <person name="Sugiyama T."/>
            <person name="Irie R."/>
            <person name="Wakamatsu A."/>
            <person name="Hayashi K."/>
            <person name="Sato H."/>
            <person name="Nagai K."/>
            <person name="Kimura K."/>
            <person name="Makita H."/>
            <person name="Sekine M."/>
            <person name="Obayashi M."/>
            <person name="Nishi T."/>
            <person name="Shibahara T."/>
            <person name="Tanaka T."/>
            <person name="Ishii S."/>
            <person name="Yamamoto J."/>
            <person name="Saito K."/>
            <person name="Kawai Y."/>
            <person name="Isono Y."/>
            <person name="Nakamura Y."/>
            <person name="Nagahari K."/>
            <person name="Murakami K."/>
            <person name="Yasuda T."/>
            <person name="Iwayanagi T."/>
            <person name="Wagatsuma M."/>
            <person name="Shiratori A."/>
            <person name="Sudo H."/>
            <person name="Hosoiri T."/>
            <person name="Kaku Y."/>
            <person name="Kodaira H."/>
            <person name="Kondo H."/>
            <person name="Sugawara M."/>
            <person name="Takahashi M."/>
            <person name="Kanda K."/>
            <person name="Yokoi T."/>
            <person name="Furuya T."/>
            <person name="Kikkawa E."/>
            <person name="Omura Y."/>
            <person name="Abe K."/>
            <person name="Kamihara K."/>
            <person name="Katsuta N."/>
            <person name="Sato K."/>
            <person name="Tanikawa M."/>
            <person name="Yamazaki M."/>
            <person name="Ninomiya K."/>
            <person name="Ishibashi T."/>
            <person name="Yamashita H."/>
            <person name="Murakawa K."/>
            <person name="Fujimori K."/>
            <person name="Tanai H."/>
            <person name="Kimata M."/>
            <person name="Watanabe M."/>
            <person name="Hiraoka S."/>
            <person name="Chiba Y."/>
            <person name="Ishida S."/>
            <person name="Ono Y."/>
            <person name="Takiguchi S."/>
            <person name="Watanabe S."/>
            <person name="Yosida M."/>
            <person name="Hotuta T."/>
            <person name="Kusano J."/>
            <person name="Kanehori K."/>
            <person name="Takahashi-Fujii A."/>
            <person name="Hara H."/>
            <person name="Tanase T.-O."/>
            <person name="Nomura Y."/>
            <person name="Togiya S."/>
            <person name="Komai F."/>
            <person name="Hara R."/>
            <person name="Takeuchi K."/>
            <person name="Arita M."/>
            <person name="Imose N."/>
            <person name="Musashino K."/>
            <person name="Yuuki H."/>
            <person name="Oshima A."/>
            <person name="Sasaki N."/>
            <person name="Aotsuka S."/>
            <person name="Yoshikawa Y."/>
            <person name="Matsunawa H."/>
            <person name="Ichihara T."/>
            <person name="Shiohata N."/>
            <person name="Sano S."/>
            <person name="Moriya S."/>
            <person name="Momiyama H."/>
            <person name="Satoh N."/>
            <person name="Takami S."/>
            <person name="Terashima Y."/>
            <person name="Suzuki O."/>
            <person name="Nakagawa S."/>
            <person name="Senoh A."/>
            <person name="Mizoguchi H."/>
            <person name="Goto Y."/>
            <person name="Shimizu F."/>
            <person name="Wakebe H."/>
            <person name="Hishigaki H."/>
            <person name="Watanabe T."/>
            <person name="Sugiyama A."/>
            <person name="Takemoto M."/>
            <person name="Kawakami B."/>
            <person name="Yamazaki M."/>
            <person name="Watanabe K."/>
            <person name="Kumagai A."/>
            <person name="Itakura S."/>
            <person name="Fukuzumi Y."/>
            <person name="Fujimori Y."/>
            <person name="Komiyama M."/>
            <person name="Tashiro H."/>
            <person name="Tanigami A."/>
            <person name="Fujiwara T."/>
            <person name="Ono T."/>
            <person name="Yamada K."/>
            <person name="Fujii Y."/>
            <person name="Ozaki K."/>
            <person name="Hirao M."/>
            <person name="Ohmori Y."/>
            <person name="Kawabata A."/>
            <person name="Hikiji T."/>
            <person name="Kobatake N."/>
            <person name="Inagaki H."/>
            <person name="Ikema Y."/>
            <person name="Okamoto S."/>
            <person name="Okitani R."/>
            <person name="Kawakami T."/>
            <person name="Noguchi S."/>
            <person name="Itoh T."/>
            <person name="Shigeta K."/>
            <person name="Senba T."/>
            <person name="Matsumura K."/>
            <person name="Nakajima Y."/>
            <person name="Mizuno T."/>
            <person name="Morinaga M."/>
            <person name="Sasaki M."/>
            <person name="Togashi T."/>
            <person name="Oyama M."/>
            <person name="Hata H."/>
            <person name="Watanabe M."/>
            <person name="Komatsu T."/>
            <person name="Mizushima-Sugano J."/>
            <person name="Satoh T."/>
            <person name="Shirai Y."/>
            <person name="Takahashi Y."/>
            <person name="Nakagawa K."/>
            <person name="Okumura K."/>
            <person name="Nagase T."/>
            <person name="Nomura N."/>
            <person name="Kikuchi H."/>
            <person name="Masuho Y."/>
            <person name="Yamashita R."/>
            <person name="Nakai K."/>
            <person name="Yada T."/>
            <person name="Nakamura Y."/>
            <person name="Ohara O."/>
            <person name="Isogai T."/>
            <person name="Sugano S."/>
        </authorList>
    </citation>
    <scope>NUCLEOTIDE SEQUENCE [LARGE SCALE MRNA] (ISOFORM 2)</scope>
    <source>
        <tissue>Heart</tissue>
    </source>
</reference>
<reference key="7">
    <citation type="journal article" date="2006" name="Nature">
        <title>Human chromosome 11 DNA sequence and analysis including novel gene identification.</title>
        <authorList>
            <person name="Taylor T.D."/>
            <person name="Noguchi H."/>
            <person name="Totoki Y."/>
            <person name="Toyoda A."/>
            <person name="Kuroki Y."/>
            <person name="Dewar K."/>
            <person name="Lloyd C."/>
            <person name="Itoh T."/>
            <person name="Takeda T."/>
            <person name="Kim D.-W."/>
            <person name="She X."/>
            <person name="Barlow K.F."/>
            <person name="Bloom T."/>
            <person name="Bruford E."/>
            <person name="Chang J.L."/>
            <person name="Cuomo C.A."/>
            <person name="Eichler E."/>
            <person name="FitzGerald M.G."/>
            <person name="Jaffe D.B."/>
            <person name="LaButti K."/>
            <person name="Nicol R."/>
            <person name="Park H.-S."/>
            <person name="Seaman C."/>
            <person name="Sougnez C."/>
            <person name="Yang X."/>
            <person name="Zimmer A.R."/>
            <person name="Zody M.C."/>
            <person name="Birren B.W."/>
            <person name="Nusbaum C."/>
            <person name="Fujiyama A."/>
            <person name="Hattori M."/>
            <person name="Rogers J."/>
            <person name="Lander E.S."/>
            <person name="Sakaki Y."/>
        </authorList>
    </citation>
    <scope>NUCLEOTIDE SEQUENCE [LARGE SCALE GENOMIC DNA]</scope>
</reference>
<reference key="8">
    <citation type="submission" date="2005-07" db="EMBL/GenBank/DDBJ databases">
        <authorList>
            <person name="Mural R.J."/>
            <person name="Istrail S."/>
            <person name="Sutton G."/>
            <person name="Florea L."/>
            <person name="Halpern A.L."/>
            <person name="Mobarry C.M."/>
            <person name="Lippert R."/>
            <person name="Walenz B."/>
            <person name="Shatkay H."/>
            <person name="Dew I."/>
            <person name="Miller J.R."/>
            <person name="Flanigan M.J."/>
            <person name="Edwards N.J."/>
            <person name="Bolanos R."/>
            <person name="Fasulo D."/>
            <person name="Halldorsson B.V."/>
            <person name="Hannenhalli S."/>
            <person name="Turner R."/>
            <person name="Yooseph S."/>
            <person name="Lu F."/>
            <person name="Nusskern D.R."/>
            <person name="Shue B.C."/>
            <person name="Zheng X.H."/>
            <person name="Zhong F."/>
            <person name="Delcher A.L."/>
            <person name="Huson D.H."/>
            <person name="Kravitz S.A."/>
            <person name="Mouchard L."/>
            <person name="Reinert K."/>
            <person name="Remington K.A."/>
            <person name="Clark A.G."/>
            <person name="Waterman M.S."/>
            <person name="Eichler E.E."/>
            <person name="Adams M.D."/>
            <person name="Hunkapiller M.W."/>
            <person name="Myers E.W."/>
            <person name="Venter J.C."/>
        </authorList>
    </citation>
    <scope>NUCLEOTIDE SEQUENCE [LARGE SCALE GENOMIC DNA]</scope>
</reference>
<reference key="9">
    <citation type="journal article" date="2004" name="Genome Res.">
        <title>The status, quality, and expansion of the NIH full-length cDNA project: the Mammalian Gene Collection (MGC).</title>
        <authorList>
            <consortium name="The MGC Project Team"/>
        </authorList>
    </citation>
    <scope>NUCLEOTIDE SEQUENCE [LARGE SCALE MRNA] (ISOFORM 2)</scope>
</reference>
<reference key="10">
    <citation type="journal article" date="1997" name="Proc. Natl. Acad. Sci. U.S.A.">
        <title>KvLQT1, a voltage-gated potassium channel responsible for human cardiac arrhythmias.</title>
        <authorList>
            <person name="Yang W.-P."/>
            <person name="Levesque P.C."/>
            <person name="Little W.A."/>
            <person name="Conder M.L."/>
            <person name="Shalaby F.Y."/>
            <person name="Blanar M.A."/>
        </authorList>
    </citation>
    <scope>NUCLEOTIDE SEQUENCE [MRNA] OF 1-129</scope>
    <scope>FUNCTION</scope>
    <scope>TRANSPORTER ACTIVITY</scope>
</reference>
<reference key="11">
    <citation type="journal article" date="1996" name="Nature">
        <title>Coassembly of K(V)LQT1 and minK (IsK) proteins to form cardiac I(Ks) potassium channel.</title>
        <authorList>
            <person name="Sanguinetti M.C."/>
            <person name="Curran M.E."/>
            <person name="Zou A."/>
            <person name="Shen J."/>
            <person name="Spector P.S."/>
            <person name="Atkinson D.L."/>
            <person name="Keating M.T."/>
        </authorList>
    </citation>
    <scope>NUCLEOTIDE SEQUENCE [MRNA] OF 107-676</scope>
    <scope>FUNCTION</scope>
    <source>
        <tissue>Pancreas</tissue>
    </source>
</reference>
<reference key="12">
    <citation type="journal article" date="1996" name="Nat. Genet.">
        <title>Positional cloning of a novel potassium channel gene: KVLQT1 mutations cause cardiac arrhythmias.</title>
        <authorList>
            <person name="Wang Q."/>
            <person name="Curran M.E."/>
            <person name="Splawski I."/>
            <person name="Burn T.C."/>
            <person name="Millholland J.M."/>
            <person name="Vanraay T.J."/>
            <person name="Shen J."/>
            <person name="Timothy K.W."/>
            <person name="Vincent G.M."/>
            <person name="de Jager T."/>
            <person name="Schwartz P.J."/>
            <person name="Towbin J.A."/>
            <person name="Moss A.J."/>
            <person name="Atkinson D.L."/>
            <person name="Landes G.M."/>
            <person name="Connors T.D."/>
            <person name="Keating M.T."/>
        </authorList>
    </citation>
    <scope>NUCLEOTIDE SEQUENCE [MRNA] OF 130-676</scope>
</reference>
<reference key="13">
    <citation type="journal article" date="2000" name="EMBO J.">
        <title>A recessive C-terminal Jervell and Lange-Nielsen mutation of the KCNQ1 channel impairs subunit assembly.</title>
        <authorList>
            <person name="Schmitt N."/>
            <person name="Schwarz M."/>
            <person name="Peretz A."/>
            <person name="Abitbol I."/>
            <person name="Attali B."/>
            <person name="Pongs O."/>
        </authorList>
    </citation>
    <scope>IDENTIFICATION OF C-TERMINAL ASSEMBLY DOMAIN</scope>
</reference>
<reference key="14">
    <citation type="journal article" date="2000" name="EMBO J.">
        <title>KCNE2 confers background current characteristics to the cardiac KCNQ1 potassium channel.</title>
        <authorList>
            <person name="Tinel N."/>
            <person name="Diochot S."/>
            <person name="Borsotto M."/>
            <person name="Lazdunski M."/>
            <person name="Barhanin J."/>
        </authorList>
    </citation>
    <scope>INTERACTION WITH KCNE2</scope>
    <scope>FUNCTION</scope>
    <scope>TRANSPORTER ACTIVITY</scope>
</reference>
<reference key="15">
    <citation type="journal article" date="2000" name="J. Physiol. (Lond.)">
        <title>Inhibition of KCNQ1-4 potassium channels expressed in mammalian cells via M1 muscarinic acetylcholine receptors.</title>
        <authorList>
            <person name="Selyanko A.A."/>
            <person name="Hadley J.K."/>
            <person name="Wood I.C."/>
            <person name="Abogadie F.C."/>
            <person name="Jentsch T.J."/>
            <person name="Brown D.A."/>
        </authorList>
    </citation>
    <scope>FUNCTION</scope>
</reference>
<reference key="16">
    <citation type="journal article" date="2000" name="Nature">
        <title>A constitutively open potassium channel formed by KCNQ1 and KCNE3.</title>
        <authorList>
            <person name="Schroeder B.C."/>
            <person name="Waldegger S."/>
            <person name="Fehr S."/>
            <person name="Bleich M."/>
            <person name="Warth R."/>
            <person name="Greger R."/>
            <person name="Jentsch T.J."/>
        </authorList>
    </citation>
    <scope>FUNCTION</scope>
    <scope>SUBCELLULAR LOCATION</scope>
    <scope>TRANSPORTER ACTIVITY</scope>
</reference>
<reference key="17">
    <citation type="journal article" date="2002" name="Biophys. J.">
        <title>KCNE5 induces time- and voltage-dependent modulation of the KCNQ1 current.</title>
        <authorList>
            <person name="Angelo K."/>
            <person name="Jespersen T."/>
            <person name="Grunnet M."/>
            <person name="Nielsen M.S."/>
            <person name="Klaerke D.A."/>
            <person name="Olesen S.P."/>
        </authorList>
    </citation>
    <scope>FUNCTION</scope>
</reference>
<reference key="18">
    <citation type="journal article" date="2002" name="Science">
        <title>Requirement of a macromolecular signaling complex for beta adrenergic receptor modulation of the KCNQ1-KCNE1 potassium channel.</title>
        <authorList>
            <person name="Marx S.O."/>
            <person name="Kurokawa J."/>
            <person name="Reiken S."/>
            <person name="Motoike H."/>
            <person name="D'Armiento J."/>
            <person name="Marks A.R."/>
            <person name="Kass R.S."/>
        </authorList>
    </citation>
    <scope>INTERACTION WITH AKAP9</scope>
    <scope>PHOSPHORYLATION AT SER-27</scope>
    <scope>CHARACTERIZATION OF VARIANT LQT1 ASP-589</scope>
    <scope>MUTAGENESIS OF SER-27; LEU-602 AND ILE-609</scope>
</reference>
<reference key="19">
    <citation type="journal article" date="2006" name="Circ. Res.">
        <title>Calmodulin is essential for cardiac IKS channel gating and assembly: impaired function in long-QT mutations.</title>
        <authorList>
            <person name="Shamgar L."/>
            <person name="Ma L."/>
            <person name="Schmitt N."/>
            <person name="Haitin Y."/>
            <person name="Peretz A."/>
            <person name="Wiener R."/>
            <person name="Hirsch J."/>
            <person name="Pongs O."/>
            <person name="Attali B."/>
        </authorList>
    </citation>
    <scope>INTERACTION WITH CALM</scope>
    <scope>ACTIVITY REGULATION</scope>
    <scope>DOMAIN</scope>
    <scope>CHARACTERIZATION OF VARIANTS LQT1 TRP-366; PRO-366; THR-371; PRO-373; ARG-392 AND ASN-393</scope>
</reference>
<reference key="20">
    <citation type="journal article" date="2009" name="J. Gen. Physiol.">
        <title>Distinct subdomains of the KCNQ1 S6 segment determine channel modulation by different KCNE subunits.</title>
        <authorList>
            <person name="Vanoye C.G."/>
            <person name="Welch R.C."/>
            <person name="Daniels M.A."/>
            <person name="Manderfield L.J."/>
            <person name="Tapper A.R."/>
            <person name="Sanders C.R."/>
            <person name="George A.L. Jr."/>
        </authorList>
    </citation>
    <scope>FUNCTION</scope>
    <scope>DOMAIN</scope>
    <scope>INTERACTION WITH KCNE4</scope>
    <scope>MUTAGENESIS OF VAL-324; LYS-326; THR-327; ILE-328; SER-338 AND PHE-340</scope>
</reference>
<reference key="21">
    <citation type="journal article" date="2010" name="J. Cell. Physiol.">
        <title>Impact of KCNE subunits on KCNQ1 (Kv7.1) channel membrane surface targeting.</title>
        <authorList>
            <person name="Roura-Ferrer M."/>
            <person name="Sole L."/>
            <person name="Oliveras A."/>
            <person name="Dahan R."/>
            <person name="Bielanska J."/>
            <person name="Villarroel A."/>
            <person name="Comes N."/>
            <person name="Felipe A."/>
        </authorList>
    </citation>
    <scope>SUBCELLULAR LOCATION</scope>
    <scope>INTERACTION WITH KCNE1; KCNE2; KCNE3; KCNE4 AND KCNE5</scope>
</reference>
<reference key="22">
    <citation type="journal article" date="2011" name="Am. J. Physiol.">
        <title>Kv7.1 surface expression is regulated by epithelial cell polarization.</title>
        <authorList>
            <person name="Andersen M.N."/>
            <person name="Olesen S.P."/>
            <person name="Rasmussen H.B."/>
        </authorList>
    </citation>
    <scope>SUBCELLULAR LOCATION</scope>
</reference>
<reference key="23">
    <citation type="journal article" date="2012" name="Heart Rhythm">
        <title>Deubiquitylating enzyme USP2 counteracts Nedd4-2-mediated downregulation of KCNQ1 potassium channels.</title>
        <authorList>
            <person name="Krzystanek K."/>
            <person name="Rasmussen H.B."/>
            <person name="Grunnet M."/>
            <person name="Staub O."/>
            <person name="Olesen S.P."/>
            <person name="Abriel H."/>
            <person name="Jespersen T."/>
        </authorList>
    </citation>
    <scope>INTERACTION WITH NEDD4L AND USP2</scope>
    <scope>UBIQUITINATED</scope>
    <scope>DEUBIQUITINATED</scope>
    <scope>SUBCELLULAR LOCATION</scope>
</reference>
<reference key="24">
    <citation type="journal article" date="2013" name="J. Physiol. (Lond.)">
        <title>Oestrogen promotes KCNQ1 potassium channel endocytosis and postendocytic trafficking in colonic epithelium.</title>
        <authorList>
            <person name="Rapetti-Mauss R."/>
            <person name="O'Mahony F."/>
            <person name="Sepulveda F.V."/>
            <person name="Urbach V."/>
            <person name="Harvey B.J."/>
        </authorList>
    </citation>
    <scope>INTERACTION WITH AP2M1 AND NEDD4L</scope>
    <scope>SUBCELLULAR LOCATION</scope>
    <scope>FUNCTION</scope>
</reference>
<reference key="25">
    <citation type="journal article" date="2014" name="Arterioscler. Thromb. Vasc. Biol.">
        <title>Functional assembly of Kv7.1/Kv7.5 channels with emerging properties on vascular muscle physiology.</title>
        <authorList>
            <person name="Oliveras A."/>
            <person name="Roura-Ferrer M."/>
            <person name="Sole L."/>
            <person name="de la Cruz A."/>
            <person name="Prieto A."/>
            <person name="Etxebarria A."/>
            <person name="Manils J."/>
            <person name="Morales-Cano D."/>
            <person name="Condom E."/>
            <person name="Soler C."/>
            <person name="Cogolludo A."/>
            <person name="Valenzuela C."/>
            <person name="Villarroel A."/>
            <person name="Comes N."/>
            <person name="Felipe A."/>
        </authorList>
    </citation>
    <scope>INTERACTION WITH KCNQ5</scope>
    <scope>SUBCELLULAR LOCATION</scope>
    <scope>FUNCTION</scope>
</reference>
<reference key="26">
    <citation type="journal article" date="2014" name="Sci. Signal.">
        <title>KCNQ1, KCNE2, and Na+-coupled solute transporters form reciprocally regulating complexes that affect neuronal excitability.</title>
        <authorList>
            <person name="Abbott G.W."/>
            <person name="Tai K.K."/>
            <person name="Neverisky D.L."/>
            <person name="Hansler A."/>
            <person name="Hu Z."/>
            <person name="Roepke T.K."/>
            <person name="Lerner D.J."/>
            <person name="Chen Q."/>
            <person name="Liu L."/>
            <person name="Zupan B."/>
            <person name="Toth M."/>
            <person name="Haynes R."/>
            <person name="Huang X."/>
            <person name="Demirbas D."/>
            <person name="Buccafusca R."/>
            <person name="Gross S.S."/>
            <person name="Kanda V.A."/>
            <person name="Berry G.T."/>
        </authorList>
    </citation>
    <scope>FUNCTION</scope>
    <scope>INTERACTION WITH SLC5A3</scope>
    <scope>MUTAGENESIS OF ARG-231</scope>
</reference>
<reference key="27">
    <citation type="journal article" date="2017" name="Proc. Natl. Acad. Sci. U.S.A.">
        <title>Competition of calcified calmodulin N lobe and PIP2 to an LQT mutation site in Kv7.1 channel.</title>
        <authorList>
            <person name="Tobelaim W.S."/>
            <person name="Dvir M."/>
            <person name="Lebel G."/>
            <person name="Cui M."/>
            <person name="Buki T."/>
            <person name="Peretz A."/>
            <person name="Marom M."/>
            <person name="Haitin Y."/>
            <person name="Logothetis D.E."/>
            <person name="Hirsch J.A."/>
            <person name="Attali B."/>
        </authorList>
    </citation>
    <scope>INTERACTION WITH CALM</scope>
    <scope>ACTIVITY REGULATION</scope>
    <scope>DOMAIN</scope>
    <scope>MUTAGENESIS OF LYS-526 AND LYS-527</scope>
    <scope>CHARACTERIZATION OF VARIANT LQT1 GLU-526</scope>
</reference>
<reference key="28">
    <citation type="journal article" date="2008" name="J. Biol. Chem.">
        <title>The KCNQ1 (Kv7.1) COOH terminus, a multitiered scaffold for subunit assembly and protein interaction.</title>
        <authorList>
            <person name="Wiener R."/>
            <person name="Haitin Y."/>
            <person name="Shamgar L."/>
            <person name="Fernandez-Alonso M.C."/>
            <person name="Martos A."/>
            <person name="Chomsky-Hecht O."/>
            <person name="Rivas G."/>
            <person name="Attali B."/>
            <person name="Hirsch J.A."/>
        </authorList>
    </citation>
    <scope>X-RAY CRYSTALLOGRAPHY (2.0 ANGSTROMS) OF 574-622</scope>
    <scope>INTERACTION WITH CALM</scope>
    <scope>SUBCELLULAR LOCATION</scope>
    <scope>MUTAGENESIS OF GLY-589; ALA-590 AND ASN-593</scope>
    <scope>CHARACTERIZATION OF VARIANT LQT1 ASP-589</scope>
    <scope>TETRAMERIZATION</scope>
</reference>
<reference key="29">
    <citation type="journal article" date="2009" name="Protein Sci.">
        <title>Crystal structure of a trimeric form of the K(V)7.1 (KCNQ1) A-domain tail coiled-coil reveals structural plasticity and context dependent changes in a putative coiled-coil trimerization motif.</title>
        <authorList>
            <person name="Xu Q."/>
            <person name="Minor D.L. Jr."/>
        </authorList>
    </citation>
    <scope>X-RAY CRYSTALLOGRAPHY (1.7 ANGSTROMS) OF 583-611</scope>
    <scope>SUBUNIT</scope>
    <scope>COILED-COIL</scope>
</reference>
<reference evidence="84 85" key="30">
    <citation type="journal article" date="2014" name="Structure">
        <title>Structural basis of a Kv7.1 potassium channel gating module: studies of the intracellular c-terminal domain in complex with calmodulin.</title>
        <authorList>
            <person name="Sachyani D."/>
            <person name="Dvir M."/>
            <person name="Strulovich R."/>
            <person name="Tria G."/>
            <person name="Tobelaim W."/>
            <person name="Peretz A."/>
            <person name="Pongs O."/>
            <person name="Svergun D."/>
            <person name="Attali B."/>
            <person name="Hirsch J.A."/>
        </authorList>
    </citation>
    <scope>X-RAY CRYSTALLOGRAPHY (2.86 ANGSTROMS) OF 352-539 IN COMPLEX WITH CALM AND CALCIUM</scope>
    <scope>FUNCTION</scope>
    <scope>INTERACTION WITH CALM</scope>
    <scope>DOMAIN</scope>
    <scope>MUTAGENESIS OF ILE-375 AND VAL-516</scope>
</reference>
<reference evidence="86 87 88" key="31">
    <citation type="journal article" date="2020" name="Cell">
        <title>Structural Basis of Human KCNQ1 Modulation and Gating.</title>
        <authorList>
            <person name="Sun J."/>
            <person name="MacKinnon R."/>
        </authorList>
    </citation>
    <scope>STRUCTURE BY ELECTRON MICROSCOPY (3.10 ANGSTROMS) OF 76-620 IN COMPLEX WITH PHOSPHATIDYLINOSITOL 4,5-BISPHOSPHATE; CALM1 AND KCNE3</scope>
    <scope>INTERACTION WITH CALM1 AND KCNE3</scope>
    <scope>ACTIVITY REGULATION</scope>
    <scope>DOMAIN</scope>
</reference>
<reference key="32">
    <citation type="journal article" date="1997" name="Circulation">
        <title>Dominant-negative KvLQT1 mutations underlie the LQT1 form of long QT syndrome.</title>
        <authorList>
            <person name="Shalaby F.Y."/>
            <person name="Levesque P.C."/>
            <person name="Yang W.-P."/>
            <person name="Little W.A."/>
            <person name="Conder M.L."/>
            <person name="Jenkins-West T."/>
            <person name="Blanar M.A."/>
        </authorList>
    </citation>
    <scope>CHARACTERIZATION OF VARIANTS LQT1 PRO-178; PHE-273 AND ILE-312</scope>
</reference>
<reference key="33">
    <citation type="journal article" date="1999" name="Am. J. Med. Genet.">
        <title>Jervell and Lange-Nielsen syndrome: a Norwegian perspective.</title>
        <authorList>
            <person name="Tranebjaerg L."/>
            <person name="Bathen J."/>
            <person name="Tyson J."/>
            <person name="Bitner-Glindzicz M."/>
        </authorList>
    </citation>
    <scope>REVIEW ON VARIANTS</scope>
</reference>
<reference key="34">
    <citation type="journal article" date="1996" name="Hum. Mol. Genet.">
        <title>KVLQT1 mutations in three families with familial or sporadic long QT syndrome.</title>
        <authorList>
            <person name="Russell M.W."/>
            <person name="Dick M. II"/>
            <person name="Collins F.S."/>
            <person name="Brody L.C."/>
        </authorList>
    </citation>
    <scope>VARIANTS LQT1 SER-314 AND VAL-341</scope>
</reference>
<reference key="35">
    <citation type="journal article" date="1996" name="J. Med. Genet.">
        <title>Evidence of a long QT founder gene with varying phenotypic expression in South African families.</title>
        <authorList>
            <person name="de Jager T."/>
            <person name="Corbett C.H."/>
            <person name="Badenhorst J.C."/>
            <person name="Brink P.A."/>
            <person name="Corfield V.A."/>
        </authorList>
    </citation>
    <scope>VARIANT LQT1 VAL-341</scope>
</reference>
<reference key="36">
    <citation type="journal article" date="1997" name="Am. J. Hum. Genet. Suppl.">
        <title>A severe form of long-QT syndrome caused by KVLQT1 mutations located in cis (Abstract #2051).</title>
        <authorList>
            <person name="Wedekind H."/>
            <person name="Schulze-Bahr E."/>
            <person name="Lange S."/>
            <person name="Rubie C."/>
            <person name="Haverkamp W."/>
            <person name="Hoerdt M."/>
            <person name="Borggrefe M."/>
            <person name="Assmann G."/>
            <person name="Breithardt G."/>
            <person name="Funke H."/>
        </authorList>
    </citation>
    <scope>VARIANTS LQT1 MET-254 AND MET-417</scope>
</reference>
<reference key="37">
    <citation type="journal article" date="1997" name="Circulation">
        <title>Four novel KVLQT1 and four novel HERG mutations in familial long-QT syndrome.</title>
        <authorList>
            <person name="Tanaka T."/>
            <person name="Nagai R."/>
            <person name="Tomoike H."/>
            <person name="Takata S."/>
            <person name="Yano K."/>
            <person name="Yabuta K."/>
            <person name="Haneda N."/>
            <person name="Nakano O."/>
            <person name="Shibata A."/>
            <person name="Sawayama T."/>
            <person name="Kasai H."/>
            <person name="Yazaki Y."/>
            <person name="Nakamura Y."/>
        </authorList>
    </citation>
    <scope>VARIANTS LQT1 THR-178; MET-313; ARG-325 AND PRO-366</scope>
</reference>
<reference key="38">
    <citation type="journal article" date="1997" name="Circulation">
        <title>KVLQT1 C-terminal missense mutation causes a forme fruste long-QT syndrome.</title>
        <authorList>
            <person name="Donger C."/>
            <person name="Denjoy I."/>
            <person name="Berthet M."/>
            <person name="Neyroud N."/>
            <person name="Cruaud C."/>
            <person name="Bennaceur M."/>
            <person name="Chivoret G."/>
            <person name="Schwartz K."/>
            <person name="Coumel P."/>
            <person name="Guicheney P."/>
        </authorList>
    </citation>
    <scope>VARIANTS LQT1 ARG-168; CYS-174; GLN-190; MET-254; LYS-261; ASP-269; ARG-309; SER-314; SER-315; ALA-320; ARG-325; VAL-341; PHE-342; VAL-344; THR-371 AND CYS-555</scope>
</reference>
<reference key="39">
    <citation type="journal article" date="1997" name="Hum. Genet.">
        <title>The long QT syndrome: a novel missense mutation in the S6 region of the KVLQT1 gene.</title>
        <authorList>
            <person name="van den Berg M.H."/>
            <person name="Wilde A.A.M."/>
            <person name="Robles de Medina E.O."/>
            <person name="Meyer H."/>
            <person name="Geelen J.L.M.C."/>
            <person name="Jongbloed R.J.E."/>
            <person name="Wellens H.J."/>
            <person name="Geraedts J.P.M."/>
        </authorList>
    </citation>
    <scope>VARIANT LQT1 ARG-216</scope>
</reference>
<reference key="40">
    <citation type="journal article" date="1997" name="Hum. Mol. Genet.">
        <title>Pathophysiological mechanisms of dominant and recessive KVLQT1 K+ channel mutations found in inherited cardiac arrhythmias.</title>
        <authorList>
            <person name="Wollnik B."/>
            <person name="Schroeder B.C."/>
            <person name="Kubisch C."/>
            <person name="Esperer H.D."/>
            <person name="Wieacker P."/>
            <person name="Jentsch T.J."/>
        </authorList>
    </citation>
    <scope>VARIANT LQT1 ASN-317</scope>
</reference>
<reference key="41">
    <citation type="journal article" date="1998" name="Circulation">
        <title>New mutations in the KVLQT1 potassium channel that cause long-QT syndrome.</title>
        <authorList>
            <person name="Li H."/>
            <person name="Chen Q."/>
            <person name="Moss A.J."/>
            <person name="Robinson J.L."/>
            <person name="Goytia V."/>
            <person name="Perry J.C."/>
            <person name="Vincent G.M."/>
            <person name="Priori S.G."/>
            <person name="Lehmann M.H."/>
            <person name="Denfield S.W."/>
            <person name="Duff D."/>
            <person name="Kaine S."/>
            <person name="Shimizu W."/>
            <person name="Schwartz P.J."/>
            <person name="Wang Q."/>
            <person name="Towbin J.A."/>
        </authorList>
    </citation>
    <scope>VARIANT LQT1 VAL-341</scope>
</reference>
<reference key="42">
    <citation type="journal article" date="1998" name="Circulation">
        <title>A recessive variant of the Romano-Ward Long-QT syndrome?</title>
        <authorList>
            <person name="Priori S.G."/>
            <person name="Schwartz P.J."/>
            <person name="Napolitano C."/>
            <person name="Bianchi L."/>
            <person name="Dennis A.T."/>
            <person name="de Fusco M."/>
            <person name="Brown A.M."/>
            <person name="Casari G."/>
        </authorList>
    </citation>
    <scope>VARIANT LQT1 THR-300</scope>
</reference>
<reference key="43">
    <citation type="journal article" date="1998" name="Eur. J. Hum. Genet.">
        <title>Heterozygous mutation in the pore of potassium channel gene KvLQT1 causes an apparently normal phenotype in long QT syndrome.</title>
        <authorList>
            <person name="Neyroud N."/>
            <person name="Denjoy I."/>
            <person name="Donger C."/>
            <person name="Gary F."/>
            <person name="Villain E."/>
            <person name="Leenhardt A."/>
            <person name="Benali K."/>
            <person name="Schwartz K."/>
            <person name="Coumel P."/>
            <person name="Guicheney P."/>
        </authorList>
    </citation>
    <scope>VARIANT JLNS1 SER-305</scope>
</reference>
<reference key="44">
    <citation type="journal article" date="1998" name="Genomics">
        <title>Genomic structure of three long QT syndrome genes: KVLQT1, HERG, and KCNE1.</title>
        <authorList>
            <person name="Splawski I."/>
            <person name="Shen J."/>
            <person name="Timothy K.W."/>
            <person name="Vincent G.M."/>
            <person name="Lehmann M.H."/>
            <person name="Keating M.T."/>
        </authorList>
    </citation>
    <scope>VARIANTS LQT1 ARG-168; SER-314; CYS-315; ASN-318; PRO-353 AND TRP-366</scope>
</reference>
<reference key="45">
    <citation type="journal article" date="1998" name="Hum. Mutat.">
        <title>Molecular genetics of the long QT syndrome: two novel mutations of the KVLQT1 gene and phenotypic expression of the mutant gene in a large kindred.</title>
        <authorList>
            <person name="Saarinen K."/>
            <person name="Swan H."/>
            <person name="Kainulainen K."/>
            <person name="Toivonen L."/>
            <person name="Viitasalo M."/>
            <person name="Kontula K."/>
        </authorList>
    </citation>
    <scope>VARIANTS LQT1 ILE-311 AND ASN-317</scope>
</reference>
<reference key="46">
    <citation type="journal article" date="1998" name="Pediatr. Res.">
        <title>A novel mutation in KVLQT1 is the molecular basis of inherited long QT syndrome in a near-drowning patient's family.</title>
        <authorList>
            <person name="Ackerman M.J."/>
            <person name="Schroeder J.J."/>
            <person name="Berry R."/>
            <person name="Schaid D.J."/>
            <person name="Porter C.-B.J."/>
            <person name="Michels V.V."/>
            <person name="Thibodeau S.N."/>
        </authorList>
    </citation>
    <scope>VARIANT LQT1 PHE-339 DEL</scope>
</reference>
<reference key="47">
    <citation type="journal article" date="1999" name="Am. J. Hum. Genet.">
        <title>Mutations in a dominant-negative isoform correlate with phenotype in inherited cardiac arrhythmias.</title>
        <authorList>
            <person name="Mohammad-Panah R."/>
            <person name="Demolombe S."/>
            <person name="Neyroud N."/>
            <person name="Guicheney P."/>
            <person name="Kyndt F."/>
            <person name="van den Hoff M."/>
            <person name="Baro I."/>
            <person name="Escande D."/>
        </authorList>
    </citation>
    <scope>VARIANT JLNS1 HIS-243</scope>
</reference>
<reference key="48">
    <citation type="journal article" date="1999" name="Arch. Mal. Coeur Vaiss.">
        <title>Congenital long QT syndrome. The value of genetics in prognostic evaluation.</title>
        <authorList>
            <person name="Denjoy I."/>
            <person name="Lupoglazoff J.M."/>
            <person name="Donger C."/>
            <person name="Berthet M."/>
            <person name="Richard P."/>
            <person name="Neyroud N."/>
            <person name="Villain E."/>
            <person name="Lucet V."/>
            <person name="Coumel P."/>
            <person name="Guicheney P."/>
        </authorList>
    </citation>
    <scope>VARIANT LQT1 HIS-174</scope>
</reference>
<reference key="49">
    <citation type="journal article" date="1999" name="Circulation">
        <title>Low penetrance in the long-QT syndrome: clinical impact.</title>
        <authorList>
            <person name="Priori S.G."/>
            <person name="Napolitano C."/>
            <person name="Schwartz P.J."/>
        </authorList>
    </citation>
    <scope>VARIANTS LQT1 LEU-225; CYS-281 AND CYS-315</scope>
</reference>
<reference key="50">
    <citation type="journal article" date="1999" name="Eur. J. Hum. Genet.">
        <title>Recessive Romano-Ward syndrome associated with compound heterozygosity for two mutations in the KVLQT1 gene.</title>
        <authorList>
            <person name="Larsen L.A."/>
            <person name="Fosdal I."/>
            <person name="Andersen P.S."/>
            <person name="Kanters J.K."/>
            <person name="Vuust J."/>
            <person name="Wettrell G."/>
            <person name="Christiansen M."/>
        </authorList>
    </citation>
    <scope>VARIANT LQT1 THR-525</scope>
</reference>
<reference key="51">
    <citation type="journal article" date="1999" name="Hum. Mutat.">
        <title>Novel KCNQ1 and HERG missense mutations in Dutch long-QT families.</title>
        <authorList>
            <person name="Jongbloed R.J.E."/>
            <person name="Wilde A.A.M."/>
            <person name="Geelen J.L.M.C."/>
            <person name="Doevendans P."/>
            <person name="Schaap C."/>
            <person name="van Langen I."/>
            <person name="van Tintelen J.P."/>
            <person name="Cobben J.M."/>
            <person name="Beaufort-Krol G.C.M."/>
            <person name="Geraedts J.P.M."/>
            <person name="Smeets H.J.M."/>
        </authorList>
    </citation>
    <scope>VARIANTS LQT1 SER-184; ARG-189; SER-314; SER-315; ARG-345; PRO-373 AND ARG-392</scope>
</reference>
<reference key="52">
    <citation type="journal article" date="1999" name="Hum. Mutat.">
        <title>High-throughput single-strand conformation polymorphism analysis by automated capillary electrophoresis: robust multiplex analysis and pattern-based identification of allelic variants.</title>
        <authorList>
            <person name="Larsen L.A."/>
            <person name="Christiansen M."/>
            <person name="Vuust J."/>
            <person name="Andersen P.S."/>
        </authorList>
    </citation>
    <scope>VARIANT LQT1 CYS-157</scope>
</reference>
<reference key="53">
    <citation type="journal article" date="1999" name="J. Biol. Chem.">
        <title>Long QT syndrome-associated mutations in the S4-S5 linker of KvLQT1 potassium channels modify gating and interaction with minK subunits.</title>
        <authorList>
            <person name="Franqueza L."/>
            <person name="Lin M."/>
            <person name="Shen J."/>
            <person name="Keating M.T."/>
            <person name="Sanguinetti M.C."/>
        </authorList>
    </citation>
    <scope>CHARACTERIZATION OF VARIANTS LQT1 CYS-243; ARG-248 AND LYS-261</scope>
</reference>
<reference key="54">
    <citation type="journal article" date="1999" name="J. Biol. Chem.">
        <authorList>
            <person name="Franqueza L."/>
            <person name="Lin M."/>
            <person name="Shen J."/>
            <person name="Keating M.T."/>
            <person name="Sanguinetti M.C."/>
        </authorList>
    </citation>
    <scope>ERRATUM OF PUBMED:10409658</scope>
</reference>
<reference key="55">
    <citation type="journal article" date="2000" name="Cardiovasc. Res.">
        <title>Novel mutations in KvLQT1 that affect Iks activation through interactions with Isk.</title>
        <authorList>
            <person name="Chouabe C."/>
            <person name="Neyroud N."/>
            <person name="Richard P."/>
            <person name="Denjoy I."/>
            <person name="Hainque B."/>
            <person name="Romey G."/>
            <person name="Drici M.-D."/>
            <person name="Guicheney P."/>
            <person name="Barhanin J."/>
        </authorList>
    </citation>
    <scope>VARIANTS LQT1 GLN-190; TRP-533 AND TRP-539</scope>
    <scope>VARIANT JLNS1 HIS-243</scope>
    <scope>CHARACTERIZATION OF VARIANTS LQT1 GLN-190; TRP-533 AND TRP-539</scope>
    <scope>CHARACTERIZATION OF VARIANT JLNS1 HIS-243</scope>
</reference>
<reference key="56">
    <citation type="journal article" date="2000" name="Circulation">
        <title>Spectrum of mutations in long-QT syndrome genes. KVLQT1, HERG, SCN5A, KCNE1, and KCNE2.</title>
        <authorList>
            <person name="Splawski I."/>
            <person name="Shen J."/>
            <person name="Timothy K.W."/>
            <person name="Lehmann M.H."/>
            <person name="Priori S.G."/>
            <person name="Robinson J.L."/>
            <person name="Moss A.J."/>
            <person name="Schwartz P.J."/>
            <person name="Towbin J.A."/>
            <person name="Vincent G.M."/>
            <person name="Keating M.T."/>
        </authorList>
    </citation>
    <scope>VARIANTS LQT1 CYS-111; LYS-160; ARG-168; HIS-174; SER-179; SER-184; PRO-194; LEU-225; CYS-243; ARG-248; MET-254; PRO-266; ASP-269; PHE-273; ILE-310; ILE-312; ARG-325; GLU-341; VAL-341; TRP-349; GLN-366; ILE-391; ARG-448; PHE-566; CYS-583 AND GLN-594</scope>
</reference>
<reference key="57">
    <citation type="journal article" date="2002" name="Hum. Mutat.">
        <title>KCNQ1 and KCNH2 mutations associated with long QT syndrome in a Chinese population.</title>
        <authorList>
            <person name="Liu W."/>
            <person name="Yang J."/>
            <person name="Hu D."/>
            <person name="Kang C."/>
            <person name="Li C."/>
            <person name="Zhang S."/>
            <person name="Li P."/>
            <person name="Chen Z."/>
            <person name="Qin X."/>
            <person name="Ying K."/>
            <person name="Li Y."/>
            <person name="Li Y."/>
            <person name="Li Z."/>
            <person name="Cheng X."/>
            <person name="Li L."/>
            <person name="Qi Y."/>
            <person name="Chen S."/>
            <person name="Wang Q."/>
        </authorList>
    </citation>
    <scope>VARIANTS LQT1 PRO-191; SER-275; LEU-277 AND VAL-306</scope>
</reference>
<reference key="58">
    <citation type="journal article" date="2003" name="Science">
        <title>KCNQ1 gain-of-function mutation in familial atrial fibrillation.</title>
        <authorList>
            <person name="Chen Y.-H."/>
            <person name="Xu S.-J."/>
            <person name="Bendahhou S."/>
            <person name="Wang X.-L."/>
            <person name="Wang Y."/>
            <person name="Xu W.-Y."/>
            <person name="Jin H.-W."/>
            <person name="Sun H."/>
            <person name="Su X.-Y."/>
            <person name="Zhuang Q.-N."/>
            <person name="Yang Y.-Q."/>
            <person name="Li Y.-B."/>
            <person name="Liu Y."/>
            <person name="Xu H.-J."/>
            <person name="Li X.-F."/>
            <person name="Ma N."/>
            <person name="Mou C.-P."/>
            <person name="Chen Z."/>
            <person name="Barhanin J."/>
            <person name="Huang W."/>
        </authorList>
    </citation>
    <scope>VARIANT ATFB3 GLY-140</scope>
</reference>
<reference key="59">
    <citation type="journal article" date="2004" name="Circulation">
        <title>Mutation in the KCNQ1 gene leading to the short QT-interval syndrome.</title>
        <authorList>
            <person name="Bellocq C."/>
            <person name="van Ginneken A.C.G."/>
            <person name="Bezzina C.R."/>
            <person name="Alders M."/>
            <person name="Escande D."/>
            <person name="Mannens M.M.A.M."/>
            <person name="Baro I."/>
            <person name="Wilde A.A.M."/>
        </authorList>
    </citation>
    <scope>VARIANT SQT2 LEU-307</scope>
    <scope>CHARACTERIZATION OF VARIANT SQT2 LEU-307</scope>
</reference>
<reference key="60">
    <citation type="journal article" date="2005" name="Heart Rhythm">
        <title>Compendium of cardiac channel mutations in 541 consecutive unrelated patients referred for long QT syndrome genetic testing.</title>
        <authorList>
            <person name="Tester D.J."/>
            <person name="Will M.L."/>
            <person name="Haglund C.M."/>
            <person name="Ackerman M.J."/>
        </authorList>
    </citation>
    <scope>VARIANTS LQT1 71-ALA--PRO-73 DEL; THR-73; GLY-115; TYR-122; ILE-133; PHE-136; LYS-160; ARG-168; CYS-174; GLN-190; PHE-204; LEU-225; ASN-235; ASN-242; CYS-243; MET-254; 254-VAL--PHE-256 DEL; CYS-259; LEU-259; ASP-261; PRO-266; SER-269; ASP-269; PHE-273; ARG-273; SER-276 DEL; LEU-277; HIS-278; LYS-290; ASP-292; CYS-293; VAL-302; ARG-304; SER-305; ILE-312; SER-314; ARG-314; ASP-314; CYS-315; ARG-316; ALA-322; PHE-339 DEL; VAL-341; SER-343; GLU-344; VAL-344; GLU-345; TRP-349; PRO-353; ARG-362; TRP-366; HIS-374; SER-380; TYR-389; TRP-452; GLY-524; GLU-526; TRP-539; LEU-546; CYS-555; HIS-555; TYR-566; SER-567; ARG-568; MET-587; THR-590; HIS-591; GLN-594; MET-619 AND SER-626</scope>
</reference>
<reference key="61">
    <citation type="journal article" date="2005" name="JAMA">
        <title>Genetic testing in the long QT syndrome: development and validation of an efficient approach to genotyping in clinical practice.</title>
        <authorList>
            <person name="Napolitano C."/>
            <person name="Priori S.G."/>
            <person name="Schwartz P.J."/>
            <person name="Bloise R."/>
            <person name="Ronchetti E."/>
            <person name="Nastoli J."/>
            <person name="Bottelli G."/>
            <person name="Cerrone M."/>
            <person name="Leonardi S."/>
        </authorList>
    </citation>
    <scope>VARIANTS LQT1 THR-46; PHE-137; LYS-146; ASP-173; PRO-174; TRP-190; PRO-192; HIS-202; MET-204; PHE-209; MET-215; HIS-231; PRO-239; LEU-254; ARG-258; ASN-258; VAL-262; ASP-272; TRP-277; GLU-280; GLU-287; THR-302; ASP-308; GLU-316; MET-322; ARG-343; LEU-343; PRO-349; ARG-350; SER-351; THR-360; ASP-372; MET-393; GLY-518; PRO-518; ASP-548; ALA-554; THR-567; LEU-573; HIS-583 AND ASP-586</scope>
</reference>
<reference key="62">
    <citation type="journal article" date="2006" name="Clin. Genet.">
        <title>Spectrum of pathogenic mutations and associated polymorphisms in a cohort of 44 unrelated patients with long QT syndrome.</title>
        <authorList>
            <person name="Millat G."/>
            <person name="Chevalier P."/>
            <person name="Restier-Miron L."/>
            <person name="Da Costa A."/>
            <person name="Bouvagnet P."/>
            <person name="Kugener B."/>
            <person name="Fayol L."/>
            <person name="Gonzalez Armengod C."/>
            <person name="Oddou B."/>
            <person name="Chanavat V."/>
            <person name="Froidefond E."/>
            <person name="Perraudin R."/>
            <person name="Rousson R."/>
            <person name="Rodriguez-Lafrasse C."/>
        </authorList>
    </citation>
    <scope>VARIANTS LQT1 CYS-231; PRO-243; CYS-259; HIS-259; PHE-273; SER-314; GLU-316; VAL-341; VAL-344 AND SER-626</scope>
</reference>
<reference key="63">
    <citation type="journal article" date="2008" name="BMC Med. Genet.">
        <title>Identification of a novel KCNQ1 mutation associated with both Jervell and Lange-Nielsen and Romano-Ward forms of long QT syndrome in a Chinese family.</title>
        <authorList>
            <person name="Zhang S."/>
            <person name="Yin K."/>
            <person name="Ren X."/>
            <person name="Wang P."/>
            <person name="Zhang S."/>
            <person name="Cheng L."/>
            <person name="Yang J."/>
            <person name="Liu J.Y."/>
            <person name="Liu M."/>
            <person name="Wang Q.K."/>
        </authorList>
    </citation>
    <scope>VARIANT JLNS1 MET-322</scope>
    <scope>VARIANT LQT1 MET-322</scope>
</reference>
<reference key="64">
    <citation type="journal article" date="2008" name="Circ. J.">
        <title>A novel mutation associated with Jervell and Lange-Nielsen syndrome in a Japanese family.</title>
        <authorList>
            <person name="Ohno S."/>
            <person name="Kubota T."/>
            <person name="Yoshida H."/>
            <person name="Tsuji K."/>
            <person name="Makiyama T."/>
            <person name="Yamada S."/>
            <person name="Kuga K."/>
            <person name="Yamaguchi I."/>
            <person name="Kita T."/>
            <person name="Horie M."/>
        </authorList>
    </citation>
    <scope>VARIANT JLNS1 PHE-248</scope>
    <scope>CHARACTERIZATION OF VARIANT JLNS1 PHE-248</scope>
</reference>
<reference key="65">
    <citation type="journal article" date="2008" name="Nat. Genet.">
        <title>Variants in KCNQ1 are associated with susceptibility to type 2 diabetes mellitus.</title>
        <authorList>
            <person name="Yasuda K."/>
            <person name="Miyake K."/>
            <person name="Horikawa Y."/>
            <person name="Hara K."/>
            <person name="Osawa H."/>
            <person name="Furuta H."/>
            <person name="Hirota Y."/>
            <person name="Mori H."/>
            <person name="Jonsson A."/>
            <person name="Sato Y."/>
            <person name="Yamagata K."/>
            <person name="Hinokio Y."/>
            <person name="Wang H.Y."/>
            <person name="Tanahashi T."/>
            <person name="Nakamura N."/>
            <person name="Oka Y."/>
            <person name="Iwasaki N."/>
            <person name="Iwamoto Y."/>
            <person name="Yamada Y."/>
            <person name="Seino Y."/>
            <person name="Maegawa H."/>
            <person name="Kashiwagi A."/>
            <person name="Takeda J."/>
            <person name="Maeda E."/>
            <person name="Shin H.D."/>
            <person name="Cho Y.M."/>
            <person name="Park K.S."/>
            <person name="Lee H.K."/>
            <person name="Ng M.C."/>
            <person name="Ma R.C."/>
            <person name="So W.Y."/>
            <person name="Chan J.C."/>
            <person name="Lyssenko V."/>
            <person name="Tuomi T."/>
            <person name="Nilsson P."/>
            <person name="Groop L."/>
            <person name="Kamatani N."/>
            <person name="Sekine A."/>
            <person name="Nakamura Y."/>
            <person name="Yamamoto K."/>
            <person name="Yoshida T."/>
            <person name="Tokunaga K."/>
            <person name="Itakura M."/>
            <person name="Makino H."/>
            <person name="Nanjo K."/>
            <person name="Kadowaki T."/>
            <person name="Kasuga M."/>
        </authorList>
    </citation>
    <scope>INVOLVEMENT IN T2D</scope>
</reference>
<reference key="66">
    <citation type="journal article" date="2008" name="Nat. Genet.">
        <title>SNPs in KCNQ1 are associated with susceptibility to type 2 diabetes in East Asian and European populations.</title>
        <authorList>
            <person name="Unoki H."/>
            <person name="Takahashi A."/>
            <person name="Kawaguchi T."/>
            <person name="Hara K."/>
            <person name="Horikoshi M."/>
            <person name="Andersen G."/>
            <person name="Ng D.P."/>
            <person name="Holmkvist J."/>
            <person name="Borch-Johnsen K."/>
            <person name="Jorgensen T."/>
            <person name="Sandbaek A."/>
            <person name="Lauritzen T."/>
            <person name="Hansen T."/>
            <person name="Nurbaya S."/>
            <person name="Tsunoda T."/>
            <person name="Kubo M."/>
            <person name="Babazono T."/>
            <person name="Hirose H."/>
            <person name="Hayashi M."/>
            <person name="Iwamoto Y."/>
            <person name="Kashiwagi A."/>
            <person name="Kaku K."/>
            <person name="Kawamori R."/>
            <person name="Tai E.S."/>
            <person name="Pedersen O."/>
            <person name="Kamatani N."/>
            <person name="Kadowaki T."/>
            <person name="Kikkawa R."/>
            <person name="Nakamura Y."/>
            <person name="Maeda S."/>
        </authorList>
    </citation>
    <scope>INVOLVEMENT IN T2D</scope>
</reference>
<reference key="67">
    <citation type="journal article" date="2014" name="Nature">
        <title>Sequence variants in SLC16A11 are a common risk factor for type 2 diabetes in Mexico.</title>
        <authorList>
            <consortium name="The SIGMA Type 2 Diabetes Consortium"/>
        </authorList>
    </citation>
    <scope>INVOLVEMENT IN T2D</scope>
</reference>
<reference key="68">
    <citation type="journal article" date="2009" name="Circ. Arrhythm. Electrophysiol.">
        <title>Biophysical properties of 9 KCNQ1 mutations associated with long-QT syndrome.</title>
        <authorList>
            <person name="Yang T."/>
            <person name="Chung S.K."/>
            <person name="Zhang W."/>
            <person name="Mullins J.G."/>
            <person name="McCulley C.H."/>
            <person name="Crawford J."/>
            <person name="MacCormick J."/>
            <person name="Eddy C.A."/>
            <person name="Shelling A.N."/>
            <person name="French J.K."/>
            <person name="Yang P."/>
            <person name="Skinner J.R."/>
            <person name="Roden D.M."/>
            <person name="Rees M.I."/>
        </authorList>
    </citation>
    <scope>VARIANTS LQT1 THR-46; ILE-265; SER-296; VAL-302; GLU-316; SER-339; GLY-360; TYR-455 AND LEU-546</scope>
    <scope>CHARACTERIZATION OF VARIANTS LQT1 THR-46; ILE-265; SER-296; VAL-302; GLU-316; SER-339; GLY-360; TYR-455 AND LEU-546</scope>
</reference>
<reference key="69">
    <citation type="journal article" date="2009" name="Heart Rhythm">
        <title>Spectrum and prevalence of mutations from the first 2,500 consecutive unrelated patients referred for the FAMILION long QT syndrome genetic test.</title>
        <authorList>
            <person name="Kapplinger J.D."/>
            <person name="Tester D.J."/>
            <person name="Salisbury B.A."/>
            <person name="Carr J.L."/>
            <person name="Harris-Kerr C."/>
            <person name="Pollevick G.D."/>
            <person name="Wilde A.A."/>
            <person name="Ackerman M.J."/>
        </authorList>
    </citation>
    <scope>VARIANTS LQT1 VAL-2; SER-7; THR-46; 64-PRO--PRO-70 DEL; PHE-66; THR-73; CYS-111; LEU-117; LEU-127; ILE-133; PRO-134; ALA-144; MET-153; MET-162; ARG-168; MET-172; CYS-174; HIS-174; THR-178; SER-179; HIS-184; ARG-186; GLN-190; LEU-190; TRP-195; VAL-198; ALA-199; MET-204; MET-215; MET-224; LEU-225; CYS-231; HIS-231; ASN-235; GLY-241; ASN-242; CYS-243; PRO-250; MET-254; CYS-259; LEU-259; VAL-262; PRO-266; SER-268; ASP-269; SER-269; ASP-272; PHE-273; VAL-274; LEU-277; PRO-277; GLU-280; CYS-281; PRO-282; GLY-283; ASP-292; CYS-293; GLU-302; VAL-302; PRO-303; ARG-305; SER-305; ARG-306; ILE-312; CYS-314; SER-314; CYS-315; VAL-316; SER-320; ALA-322; MET-322; ARG-325; TYR-339; GLU-341; GLY-341; VAL-341; PHE-342; LEU-343; ARG-350; SER-351; ARG-354; MET-360; ARG-362; HIS-365; GLN-366; TRP-366; HIS-374; GLY-379; LYS-385; PRO-389; THR-391 INS; TRP-397; ARG-398; GLU-446; LEU-448; TRP-451; SER-460; LEU-477; TRP-511; GLN-518; ARG-520; SER-522; GLY-524; THR-525; VAL-525; TRP-533; GLN-539; TRP-539; ILE-541; LYS-543; LEU-546; ARG-547; CYS-555; HIS-555; SER-555; GLU-557; PHE-566; PRO-566; TYR-566; THR-567; ARG-568; GLU-569; LEU-571; MET-587; ASP-589; CYS-591; HIS-591; GLN-594; PRO-594; GLU-596 DEL; LYS-596; MET-600; ASN-611; HIS-614 DEL; SER-626 AND ARG-635</scope>
</reference>
<reference key="70">
    <citation type="journal article" date="2010" name="J. Mol. Cell. Cardiol.">
        <title>Biophysical characterization of KCNQ1 P320 mutations linked to long QT syndrome 1.</title>
        <authorList>
            <person name="Thomas D."/>
            <person name="Khalil M."/>
            <person name="Alter M."/>
            <person name="Schweizer P.A."/>
            <person name="Karle C.A."/>
            <person name="Wimmer A.B."/>
            <person name="Licka M."/>
            <person name="Katus H.A."/>
            <person name="Koenen M."/>
            <person name="Ulmer H.E."/>
            <person name="Zehelein J."/>
        </authorList>
    </citation>
    <scope>VARIANT LQT1 HIS-320</scope>
    <scope>CHARACTERIZATION OF VARIANTS LQT1 ALA-320 AND HIS-320</scope>
</reference>
<reference key="71">
    <citation type="journal article" date="2011" name="Biochim. Biophys. Acta">
        <title>Biophysical properties of mutant KCNQ1 S277L channels linked to hereditary long QT syndrome with phenotypic variability.</title>
        <authorList>
            <person name="Aidery P."/>
            <person name="Kisselbach J."/>
            <person name="Schweizer P.A."/>
            <person name="Becker R."/>
            <person name="Katus H.A."/>
            <person name="Thomas D."/>
        </authorList>
    </citation>
    <scope>VARIANT LQT1 LEU-277</scope>
    <scope>CHARACTERIZATION OF VARIANT LQT1 LEU-277</scope>
</reference>
<reference key="72">
    <citation type="journal article" date="2014" name="Cardiovasc. Res.">
        <title>Long-QT mutation p.K557E-Kv7.1: dominant-negative suppression of IKs, but preserved cAMP-dependent up-regulation.</title>
        <authorList>
            <person name="Spaetjens R.L."/>
            <person name="Bebarova M."/>
            <person name="Seyen S.R."/>
            <person name="Lentink V."/>
            <person name="Jongbloed R.J."/>
            <person name="Arens Y.H."/>
            <person name="Heijman J."/>
            <person name="Volders P.G."/>
        </authorList>
    </citation>
    <scope>VARIANT LQT1 GLU-557</scope>
    <scope>CHARACTERIZATION OF VARIANT LQT1 GLU-557</scope>
</reference>
<reference key="73">
    <citation type="journal article" date="2014" name="Heart Rhythm">
        <title>A KCNQ1 mutation contributes to the concealed type 1 long QT phenotype by limiting the Kv7.1 channel conformational changes associated with protein kinase A phosphorylation.</title>
        <authorList>
            <person name="Bartos D.C."/>
            <person name="Giudicessi J.R."/>
            <person name="Tester D.J."/>
            <person name="Ackerman M.J."/>
            <person name="Ohno S."/>
            <person name="Horie M."/>
            <person name="Gollob M.H."/>
            <person name="Burgess D.E."/>
            <person name="Delisle B.P."/>
        </authorList>
    </citation>
    <scope>VARIANTS LQT1 ASN-235; CYS-315 AND ALA-322</scope>
    <scope>CHARACTERIZATION OF VARIANT LQT1 ASN-235</scope>
</reference>
<reference key="74">
    <citation type="journal article" date="2014" name="J. Am. Coll. Cardiol.">
        <title>A molecular mechanism for adrenergic-induced long QT syndrome.</title>
        <authorList>
            <person name="Wu J."/>
            <person name="Naiki N."/>
            <person name="Ding W.G."/>
            <person name="Ohno S."/>
            <person name="Kato K."/>
            <person name="Zang W.J."/>
            <person name="Delisle B.P."/>
            <person name="Matsuura H."/>
            <person name="Horie M."/>
        </authorList>
    </citation>
    <scope>VARIANT LQT1 SER-269</scope>
    <scope>CHARACTERIZATION OF VARIANT LQT1 SER-269</scope>
</reference>
<reference key="75">
    <citation type="journal article" date="2014" name="J. Cell Sci.">
        <title>Long QT mutations at the interface between KCNQ1 helix C and KCNE1 disrupt I(KS) regulation by PKA and PIP(2).</title>
        <authorList>
            <person name="Dvir M."/>
            <person name="Strulovich R."/>
            <person name="Sachyani D."/>
            <person name="Ben-Tal Cohen I."/>
            <person name="Haitin Y."/>
            <person name="Dessauer C."/>
            <person name="Pongs O."/>
            <person name="Kass R."/>
            <person name="Hirsch J.A."/>
            <person name="Attali B."/>
        </authorList>
    </citation>
    <scope>CHARACTERIZATION OF VARIANTS LQT1 LEU-546; CYS-555; HIS-555; GLU-557 AND ASP-589</scope>
    <scope>INTERACTION WITH KCNE1 AND AKAP9</scope>
    <scope>SUBCELLULAR LOCATION</scope>
    <scope>FUNCTION</scope>
</reference>
<reference key="76">
    <citation type="journal article" date="2014" name="J. Mol. Cell. Cardiol.">
        <title>A590T mutation in KCNQ1 C-terminal helix D decreases IKs channel trafficking and function but not Yotiao interaction.</title>
        <authorList>
            <person name="Kinoshita K."/>
            <person name="Komatsu T."/>
            <person name="Nishide K."/>
            <person name="Hata Y."/>
            <person name="Hisajima N."/>
            <person name="Takahashi H."/>
            <person name="Kimoto K."/>
            <person name="Aonuma K."/>
            <person name="Tsushima E."/>
            <person name="Tabata T."/>
            <person name="Yoshida T."/>
            <person name="Mori H."/>
            <person name="Nishida K."/>
            <person name="Yamaguchi Y."/>
            <person name="Ichida F."/>
            <person name="Fukurotani K."/>
            <person name="Inoue H."/>
            <person name="Nishida N."/>
        </authorList>
    </citation>
    <scope>VARIANT LQT1 THR-590</scope>
    <scope>CHARACTERIZATION OF VARIANT LQT1 THR-590</scope>
</reference>
<reference key="77">
    <citation type="journal article" date="2015" name="Front. Cell. Neurosci.">
        <title>Cellular mechanisms of mutations in Kv7.1: auditory functions in Jervell and Lange-Nielsen syndrome vs. Romano-Ward syndrome.</title>
        <authorList>
            <person name="Mousavi Nik A."/>
            <person name="Gharaie S."/>
            <person name="Jeong Kim H."/>
        </authorList>
    </citation>
    <scope>CHARACTERIZATION OF VARIANTS LQT1 ASN-242; PRO-243; HIS-250; VAL-306; ASN-317; ASP-586 AND MET-619</scope>
    <scope>CHARACTERIZATION OF VARIANTS JLNS1 PHE-248; ILE-311; MET-322 AND ASP-589</scope>
</reference>
<reference key="78">
    <citation type="journal article" date="2021" name="J. Am. Heart Assoc.">
        <title>Recurrent pregnancy loss and concealed Long-QT syndrome.</title>
        <authorList>
            <person name="Kasak L."/>
            <person name="Rull K."/>
            <person name="Yang T."/>
            <person name="Roden D.M."/>
            <person name="Laan M."/>
        </authorList>
    </citation>
    <scope>VARIANT LQT1 ASP-173</scope>
    <scope>CHARACTERIZATION OF VARIANT LQT1 ASP-173</scope>
</reference>
<name>KCNQ1_HUMAN</name>
<comment type="function">
    <text evidence="1 2 12 14 17 19 33 45 47 48 58 60 64">Pore-forming subunit of the voltage-gated potassium (Kv) channel involved in the regulation of cardiomyocyte excitability and important in normal development and functions of myocardium, inner ear, stomach and colon (PubMed:10646604, PubMed:25441029). Associates with KCNE beta subunits that modulates current kinetics (PubMed:10646604, PubMed:11101505, PubMed:19687231, PubMed:8900283, PubMed:9108097, PubMed:9312006). Induces a voltage-dependent current by rapidly activating and slowly deactivating potassium-selective outward current (PubMed:10646604, PubMed:11101505, PubMed:25441029, PubMed:8900283, PubMed:9108097, PubMed:9312006). Also promotes a delayed voltage activated potassium current showing outward rectification characteristic (By similarity). During beta-adrenergic receptor stimulation, participates in cardiac repolarization by associating with KCNE1 to form the I(Ks) cardiac potassium current that increases the amplitude and slows down the activation kinetics of outward potassium current I(Ks) (By similarity) (PubMed:10646604, PubMed:11101505, PubMed:8900283, PubMed:9108097, PubMed:9312006). Muscarinic agonist oxotremorine-M strongly suppresses KCNQ1/KCNE1 current (PubMed:10713961). When associated with KCNE3, forms the potassium channel that is important for cyclic AMP-stimulated intestinal secretion of chloride ions (PubMed:10646604). This interaction with KCNE3 is reduced by 17beta-estradiol, resulting in the reduction of currents (By similarity). During conditions of increased substrate load, maintains the driving force for proximal tubular and intestinal sodium ions absorption, gastric acid secretion, and cAMP-induced jejunal chloride ions secretion (By similarity). Allows the provision of potassium ions to the luminal membrane of the secretory canaliculus in the resting state as well as during stimulated acid secretion (By similarity). When associated with KCNE2, forms a heterooligomer complex leading to currents with an apparently instantaneous activation, a rapid deactivation process and a linear current-voltage relationship and decreases the amplitude of the outward current (PubMed:11101505). When associated with KCNE4, inhibits voltage-gated potassium channel activity (PubMed:19687231). When associated with KCNE5, this complex only conducts current upon strong and continued depolarization (PubMed:12324418). Also forms a heterotetramer with KCNQ5; has a voltage-gated potassium channel activity (PubMed:24855057). Binds with phosphatidylinositol 4,5-bisphosphate (PubMed:25037568). KCNQ1-KCNE2 channel associates with Na(+)-coupled myo-inositol symporter in the apical membrane of choroid plexus epithelium and regulates the myo-inositol gradient between blood and cerebrospinal fluid with an impact on neuron excitability (By similarity).</text>
</comment>
<comment type="function">
    <molecule>Isoform 2</molecule>
    <text evidence="63">Non-functional alone but modulatory when coexpressed with the full-length isoform 1.</text>
</comment>
<comment type="catalytic activity">
    <reaction evidence="12 17 60">
        <text>K(+)(in) = K(+)(out)</text>
        <dbReference type="Rhea" id="RHEA:29463"/>
        <dbReference type="ChEBI" id="CHEBI:29103"/>
    </reaction>
</comment>
<comment type="activity regulation">
    <text evidence="45 52 53">PIP2 molecule is essential to activate KCNQ channels by inducing the coupling of the voltage-sensing domain (VSD) and the pore-forming domain (PD) (PubMed:28096388, PubMed:31883792). Upon channel activation, PIP2 disrupts the VSD-calmodulin/CALM interactions, causing the release of CALM from the VSD which triggers the opening of the gate (PubMed:28096388, PubMed:31883792). Calcium potentiates KCNQ1 channel current through calcium-bound CALM (PubMed:24595108, PubMed:28096388). Calcium-bound CALM competes with PIP2 to stabilize the channel open state (PubMed:28096388).</text>
</comment>
<comment type="subunit">
    <text evidence="1 17 18 19 25 27 33 34 37 40 41 45 47 48 50 53">Tetramer (PubMed:18165683, PubMed:19693805, PubMed:25441029, PubMed:31883792). Heterotetramer with KCNE1; targets to the membrane raft (PubMed:19693805, PubMed:20533308, PubMed:25037568). Interacts (via C-terminus) with calmodulin; forms a heterooctameric structure (with 4:4 KCNQ1:CALM stoichiometry); the interaction is calcium-independent, constitutive, participates in the proper assembly of a functional channel and also acts a calcium sensor (PubMed:16556865, PubMed:18165683, PubMed:25441029, PubMed:31883792). KCNQ1 channels interact more strongly with Ca(2+)-CALM than with apoCALM (PubMed:16556865). Interacts with AKAP9; targets protein kinase A (PKA) catalytic and regulatory subunits and protein phosphatase 1 (PP1) to the KCNQ1-KCNE1 complex, allowing PKA-mediated phosphorylation and increase of delayed rectifier potassium channel activity (PubMed:11799244, PubMed:25037568). Interacts with KCNE2; forms a heterooligomer complex that targets to the membrane raft and leading to currents with an apparently instantaneous activation, a rapid deactivation process and a linear current-voltage relationship and decreases the amplitude of the outward current (PubMed:11101505, PubMed:20533308). Interacts with AP2M1; mediates estrogen-induced internalization via clathrin-coated vesicles (PubMed:23529131). Interacts with NEDD4L; promotes internalization and decreases I(Ks) currents (PubMed:22024150, PubMed:23529131). Interacts with USP2; counteracts the NEDD4L-specific down-regulation of I(Ks) and restore plasma membrane localization (PubMed:22024150). Heterotetramer with KCNQ5; has a voltage-gated potassium channel activity (PubMed:24855057). Interacts with KCNE3; four KCNE3 molecules are bound to one KCNQ1 tetramer (4:4 KCNQ1:KCNE3 stoichiometry); alters membrane raft localization; affects KCNQ1 structure and gating properties (PubMed:20533308, PubMed:31883792). Interacts with KCNE4; impairs KCNQ1 localization in lipid rafts and inhibits voltage-gated potassium channel activity (PubMed:19687231, PubMed:20533308). Interacts with KCNE5; impairs KCNQ1 localization in lipid rafts and only conducts current upon strong and continued depolarization (PubMed:12324418, PubMed:20533308). Interacts with SLC5A3; forms coregulatory channel-transporter complexes that modulate Na(+)-coupled myo-inositol influx through the transporter (By similarity).</text>
</comment>
<comment type="interaction">
    <interactant intactId="EBI-359667">
        <id>P51787</id>
    </interactant>
    <interactant intactId="EBI-7043557">
        <id>P15382</id>
        <label>KCNE1</label>
    </interactant>
    <organismsDiffer>false</organismsDiffer>
    <experiments>4</experiments>
</comment>
<comment type="interaction">
    <interactant intactId="EBI-15885881">
        <id>P51787-1</id>
    </interactant>
    <interactant intactId="EBI-397435">
        <id>P62158</id>
        <label>CALM3</label>
    </interactant>
    <organismsDiffer>false</organismsDiffer>
    <experiments>6</experiments>
</comment>
<comment type="subcellular location">
    <subcellularLocation>
        <location evidence="12 27 38 40 48">Cell membrane</location>
        <topology evidence="27">Multi-pass membrane protein</topology>
    </subcellularLocation>
    <subcellularLocation>
        <location evidence="27 41">Cytoplasmic vesicle membrane</location>
    </subcellularLocation>
    <subcellularLocation>
        <location evidence="41">Early endosome</location>
    </subcellularLocation>
    <subcellularLocation>
        <location evidence="37 47">Membrane raft</location>
    </subcellularLocation>
    <subcellularLocation>
        <location evidence="38 47">Endoplasmic reticulum</location>
    </subcellularLocation>
    <subcellularLocation>
        <location evidence="38">Basolateral cell membrane</location>
    </subcellularLocation>
    <subcellularLocation>
        <location evidence="1">Apical cell membrane</location>
        <topology evidence="3">Multi-pass membrane protein</topology>
    </subcellularLocation>
    <text evidence="1 12 38 41 47">Colocalized with KCNE3 at the plasma membrane (PubMed:10646604). Upon 17beta-oestradiol treatment, colocalizes with RAB5A at early endosome (PubMed:23529131). Heterotetramer with KCNQ5 is highly retained at the endoplasmic reticulum and is localized outside of lipid raft microdomains (PubMed:24855057). During the early stages of epithelial cell polarization induced by the calcium switch, it is removed from the plasma membrane to the endoplasmic reticulum, where it is retained, and redistributed to the basolateral cell surface in a PI3K-dependent manner at a later stage (PubMed:21228319). Colocalizes with SLC5A3 at the apical membrane of choroid plexus epithelium.</text>
</comment>
<comment type="alternative products">
    <event type="alternative splicing"/>
    <isoform>
        <id>P51787-1</id>
        <name>1</name>
        <sequence type="displayed"/>
    </isoform>
    <isoform>
        <id>P51787-2</id>
        <name>2</name>
        <name>TKvLQT1</name>
        <sequence type="described" ref="VSP_000981 VSP_000982"/>
    </isoform>
    <text>Additional isoforms seem to exist.</text>
</comment>
<comment type="tissue specificity">
    <text>Abundantly expressed in heart, pancreas, prostate, kidney, small intestine and peripheral blood leukocytes. Less abundant in placenta, lung, spleen, colon, thymus, testis and ovaries.</text>
</comment>
<comment type="domain">
    <text evidence="53">Each channel subunit contains six transmembrane segments (S1-S6) with S1-S4 forming one voltage sensing domain (VSD) and S5-S6 contributing to form one quarter of an interlocking pore-forming domain (PD).</text>
</comment>
<comment type="domain">
    <text evidence="33">The segment S6 is involved in the inhibition of voltage-gated potassium channel activity by KCNE4.</text>
</comment>
<comment type="domain">
    <text evidence="25 50">The CALM binding domains correspond to the first two membrane-proximal helical regions that interact with a single calmodulin/CALM molecule forming a clamp-like structure (PubMed:16556865, PubMed:25441029). Binding of CALM C-terminus to the first helix is calcium-independent and is essential for assembly of the structure. Binding of CALM N-terminus to the second helix is calcium-dependent and regulates electrophysiological activity of the channel (PubMed:16556865, PubMed:25441029).</text>
</comment>
<comment type="domain">
    <text evidence="52">Residues Lys-526 and Lys-527 in the second helical region of the proximal C-terminus form a critical site where calcium-bound CALM N-lobe competes with PIP2 for the binding to KCNQ1 in order to stabilize the channel open state.</text>
</comment>
<comment type="domain">
    <text evidence="13 27 34">The C-terminal assembly domain carries the major determinants of tetramerization and subunit assembly specificity. Its coiled-coil region is four-stranded.</text>
</comment>
<comment type="PTM">
    <text evidence="18 48">Phosphorylation at Ser-27 by PKA; increases delayed rectifier potassium channel activity of the KCNQ1-KCNE1 complex through a macromolecular complex that includes PKA, PP1, and the targeting protein AKAP9.</text>
</comment>
<comment type="PTM">
    <text evidence="40 41">Ubiquitinated by NEDD4L; promotes internalization (PubMed:22024150). The ubiquitinylated form is internalized through a clathrin-mediated endocytosis by interacting with AP2M1 and is recycled back to the cell membrane via RAB4A and RAB11A (PubMed:23529131).</text>
</comment>
<comment type="PTM">
    <text evidence="40">Deubiquitinated by USP2; counteracts the NEDD4L-specific down-regulation of I(Ks) and restores the membrane localization.</text>
</comment>
<comment type="disease" evidence="5 7 8 9 10 11 15 16 18 20 23 24 25 26 27 28 32 35 36 39 42 43 46 48 49 51 52 54 55 56 57 59 61 62 64 65 66 67 68 69 70 71 73 74 75">
    <disease id="DI-00679">
        <name>Long QT syndrome 1</name>
        <acronym>LQT1</acronym>
        <description>A heart disorder characterized by a prolonged QT interval on the ECG and polymorphic ventricular arrhythmias. They cause syncope and sudden death in response to exercise or emotional stress, and can present with a sentinel event of sudden cardiac death in infancy.</description>
        <dbReference type="MIM" id="192500"/>
    </disease>
    <text>The disease is caused by variants affecting the gene represented in this entry.</text>
</comment>
<comment type="disease" evidence="6 15 28 29 51 72">
    <disease id="DI-00604">
        <name>Jervell and Lange-Nielsen syndrome 1</name>
        <acronym>JLNS1</acronym>
        <description>An autosomal recessive disorder characterized by congenital deafness, prolongation of the QT interval, syncopal attacks due to ventricular arrhythmias, and a high risk of sudden death.</description>
        <dbReference type="MIM" id="220400"/>
    </disease>
    <text>The disease is caused by variants affecting the gene represented in this entry.</text>
</comment>
<comment type="disease" evidence="21">
    <disease id="DI-00146">
        <name>Atrial fibrillation, familial, 3</name>
        <acronym>ATFB3</acronym>
        <description>An autosomal dominant form of atrial fibrillation, a common sustained cardiac rhythm disturbance. Atrial fibrillation is characterized by disorganized atrial electrical activity and ineffective atrial contraction promoting blood stasis in the atria and reduces ventricular filling. It can result in palpitations, syncope, thromboembolic stroke, and congestive heart failure.</description>
        <dbReference type="MIM" id="607554"/>
    </disease>
    <text>The disease is caused by variants affecting the gene represented in this entry.</text>
</comment>
<comment type="disease" evidence="22">
    <disease id="DI-01025">
        <name>Short QT syndrome 2</name>
        <acronym>SQT2</acronym>
        <description>An autosomal dominant form of short QT syndrome, a heart disorder characterized by idiopathic persistently and uniformly short QT interval on ECG in the absence of structural heart disease in affected individuals. It can cause syncope and sudden death.</description>
        <dbReference type="MIM" id="609621"/>
    </disease>
    <text>The disease is caused by variants affecting the gene represented in this entry.</text>
</comment>
<comment type="disease" evidence="30 31 44">
    <disease id="DI-02060">
        <name>Type 2 diabetes mellitus</name>
        <acronym>T2D</acronym>
        <description>A multifactorial disorder of glucose homeostasis caused by a lack of sensitivity to insulin. Affected individuals usually have an obese body habitus and manifestations of a metabolic syndrome characterized by diabetes, insulin resistance, hypertension and hypertriglyceridemia. The disease results in long-term complications that affect the eyes, kidneys, nerves, and blood vessels.</description>
        <dbReference type="MIM" id="125853"/>
    </disease>
    <text>Disease susceptibility is associated with variants affecting the gene represented in this entry.</text>
</comment>
<comment type="miscellaneous">
    <text>Mutagenesis experiments were carried out by expressing in Xenopus oocytes or COS-7 cells KCNQ1 mutants either individually (homomultimers) or in combination with both wild-type KCNQ1 (mut/wt homomultimers) and minK (heteromultimers).</text>
</comment>
<comment type="similarity">
    <text evidence="80">Belongs to the potassium channel family. KQT (TC 1.A.1.15) subfamily. Kv7.1/KCNQ1 sub-subfamily.</text>
</comment>
<comment type="sequence caution" evidence="80">
    <conflict type="miscellaneous discrepancy">
        <sequence resource="EMBL-CDS" id="AAC51781"/>
    </conflict>
    <text>Contaminating sequence. Sequence of unknown origin in the N-terminal part.</text>
</comment>
<comment type="sequence caution" evidence="80">
    <conflict type="frameshift">
        <sequence resource="EMBL-CDS" id="BAA34739"/>
    </conflict>
</comment>
<comment type="online information" name="Wikipedia">
    <link uri="https://en.wikipedia.org/wiki/KvLQT1"/>
    <text>KvLQT1 entry</text>
</comment>
<protein>
    <recommendedName>
        <fullName evidence="80">Potassium voltage-gated channel subfamily KQT member 1</fullName>
    </recommendedName>
    <alternativeName>
        <fullName evidence="82">IKs producing slow voltage-gated potassium channel subunit alpha KvLQT1</fullName>
    </alternativeName>
    <alternativeName>
        <fullName evidence="80">KQT-like 1</fullName>
    </alternativeName>
    <alternativeName>
        <fullName evidence="81">Voltage-gated potassium channel subunit Kv7.1</fullName>
    </alternativeName>
</protein>
<accession>P51787</accession>
<accession>O00347</accession>
<accession>O60607</accession>
<accession>O94787</accession>
<accession>Q14D14</accession>
<accession>Q7Z6G9</accession>
<accession>Q92960</accession>
<accession>Q9UMN8</accession>
<accession>Q9UMN9</accession>